<feature type="chain" id="PRO_0000085605" description="RAC-alpha serine/threonine-protein kinase">
    <location>
        <begin position="1"/>
        <end position="480"/>
    </location>
</feature>
<feature type="domain" description="PH" evidence="4">
    <location>
        <begin position="5"/>
        <end position="108"/>
    </location>
</feature>
<feature type="domain" description="Protein kinase" evidence="5">
    <location>
        <begin position="150"/>
        <end position="408"/>
    </location>
</feature>
<feature type="domain" description="AGC-kinase C-terminal" evidence="6">
    <location>
        <begin position="409"/>
        <end position="480"/>
    </location>
</feature>
<feature type="region of interest" description="Disordered" evidence="8">
    <location>
        <begin position="113"/>
        <end position="138"/>
    </location>
</feature>
<feature type="region of interest" description="Disordered" evidence="8">
    <location>
        <begin position="450"/>
        <end position="480"/>
    </location>
</feature>
<feature type="active site" description="Proton acceptor" evidence="5 7">
    <location>
        <position position="274"/>
    </location>
</feature>
<feature type="binding site" evidence="22 24">
    <location>
        <begin position="14"/>
        <end position="19"/>
    </location>
    <ligand>
        <name>1D-myo-inositol 1,3,4,5-tetrakisphosphate</name>
        <dbReference type="ChEBI" id="CHEBI:57895"/>
    </ligand>
</feature>
<feature type="binding site" evidence="22 24">
    <location>
        <begin position="23"/>
        <end position="25"/>
    </location>
    <ligand>
        <name>1D-myo-inositol 1,3,4,5-tetrakisphosphate</name>
        <dbReference type="ChEBI" id="CHEBI:57895"/>
    </ligand>
</feature>
<feature type="binding site" evidence="22 24">
    <location>
        <position position="53"/>
    </location>
    <ligand>
        <name>1D-myo-inositol 1,3,4,5-tetrakisphosphate</name>
        <dbReference type="ChEBI" id="CHEBI:57895"/>
    </ligand>
</feature>
<feature type="binding site" evidence="22 24">
    <location>
        <position position="86"/>
    </location>
    <ligand>
        <name>1D-myo-inositol 1,3,4,5-tetrakisphosphate</name>
        <dbReference type="ChEBI" id="CHEBI:57895"/>
    </ligand>
</feature>
<feature type="binding site" evidence="5">
    <location>
        <begin position="156"/>
        <end position="164"/>
    </location>
    <ligand>
        <name>ATP</name>
        <dbReference type="ChEBI" id="CHEBI:30616"/>
    </ligand>
</feature>
<feature type="binding site" evidence="5">
    <location>
        <position position="179"/>
    </location>
    <ligand>
        <name>ATP</name>
        <dbReference type="ChEBI" id="CHEBI:30616"/>
    </ligand>
</feature>
<feature type="site" description="Cleavage; by caspase-3" evidence="1">
    <location>
        <position position="462"/>
    </location>
</feature>
<feature type="modified residue" description="N6-acetyllysine" evidence="63">
    <location>
        <position position="14"/>
    </location>
</feature>
<feature type="modified residue" description="N6-acetyllysine" evidence="63">
    <location>
        <position position="20"/>
    </location>
</feature>
<feature type="modified residue" description="Phosphoserine" evidence="109">
    <location>
        <position position="124"/>
    </location>
</feature>
<feature type="modified residue" description="Phosphoserine; alternate" evidence="109">
    <location>
        <position position="126"/>
    </location>
</feature>
<feature type="modified residue" description="Phosphoserine; alternate" evidence="108 109 110">
    <location>
        <position position="129"/>
    </location>
</feature>
<feature type="modified residue" description="Phosphotyrosine; by TNK2" evidence="52">
    <location>
        <position position="176"/>
    </location>
</feature>
<feature type="modified residue" description="Phosphothreonine; by IKKE, PDPK1 and TBK1" evidence="30 43 52 54 62 85 86">
    <location>
        <position position="308"/>
    </location>
</feature>
<feature type="modified residue" description="Phosphothreonine" evidence="111">
    <location>
        <position position="448"/>
    </location>
</feature>
<feature type="modified residue" description="Phosphothreonine" evidence="111">
    <location>
        <position position="450"/>
    </location>
</feature>
<feature type="modified residue" description="Phosphoserine; by IKKE, MTOR, PRKDC and TBK1; alternate" evidence="26 27 29 30 33 38 52 58 62 73 85 87">
    <location>
        <position position="473"/>
    </location>
</feature>
<feature type="modified residue" description="Phosphotyrosine" evidence="19">
    <location>
        <position position="474"/>
    </location>
</feature>
<feature type="modified residue" description="Phosphoserine; by CDK2 and MTOR" evidence="74">
    <location>
        <position position="477"/>
    </location>
</feature>
<feature type="modified residue" description="Phosphothreonine; by CDK2 and MTOR" evidence="74">
    <location>
        <position position="479"/>
    </location>
</feature>
<feature type="glycosylation site" description="O-linked (GlcNAc) serine; alternate" evidence="66">
    <location>
        <position position="126"/>
    </location>
</feature>
<feature type="glycosylation site" description="O-linked (GlcNAc) serine; alternate" evidence="66">
    <location>
        <position position="129"/>
    </location>
</feature>
<feature type="glycosylation site" description="O-linked (GlcNAc) threonine" evidence="66">
    <location>
        <position position="305"/>
    </location>
</feature>
<feature type="glycosylation site" description="O-linked (GlcNAc) threonine" evidence="66">
    <location>
        <position position="312"/>
    </location>
</feature>
<feature type="glycosylation site" description="O-linked (GlcNAc) serine; alternate" evidence="1">
    <location>
        <position position="473"/>
    </location>
</feature>
<feature type="disulfide bond" evidence="57">
    <location>
        <begin position="60"/>
        <end position="77"/>
    </location>
</feature>
<feature type="disulfide bond" evidence="2">
    <location>
        <begin position="296"/>
        <end position="310"/>
    </location>
</feature>
<feature type="cross-link" description="Glycyl lysine isopeptide (Lys-Gly) (interchain with G-Cter in ubiquitin)" evidence="65">
    <location>
        <position position="284"/>
    </location>
</feature>
<feature type="splice variant" id="VSP_056180" description="In isoform 2." evidence="90">
    <location>
        <begin position="1"/>
        <end position="62"/>
    </location>
</feature>
<feature type="sequence variant" id="VAR_055422" description="In PROTEUSS and breast cancer; also detected in colorectal and ovarian cancer; somatic mutation; results in increased phosphorylation at T-308 and higher basal ubiquitination; the mutant protein is more efficiently recruited to the plasma membrane; alters phosphatidylinositiol phosphates lipid specificity of the AKT1 PH domain; dbSNP:rs121434592." evidence="40 46 48 64">
    <original>E</original>
    <variation>K</variation>
    <location>
        <position position="17"/>
    </location>
</feature>
<feature type="sequence variant" id="VAR_069791" description="In CWS6; impairs interaction with PtdIns(3,4,5)P3 and PtdIns(3,4)P2; dbSNP:rs397514644." evidence="22 68">
    <original>R</original>
    <variation>C</variation>
    <location>
        <position position="25"/>
    </location>
</feature>
<feature type="sequence variant" id="VAR_051617" description="In dbSNP:rs11555433.">
    <original>V</original>
    <variation>A</variation>
    <location>
        <position position="167"/>
    </location>
</feature>
<feature type="sequence variant" id="VAR_069792" description="In CWS6; dbSNP:rs397514645." evidence="68">
    <original>T</original>
    <variation>P</variation>
    <location>
        <position position="435"/>
    </location>
</feature>
<feature type="mutagenesis site" description="Substantial reduction of ubiquitination, phosphorylation at T-308 and S-473, AKT activation as well as IGF1-induced membrane recruitment. Decrease in ubiquitination and phosphorylation at T-308 as well as impaired association with the membrane; when associated with K-17." evidence="48">
    <original>K</original>
    <variation>R</variation>
    <location>
        <position position="8"/>
    </location>
</feature>
<feature type="mutagenesis site" description="Impairs interaction with PtdIns(3,4,5)P3 and PtdIns(3,4)P2." evidence="22 48 63">
    <original>K</original>
    <variation>A</variation>
    <location>
        <position position="14"/>
    </location>
</feature>
<feature type="mutagenesis site" description="Substantial reduction of phosphorylation at T-308 and S-473, loss of AKT activation, and loss of binding to PIP3 as well as IGF1-induced membrane recruitment." evidence="22 48 63">
    <original>K</original>
    <variation>Q</variation>
    <location>
        <position position="14"/>
    </location>
</feature>
<feature type="mutagenesis site" description="Substantial reduction of ubiquitination, phosphorylation at T-308 and S-473, AKT activation, loss of binding to PIP3 as well as IGF1-induced membrane recruitment." evidence="22 48 63">
    <original>K</original>
    <variation>R</variation>
    <location>
        <position position="14"/>
    </location>
</feature>
<feature type="mutagenesis site" description="Loss of membrane localization; when associated with Q-20." evidence="63">
    <original>E</original>
    <variation>K</variation>
    <location>
        <position position="17"/>
    </location>
</feature>
<feature type="mutagenesis site" description="Substantial reduction of phosphorylation at T-308 and S-473, reduced AKT activation, and reduced binding to PIP3 as well as IGF1-induced membrane recruitment. Loss of membrane localization; when associated with K-17." evidence="63">
    <original>K</original>
    <variation>Q</variation>
    <location>
        <position position="20"/>
    </location>
</feature>
<feature type="mutagenesis site" description="Slight increase of phosphorylation at T-308 and S-473." evidence="63">
    <original>K</original>
    <variation>R</variation>
    <location>
        <position position="20"/>
    </location>
</feature>
<feature type="mutagenesis site" description="Impairs interaction with PtdIns(3,4,5)P3 and PtdIns(3,4)P2." evidence="22">
    <original>R</original>
    <variation>A</variation>
    <location>
        <position position="25"/>
    </location>
</feature>
<feature type="mutagenesis site" description="Abolished binding to cyclin-A, preventing phosphorylation by CDK2." evidence="74">
    <original>RCL</original>
    <variation>ACA</variation>
    <location>
        <begin position="76"/>
        <end position="78"/>
    </location>
</feature>
<feature type="mutagenesis site" description="Impairs interaction with PtdIns(3,4,5)P3 and PtdIns(3,4)P2." evidence="22">
    <original>R</original>
    <variation>A</variation>
    <location>
        <position position="86"/>
    </location>
</feature>
<feature type="mutagenesis site" description="Significant loss of interaction with TNK2. Loss of membrane localization. Significant reduction in phosphorylation on Ser-473." evidence="52">
    <original>Y</original>
    <variation>F</variation>
    <location>
        <position position="176"/>
    </location>
</feature>
<feature type="mutagenesis site" description="Abolished serine/threonine-protein kinase activity." evidence="21 84">
    <original>K</original>
    <variation>M</variation>
    <location>
        <position position="179"/>
    </location>
</feature>
<feature type="mutagenesis site" description="Abolished binding to cyclin-A, preventing phosphorylation by CDK2." evidence="74">
    <original>RDL</original>
    <variation>ADA</variation>
    <location>
        <begin position="273"/>
        <end position="275"/>
    </location>
</feature>
<feature type="mutagenesis site" description="Reduces O-GlcNAc levels; Reduces O-GlcNAc levels even more; when associated with A-312." evidence="66">
    <original>T</original>
    <variation>A</variation>
    <location>
        <position position="305"/>
    </location>
</feature>
<feature type="mutagenesis site" description="Abolishes phosphorylation at Thr-308." evidence="66">
    <original>T</original>
    <variation>Y</variation>
    <location>
        <position position="305"/>
    </location>
</feature>
<feature type="mutagenesis site" description="5-fold activation and 18-fold activation; when associated with D-473." evidence="23 85">
    <original>T</original>
    <variation>D</variation>
    <location>
        <position position="308"/>
    </location>
</feature>
<feature type="mutagenesis site" description="Reduces O-GlcNAc levels; Reduces O-GlcNAc levels even more; when associated with A-305." evidence="66">
    <original>T</original>
    <variation>A</variation>
    <location>
        <position position="312"/>
    </location>
</feature>
<feature type="mutagenesis site" description="Abolishes phosphorylation at Thr-308." evidence="66">
    <original>T</original>
    <variation>Y</variation>
    <location>
        <position position="312"/>
    </location>
</feature>
<feature type="mutagenesis site" description="7-fold activation and 25-fold activation; when associated with D-308." evidence="23 85">
    <original>S</original>
    <variation>D</variation>
    <location>
        <position position="473"/>
    </location>
</feature>
<feature type="mutagenesis site" description="55% inhibition of activation." evidence="19">
    <original>Y</original>
    <variation>F</variation>
    <location>
        <position position="474"/>
    </location>
</feature>
<feature type="sequence conflict" description="In Ref. 7; CAA43372." evidence="94" ref="7">
    <original>GR</original>
    <variation>A</variation>
    <location>
        <begin position="173"/>
        <end position="174"/>
    </location>
</feature>
<feature type="sequence conflict" description="In Ref. 7; CAA43372." evidence="94" ref="7">
    <original>L</original>
    <variation>Q</variation>
    <location>
        <position position="202"/>
    </location>
</feature>
<feature type="sequence conflict" description="In Ref. 7; CAA43372." evidence="94" ref="7">
    <original>A</original>
    <variation>R</variation>
    <location>
        <position position="212"/>
    </location>
</feature>
<feature type="sequence conflict" description="In Ref. 7; CAA43372." evidence="94" ref="7">
    <original>S</original>
    <variation>A</variation>
    <location>
        <position position="246"/>
    </location>
</feature>
<feature type="sequence conflict" description="In Ref. 7; CAA43372." evidence="94" ref="7">
    <original>A</original>
    <variation>T</variation>
    <location>
        <position position="409"/>
    </location>
</feature>
<feature type="sequence conflict" description="In Ref. 7; CAA43372." evidence="94" ref="7">
    <original>A</original>
    <variation>P</variation>
    <location>
        <position position="476"/>
    </location>
</feature>
<feature type="sequence conflict" description="In Ref. 7; CAA43372." evidence="94" ref="7">
    <original>G</original>
    <variation>A</variation>
    <location>
        <position position="478"/>
    </location>
</feature>
<feature type="sequence conflict" description="In Ref. 1; AAA36539, 2; AAL55732, 3; BAG36922 and 4; BAG70056/BAG70181." evidence="94" ref="1 2 3 4">
    <original>G</original>
    <variation>S</variation>
    <location>
        <position position="478"/>
    </location>
</feature>
<feature type="helix" evidence="112">
    <location>
        <begin position="2"/>
        <end position="4"/>
    </location>
</feature>
<feature type="strand" evidence="112">
    <location>
        <begin position="6"/>
        <end position="15"/>
    </location>
</feature>
<feature type="strand" evidence="112">
    <location>
        <begin position="17"/>
        <end position="19"/>
    </location>
</feature>
<feature type="strand" evidence="112">
    <location>
        <begin position="22"/>
        <end position="30"/>
    </location>
</feature>
<feature type="strand" evidence="112">
    <location>
        <begin position="33"/>
        <end position="40"/>
    </location>
</feature>
<feature type="helix" evidence="116">
    <location>
        <begin position="42"/>
        <end position="44"/>
    </location>
</feature>
<feature type="helix" evidence="112">
    <location>
        <begin position="45"/>
        <end position="48"/>
    </location>
</feature>
<feature type="strand" evidence="112">
    <location>
        <begin position="52"/>
        <end position="56"/>
    </location>
</feature>
<feature type="strand" evidence="112">
    <location>
        <begin position="61"/>
        <end position="65"/>
    </location>
</feature>
<feature type="strand" evidence="112">
    <location>
        <begin position="67"/>
        <end position="69"/>
    </location>
</feature>
<feature type="strand" evidence="112">
    <location>
        <begin position="72"/>
        <end position="79"/>
    </location>
</feature>
<feature type="strand" evidence="112">
    <location>
        <begin position="82"/>
        <end position="89"/>
    </location>
</feature>
<feature type="helix" evidence="112">
    <location>
        <begin position="93"/>
        <end position="115"/>
    </location>
</feature>
<feature type="helix" evidence="115">
    <location>
        <begin position="147"/>
        <end position="149"/>
    </location>
</feature>
<feature type="strand" evidence="115">
    <location>
        <begin position="150"/>
        <end position="158"/>
    </location>
</feature>
<feature type="strand" evidence="115">
    <location>
        <begin position="160"/>
        <end position="169"/>
    </location>
</feature>
<feature type="turn" evidence="115">
    <location>
        <begin position="170"/>
        <end position="172"/>
    </location>
</feature>
<feature type="strand" evidence="115">
    <location>
        <begin position="175"/>
        <end position="182"/>
    </location>
</feature>
<feature type="helix" evidence="115">
    <location>
        <begin position="183"/>
        <end position="188"/>
    </location>
</feature>
<feature type="helix" evidence="115">
    <location>
        <begin position="192"/>
        <end position="204"/>
    </location>
</feature>
<feature type="strand" evidence="115">
    <location>
        <begin position="213"/>
        <end position="218"/>
    </location>
</feature>
<feature type="strand" evidence="115">
    <location>
        <begin position="220"/>
        <end position="227"/>
    </location>
</feature>
<feature type="helix" evidence="115">
    <location>
        <begin position="235"/>
        <end position="242"/>
    </location>
</feature>
<feature type="helix" evidence="115">
    <location>
        <begin position="247"/>
        <end position="268"/>
    </location>
</feature>
<feature type="helix" evidence="115">
    <location>
        <begin position="277"/>
        <end position="279"/>
    </location>
</feature>
<feature type="strand" evidence="115">
    <location>
        <begin position="280"/>
        <end position="282"/>
    </location>
</feature>
<feature type="strand" evidence="114">
    <location>
        <begin position="284"/>
        <end position="286"/>
    </location>
</feature>
<feature type="strand" evidence="115">
    <location>
        <begin position="288"/>
        <end position="290"/>
    </location>
</feature>
<feature type="strand" evidence="113">
    <location>
        <begin position="309"/>
        <end position="311"/>
    </location>
</feature>
<feature type="helix" evidence="115">
    <location>
        <begin position="313"/>
        <end position="315"/>
    </location>
</feature>
<feature type="helix" evidence="115">
    <location>
        <begin position="318"/>
        <end position="322"/>
    </location>
</feature>
<feature type="helix" evidence="115">
    <location>
        <begin position="330"/>
        <end position="344"/>
    </location>
</feature>
<feature type="helix" evidence="115">
    <location>
        <begin position="354"/>
        <end position="363"/>
    </location>
</feature>
<feature type="helix" evidence="115">
    <location>
        <begin position="374"/>
        <end position="383"/>
    </location>
</feature>
<feature type="helix" evidence="115">
    <location>
        <begin position="388"/>
        <end position="390"/>
    </location>
</feature>
<feature type="turn" evidence="115">
    <location>
        <begin position="396"/>
        <end position="398"/>
    </location>
</feature>
<feature type="helix" evidence="115">
    <location>
        <begin position="399"/>
        <end position="403"/>
    </location>
</feature>
<feature type="helix" evidence="115">
    <location>
        <begin position="406"/>
        <end position="408"/>
    </location>
</feature>
<feature type="helix" evidence="115">
    <location>
        <begin position="413"/>
        <end position="417"/>
    </location>
</feature>
<feature type="strand" evidence="113">
    <location>
        <begin position="430"/>
        <end position="433"/>
    </location>
</feature>
<feature type="turn" evidence="117">
    <location>
        <begin position="436"/>
        <end position="438"/>
    </location>
</feature>
<feature type="helix" evidence="115">
    <location>
        <begin position="440"/>
        <end position="443"/>
    </location>
</feature>
<feature type="strand" evidence="115">
    <location>
        <begin position="464"/>
        <end position="466"/>
    </location>
</feature>
<feature type="strand" evidence="115">
    <location>
        <begin position="473"/>
        <end position="475"/>
    </location>
</feature>
<proteinExistence type="evidence at protein level"/>
<protein>
    <recommendedName>
        <fullName>RAC-alpha serine/threonine-protein kinase</fullName>
        <ecNumber evidence="21 31 78 83 84">2.7.11.1</ecNumber>
    </recommendedName>
    <alternativeName>
        <fullName>Protein kinase B</fullName>
        <shortName>PKB</shortName>
    </alternativeName>
    <alternativeName>
        <fullName>Protein kinase B alpha</fullName>
        <shortName>PKB alpha</shortName>
    </alternativeName>
    <alternativeName>
        <fullName>Proto-oncogene c-Akt</fullName>
    </alternativeName>
    <alternativeName>
        <fullName>RAC-PK-alpha</fullName>
    </alternativeName>
</protein>
<accession>P31749</accession>
<accession>B2RAM5</accession>
<accession>B7Z5R1</accession>
<accession>Q9BWB6</accession>
<comment type="function">
    <text evidence="1 3 9 10 12 14 17 20 21 22 24 31 32 37 41 44 47 49 51 53 55 71 79 80 81 82 83 84 88 89 91 92 93">AKT1 is one of 3 closely related serine/threonine-protein kinases (AKT1, AKT2 and AKT3) called the AKT kinase, and which regulate many processes including metabolism, proliferation, cell survival, growth and angiogenesis (PubMed:11882383, PubMed:15526160, PubMed:15861136, PubMed:21432781, PubMed:21620960, PubMed:31204173). This is mediated through serine and/or threonine phosphorylation of a range of downstream substrates (PubMed:11882383, PubMed:15526160, PubMed:21432781, PubMed:21620960, PubMed:29343641, PubMed:31204173). Over 100 substrate candidates have been reported so far, but for most of them, no isoform specificity has been reported (PubMed:11882383, PubMed:15526160, PubMed:21432781, PubMed:21620960). AKT is responsible of the regulation of glucose uptake by mediating insulin-induced translocation of the SLC2A4/GLUT4 glucose transporter to the cell surface (By similarity). Phosphorylation of PTPN1 at 'Ser-50' negatively modulates its phosphatase activity preventing dephosphorylation of the insulin receptor and the attenuation of insulin signaling (By similarity). Phosphorylation of TBC1D4 triggers the binding of this effector to inhibitory 14-3-3 proteins, which is required for insulin-stimulated glucose transport (PubMed:11994271). AKT also regulates the storage of glucose in the form of glycogen by phosphorylating GSK3A at 'Ser-21' and GSK3B at 'Ser-9', resulting in inhibition of its kinase activity (By similarity). Phosphorylation of GSK3 isoforms by AKT is also thought to be one mechanism by which cell proliferation is driven (By similarity). AKT also regulates cell survival via the phosphorylation of MAP3K5 (apoptosis signal-related kinase) (PubMed:11154276). Phosphorylation of 'Ser-83' decreases MAP3K5 kinase activity stimulated by oxidative stress and thereby prevents apoptosis (PubMed:11154276). AKT mediates insulin-stimulated protein synthesis by phosphorylating TSC2 at 'Ser-939' and 'Thr-1462', thereby activating the mTORC1 signaling pathway, and leading to both phosphorylation of 4E-BP1 and in activation of RPS6KB1 (PubMed:12150915, PubMed:12172553). Also regulates the mTORC1 signaling pathway by catalyzing phosphorylation of CASTOR1 and DEPDC5 (PubMed:31548394, PubMed:33594058). AKT plays a role as key modulator of the AKT-mTOR signaling pathway controlling the tempo of the process of newborn neurons integration during adult neurogenesis, including correct neuron positioning, dendritic development and synapse formation (By similarity). Part of a positive feedback loop of mTORC2 signaling by mediating phosphorylation of MAPKAP1/SIN1, promoting mTORC2 activation (By similarity). AKT is involved in the phosphorylation of members of the FOXO factors (Forkhead family of transcription factors), leading to binding of 14-3-3 proteins and cytoplasmic localization (PubMed:10358075). In particular, FOXO1 is phosphorylated at 'Thr-24', 'Ser-256' and 'Ser-319' (PubMed:10358075). FOXO3 and FOXO4 are phosphorylated on equivalent sites (PubMed:10358075). AKT has an important role in the regulation of NF-kappa-B-dependent gene transcription and positively regulates the activity of CREB1 (cyclic AMP (cAMP)-response element binding protein) (PubMed:9829964). The phosphorylation of CREB1 induces the binding of accessory proteins that are necessary for the transcription of pro-survival genes such as BCL2 and MCL1 (PubMed:9829964). AKT phosphorylates 'Ser-454' on ATP citrate lyase (ACLY), thereby potentially regulating ACLY activity and fatty acid synthesis (By similarity). Activates the 3B isoform of cyclic nucleotide phosphodiesterase (PDE3B) via phosphorylation of 'Ser-273', resulting in reduced cyclic AMP levels and inhibition of lipolysis (By similarity). Phosphorylates PIKFYVE on 'Ser-318', which results in increased PI(3)P-5 activity (By similarity). The Rho GTPase-activating protein DLC1 is another substrate and its phosphorylation is implicated in the regulation cell proliferation and cell growth (By similarity). Signals downstream of phosphatidylinositol 3-kinase (PI(3)K) to mediate the effects of various growth factors such as platelet-derived growth factor (PDGF), epidermal growth factor (EGF), insulin and insulin-like growth factor 1 (IGF1) (PubMed:12176338, PubMed:12964941). AKT mediates the antiapoptotic effects of IGF1 (By similarity). Essential for the SPATA13-mediated regulation of cell migration and adhesion assembly and disassembly (PubMed:19934221). May be involved in the regulation of the placental development (By similarity). Phosphorylates STK4/MST1 at 'Thr-120' and 'Thr-387' leading to inhibition of its: kinase activity, nuclear translocation, autophosphorylation and ability to phosphorylate FOXO3 (PubMed:17726016). Phosphorylates STK3/MST2 at 'Thr-117' and 'Thr-384' leading to inhibition of its: cleavage, kinase activity, autophosphorylation at Thr-180, binding to RASSF1 and nuclear translocation (PubMed:20086174). Phosphorylates SRPK2 and enhances its kinase activity towards SRSF2 and ACIN1 and promotes its nuclear translocation (PubMed:19592491). Phosphorylates RAF1 at 'Ser-259' and negatively regulates its activity (PubMed:10576742). Phosphorylation of BAD stimulates its pro-apoptotic activity (PubMed:10926925). Phosphorylates KAT6A at 'Thr-369' and this phosphorylation inhibits the interaction of KAT6A with PML and negatively regulates its acetylation activity towards p53/TP53 (PubMed:23431171). Phosphorylates palladin (PALLD), modulating cytoskeletal organization and cell motility (PubMed:20471940). Phosphorylates prohibitin (PHB), playing an important role in cell metabolism and proliferation (PubMed:18507042). Phosphorylates CDKN1A, for which phosphorylation at 'Thr-145' induces its release from CDK2 and cytoplasmic relocalization (PubMed:16982699). These recent findings indicate that the AKT1 isoform has a more specific role in cell motility and proliferation (PubMed:16139227). Phosphorylates CLK2 thereby controlling cell survival to ionizing radiation (PubMed:20682768). Phosphorylates PCK1 at 'Ser-90', reducing the binding affinity of PCK1 to oxaloacetate and changing PCK1 into an atypical protein kinase activity using GTP as donor (PubMed:32322062). Also acts as an activator of TMEM175 potassium channel activity in response to growth factors: forms the lysoK(GF) complex together with TMEM175 and acts by promoting TMEM175 channel activation, independently of its protein kinase activity (PubMed:32228865). Acts as a regulator of mitochondrial calcium uptake by mediating phosphorylation of MICU1 in the mitochondrial intermembrane space, impairing MICU1 maturation (PubMed:30504268). Acts as an inhibitor of tRNA methylation by mediating phosphorylation of the N-terminus of METTL1, thereby inhibiting METTL1 methyltransferase activity (PubMed:15861136). In response to LPAR1 receptor pathway activation, phosphorylates Rabin8/RAB3IP which alters its activity and phosphorylates WDR44 which induces WDR44 binding to Rab11, thereby switching Rab11 vesicular function from preciliary trafficking to endocytic recycling (PubMed:31204173).</text>
</comment>
<comment type="catalytic activity">
    <reaction evidence="21 31 32 39 45 76 78 81 83 84">
        <text>L-seryl-[protein] + ATP = O-phospho-L-seryl-[protein] + ADP + H(+)</text>
        <dbReference type="Rhea" id="RHEA:17989"/>
        <dbReference type="Rhea" id="RHEA-COMP:9863"/>
        <dbReference type="Rhea" id="RHEA-COMP:11604"/>
        <dbReference type="ChEBI" id="CHEBI:15378"/>
        <dbReference type="ChEBI" id="CHEBI:29999"/>
        <dbReference type="ChEBI" id="CHEBI:30616"/>
        <dbReference type="ChEBI" id="CHEBI:83421"/>
        <dbReference type="ChEBI" id="CHEBI:456216"/>
        <dbReference type="EC" id="2.7.11.1"/>
    </reaction>
</comment>
<comment type="catalytic activity">
    <reaction evidence="21 32 39 45">
        <text>L-threonyl-[protein] + ATP = O-phospho-L-threonyl-[protein] + ADP + H(+)</text>
        <dbReference type="Rhea" id="RHEA:46608"/>
        <dbReference type="Rhea" id="RHEA-COMP:11060"/>
        <dbReference type="Rhea" id="RHEA-COMP:11605"/>
        <dbReference type="ChEBI" id="CHEBI:15378"/>
        <dbReference type="ChEBI" id="CHEBI:30013"/>
        <dbReference type="ChEBI" id="CHEBI:30616"/>
        <dbReference type="ChEBI" id="CHEBI:61977"/>
        <dbReference type="ChEBI" id="CHEBI:456216"/>
        <dbReference type="EC" id="2.7.11.1"/>
    </reaction>
</comment>
<comment type="activity regulation">
    <text evidence="29 43 54 56 61 86 87 97">Three specific sites, one in the kinase domain (Thr-308) and the two other ones in the C-terminal regulatory region (Ser-473 and Tyr-474), need to be phosphorylated for its full activation (PubMed:15262962, PubMed:20481595, PubMed:21392984, PubMed:9512493, PubMed:9736715). Inhibited by pyrrolopyrimidine inhibitors like aniline triazole and spiroindoline (PubMed:18456494, PubMed:20810279).</text>
</comment>
<comment type="biophysicochemical properties">
    <kinetics>
        <KM evidence="35">52.8 uM for ATP (for purified and in vitro activated AKT1)</KM>
        <KM evidence="35">0.5 uM for peptide substrate (for purified and in vitro activated AKT1)</KM>
        <KM evidence="35">143.3 uM for ATP (for recombinant myristoylated AKT1 expressed and immunoprecipitated from Rat-1 cells)</KM>
        <KM evidence="35">2.9 uM for peptide substrate (for recombinant myristoylated AKT1 expressed and immunoprecipitated from Rat-1 cells)</KM>
    </kinetics>
</comment>
<comment type="subunit">
    <text evidence="1 3 10 11 12 13 14 15 16 18 22 23 24 25 26 28 32 34 36 41 42 47 48 51 52 55 59 60 63 66 69 70 72 75 76 77 82">Interacts with BTBD10 (By similarity). Interacts with KCTD20 (By similarity). Interacts (via the C-terminus) with CCDC88A (via its C-terminus). Interacts with GRB10; the interaction leads to GRB10 phosphorylation thus promoting YWHAE-binding (By similarity). Interacts with AGAP2 (isoform 2/PIKE-A); the interaction occurs in the presence of guanine nucleotides. Interacts with AKTIP. Interacts (via PH domain) with MTCP1, TCL1A and TCL1B. Interacts with CDKN1B; the interaction phosphorylates CDKN1B promoting 14-3-3 binding and cell-cycle progression. Interacts with MAP3K5 and TRAF6. Interacts with BAD, PPP2R5B, STK3 and STK4. Interacts (via PH domain) with SIRT1. Interacts with SRPK2 in a phosphorylation-dependent manner. Interacts with RAF1. Interacts with TRIM13; the interaction ubiquitinates AKT1 leading to its proteasomal degradation. Interacts with TNK2 and CLK2. Interacts (via the C-terminus) with THEM4 (via its C-terminus). Interacts with and phosphorylated by PDPK1. Interacts with PA2G4 (By similarity). Interacts with KIF14; the interaction is detected in the plasma membrane upon INS stimulation and promotes AKT1 phosphorylation (PubMed:24784001). Interacts with FAM83B; activates the PI3K/AKT signaling cascade (PubMed:23676467). Interacts with WDFY2 (via WD repeats 1-3) (PubMed:16792529). Forms a complex with WDFY2 and FOXO1 (By similarity). Interacts with FAM168A (PubMed:23251525). Interacts with SYAP1 (via phosphorylated form and BSD domain); this interaction is enhanced in a mTORC2-mediated manner in response to epidermal growth factor (EGF) stimulation and activates AKT1 (PubMed:23300339). Interacts with PKHM3 (By similarity). Interacts with FKBP5/FKBP51; promoting interaction between Akt/AKT1 and PHLPP1, thereby enhancing dephosphorylation and subsequent activation of Akt/AKT1 (PubMed:28147277). Interacts with TMEM175; leading to formation of the lysoK(GF) complex (PubMed:32228865). Acts as a negative regulator of the cGAS-STING pathway by mediating phosphorylation of CGAS during mitosis, leading to its inhibition (PubMed:26440888).</text>
</comment>
<comment type="interaction">
    <interactant intactId="EBI-296087">
        <id>P31749</id>
    </interactant>
    <interactant intactId="EBI-10173507">
        <id>Q6UY14-3</id>
        <label>ADAMTSL4</label>
    </interactant>
    <organismsDiffer>false</organismsDiffer>
    <experiments>3</experiments>
</comment>
<comment type="interaction">
    <interactant intactId="EBI-296087">
        <id>P31749</id>
    </interactant>
    <interactant intactId="EBI-296087">
        <id>P31749</id>
        <label>AKT1</label>
    </interactant>
    <organismsDiffer>false</organismsDiffer>
    <experiments>3</experiments>
</comment>
<comment type="interaction">
    <interactant intactId="EBI-296087">
        <id>P31749</id>
    </interactant>
    <interactant intactId="EBI-296058">
        <id>P31751</id>
        <label>AKT2</label>
    </interactant>
    <organismsDiffer>false</organismsDiffer>
    <experiments>3</experiments>
</comment>
<comment type="interaction">
    <interactant intactId="EBI-296087">
        <id>P31749</id>
    </interactant>
    <interactant intactId="EBI-347640">
        <id>Q86V81</id>
        <label>ALYREF</label>
    </interactant>
    <organismsDiffer>false</organismsDiffer>
    <experiments>5</experiments>
</comment>
<comment type="interaction">
    <interactant intactId="EBI-296087">
        <id>P31749</id>
    </interactant>
    <interactant intactId="EBI-1646500">
        <id>Q8IXJ9</id>
        <label>ASXL1</label>
    </interactant>
    <organismsDiffer>false</organismsDiffer>
    <experiments>2</experiments>
</comment>
<comment type="interaction">
    <interactant intactId="EBI-296087">
        <id>P31749</id>
    </interactant>
    <interactant intactId="EBI-930964">
        <id>P54253</id>
        <label>ATXN1</label>
    </interactant>
    <organismsDiffer>false</organismsDiffer>
    <experiments>6</experiments>
</comment>
<comment type="interaction">
    <interactant intactId="EBI-296087">
        <id>P31749</id>
    </interactant>
    <interactant intactId="EBI-958922">
        <id>O95999</id>
        <label>BCL10</label>
    </interactant>
    <organismsDiffer>false</organismsDiffer>
    <experiments>5</experiments>
</comment>
<comment type="interaction">
    <interactant intactId="EBI-296087">
        <id>P31749</id>
    </interactant>
    <interactant intactId="EBI-935503">
        <id>Q9H0C5</id>
        <label>BTBD1</label>
    </interactant>
    <organismsDiffer>false</organismsDiffer>
    <experiments>3</experiments>
</comment>
<comment type="interaction">
    <interactant intactId="EBI-296087">
        <id>P31749</id>
    </interactant>
    <interactant intactId="EBI-1383687">
        <id>Q9UQM7</id>
        <label>CAMK2A</label>
    </interactant>
    <organismsDiffer>false</organismsDiffer>
    <experiments>3</experiments>
</comment>
<comment type="interaction">
    <interactant intactId="EBI-296087">
        <id>P31749</id>
    </interactant>
    <interactant intactId="EBI-457097">
        <id>P20248</id>
        <label>CCNA2</label>
    </interactant>
    <organismsDiffer>false</organismsDiffer>
    <experiments>2</experiments>
</comment>
<comment type="interaction">
    <interactant intactId="EBI-296087">
        <id>P31749</id>
    </interactant>
    <interactant intactId="EBI-295634">
        <id>Q16543</id>
        <label>CDC37</label>
    </interactant>
    <organismsDiffer>false</organismsDiffer>
    <experiments>5</experiments>
</comment>
<comment type="interaction">
    <interactant intactId="EBI-296087">
        <id>P31749</id>
    </interactant>
    <interactant intactId="EBI-742887">
        <id>Q8TAP6</id>
        <label>CEP76</label>
    </interactant>
    <organismsDiffer>false</organismsDiffer>
    <experiments>3</experiments>
</comment>
<comment type="interaction">
    <interactant intactId="EBI-296087">
        <id>P31749</id>
    </interactant>
    <interactant intactId="EBI-81215">
        <id>Q92793</id>
        <label>CREBBP</label>
    </interactant>
    <organismsDiffer>false</organismsDiffer>
    <experiments>3</experiments>
</comment>
<comment type="interaction">
    <interactant intactId="EBI-296087">
        <id>P31749</id>
    </interactant>
    <interactant intactId="EBI-997830">
        <id>Q15438</id>
        <label>CYTH1</label>
    </interactant>
    <organismsDiffer>false</organismsDiffer>
    <experiments>3</experiments>
</comment>
<comment type="interaction">
    <interactant intactId="EBI-296087">
        <id>P31749</id>
    </interactant>
    <interactant intactId="EBI-742054">
        <id>Q96D03</id>
        <label>DDIT4L</label>
    </interactant>
    <organismsDiffer>false</organismsDiffer>
    <experiments>3</experiments>
</comment>
<comment type="interaction">
    <interactant intactId="EBI-296087">
        <id>P31749</id>
    </interactant>
    <interactant intactId="EBI-719459">
        <id>P26358</id>
        <label>DNMT1</label>
    </interactant>
    <organismsDiffer>false</organismsDiffer>
    <experiments>6</experiments>
</comment>
<comment type="interaction">
    <interactant intactId="EBI-296087">
        <id>P31749</id>
    </interactant>
    <interactant intactId="EBI-3942563">
        <id>Q1W6H9</id>
        <label>FAM110C</label>
    </interactant>
    <organismsDiffer>false</organismsDiffer>
    <experiments>2</experiments>
</comment>
<comment type="interaction">
    <interactant intactId="EBI-296087">
        <id>P31749</id>
    </interactant>
    <interactant intactId="EBI-1108782">
        <id>Q12778</id>
        <label>FOXO1</label>
    </interactant>
    <organismsDiffer>false</organismsDiffer>
    <experiments>2</experiments>
</comment>
<comment type="interaction">
    <interactant intactId="EBI-296087">
        <id>P31749</id>
    </interactant>
    <interactant intactId="EBI-1644164">
        <id>O43524</id>
        <label>FOXO3</label>
    </interactant>
    <organismsDiffer>false</organismsDiffer>
    <experiments>3</experiments>
</comment>
<comment type="interaction">
    <interactant intactId="EBI-296087">
        <id>P31749</id>
    </interactant>
    <interactant intactId="EBI-515315">
        <id>P06241</id>
        <label>FYN</label>
    </interactant>
    <organismsDiffer>false</organismsDiffer>
    <experiments>3</experiments>
</comment>
<comment type="interaction">
    <interactant intactId="EBI-296087">
        <id>P31749</id>
    </interactant>
    <interactant intactId="EBI-6624768">
        <id>P22466</id>
        <label>GAL</label>
    </interactant>
    <organismsDiffer>false</organismsDiffer>
    <experiments>3</experiments>
</comment>
<comment type="interaction">
    <interactant intactId="EBI-296087">
        <id>P31749</id>
    </interactant>
    <interactant intactId="EBI-373586">
        <id>P49841</id>
        <label>GSK3B</label>
    </interactant>
    <organismsDiffer>false</organismsDiffer>
    <experiments>4</experiments>
</comment>
<comment type="interaction">
    <interactant intactId="EBI-296087">
        <id>P31749</id>
    </interactant>
    <interactant intactId="EBI-25830912">
        <id>Q96LI6-3</id>
        <label>HSFY2</label>
    </interactant>
    <organismsDiffer>false</organismsDiffer>
    <experiments>3</experiments>
</comment>
<comment type="interaction">
    <interactant intactId="EBI-296087">
        <id>P31749</id>
    </interactant>
    <interactant intactId="EBI-352572">
        <id>P08238</id>
        <label>HSP90AB1</label>
    </interactant>
    <organismsDiffer>false</organismsDiffer>
    <experiments>3</experiments>
</comment>
<comment type="interaction">
    <interactant intactId="EBI-296087">
        <id>P31749</id>
    </interactant>
    <interactant intactId="EBI-466029">
        <id>P42858</id>
        <label>HTT</label>
    </interactant>
    <organismsDiffer>false</organismsDiffer>
    <experiments>3</experiments>
</comment>
<comment type="interaction">
    <interactant intactId="EBI-296087">
        <id>P31749</id>
    </interactant>
    <interactant intactId="EBI-5323863">
        <id>Q5S007</id>
        <label>LRRK2</label>
    </interactant>
    <organismsDiffer>false</organismsDiffer>
    <experiments>6</experiments>
</comment>
<comment type="interaction">
    <interactant intactId="EBI-296087">
        <id>P31749</id>
    </interactant>
    <interactant intactId="EBI-476263">
        <id>Q99683</id>
        <label>MAP3K5</label>
    </interactant>
    <organismsDiffer>false</organismsDiffer>
    <experiments>2</experiments>
</comment>
<comment type="interaction">
    <interactant intactId="EBI-296087">
        <id>P31749</id>
    </interactant>
    <interactant intactId="EBI-366182">
        <id>P10636</id>
        <label>MAPT</label>
    </interactant>
    <organismsDiffer>false</organismsDiffer>
    <experiments>2</experiments>
</comment>
<comment type="interaction">
    <interactant intactId="EBI-296087">
        <id>P31749</id>
    </interactant>
    <interactant intactId="EBI-389668">
        <id>Q00987</id>
        <label>MDM2</label>
    </interactant>
    <organismsDiffer>false</organismsDiffer>
    <experiments>4</experiments>
</comment>
<comment type="interaction">
    <interactant intactId="EBI-296087">
        <id>P31749</id>
    </interactant>
    <interactant intactId="EBI-6165891">
        <id>Q14696</id>
        <label>MESD</label>
    </interactant>
    <organismsDiffer>false</organismsDiffer>
    <experiments>3</experiments>
</comment>
<comment type="interaction">
    <interactant intactId="EBI-296087">
        <id>P31749</id>
    </interactant>
    <interactant intactId="EBI-359260">
        <id>P42345</id>
        <label>MTOR</label>
    </interactant>
    <organismsDiffer>false</organismsDiffer>
    <experiments>4</experiments>
</comment>
<comment type="interaction">
    <interactant intactId="EBI-296087">
        <id>P31749</id>
    </interactant>
    <interactant intactId="EBI-6916466">
        <id>Q9BZQ8</id>
        <label>NIBAN1</label>
    </interactant>
    <organismsDiffer>false</organismsDiffer>
    <experiments>2</experiments>
</comment>
<comment type="interaction">
    <interactant intactId="EBI-296087">
        <id>P31749</id>
    </interactant>
    <interactant intactId="EBI-493507">
        <id>P04150</id>
        <label>NR3C1</label>
    </interactant>
    <organismsDiffer>false</organismsDiffer>
    <experiments>5</experiments>
</comment>
<comment type="interaction">
    <interactant intactId="EBI-296087">
        <id>P31749</id>
    </interactant>
    <interactant intactId="EBI-717097">
        <id>O15530</id>
        <label>PDPK1</label>
    </interactant>
    <organismsDiffer>false</organismsDiffer>
    <experiments>4</experiments>
</comment>
<comment type="interaction">
    <interactant intactId="EBI-296087">
        <id>P31749</id>
    </interactant>
    <interactant intactId="EBI-8563667">
        <id>Q96S96</id>
        <label>PEBP4</label>
    </interactant>
    <organismsDiffer>false</organismsDiffer>
    <experiments>2</experiments>
</comment>
<comment type="interaction">
    <interactant intactId="EBI-296087">
        <id>P31749</id>
    </interactant>
    <interactant intactId="EBI-79387">
        <id>P19174</id>
        <label>PLCG1</label>
    </interactant>
    <organismsDiffer>false</organismsDiffer>
    <experiments>9</experiments>
</comment>
<comment type="interaction">
    <interactant intactId="EBI-296087">
        <id>P31749</id>
    </interactant>
    <interactant intactId="EBI-368321">
        <id>O60437</id>
        <label>PPL</label>
    </interactant>
    <organismsDiffer>false</organismsDiffer>
    <experiments>2</experiments>
</comment>
<comment type="interaction">
    <interactant intactId="EBI-296087">
        <id>P31749</id>
    </interactant>
    <interactant intactId="EBI-357253">
        <id>P62136</id>
        <label>PPP1CA</label>
    </interactant>
    <organismsDiffer>false</organismsDiffer>
    <experiments>4</experiments>
</comment>
<comment type="interaction">
    <interactant intactId="EBI-296087">
        <id>P31749</id>
    </interactant>
    <interactant intactId="EBI-712311">
        <id>P67775</id>
        <label>PPP2CA</label>
    </interactant>
    <organismsDiffer>false</organismsDiffer>
    <experiments>4</experiments>
</comment>
<comment type="interaction">
    <interactant intactId="EBI-296087">
        <id>P31749</id>
    </interactant>
    <interactant intactId="EBI-302388">
        <id>P30153</id>
        <label>PPP2R1A</label>
    </interactant>
    <organismsDiffer>false</organismsDiffer>
    <experiments>2</experiments>
</comment>
<comment type="interaction">
    <interactant intactId="EBI-296087">
        <id>P31749</id>
    </interactant>
    <interactant intactId="EBI-476586">
        <id>P17612</id>
        <label>PRKACA</label>
    </interactant>
    <organismsDiffer>false</organismsDiffer>
    <experiments>3</experiments>
</comment>
<comment type="interaction">
    <interactant intactId="EBI-296087">
        <id>P31749</id>
    </interactant>
    <interactant intactId="EBI-295351">
        <id>Q05513</id>
        <label>PRKCZ</label>
    </interactant>
    <organismsDiffer>false</organismsDiffer>
    <experiments>2</experiments>
</comment>
<comment type="interaction">
    <interactant intactId="EBI-296087">
        <id>P31749</id>
    </interactant>
    <interactant intactId="EBI-743880">
        <id>Q8WUY3</id>
        <label>PRUNE2</label>
    </interactant>
    <organismsDiffer>false</organismsDiffer>
    <experiments>3</experiments>
</comment>
<comment type="interaction">
    <interactant intactId="EBI-296087">
        <id>P31749</id>
    </interactant>
    <interactant intactId="EBI-1775921">
        <id>P23443</id>
        <label>RPS6KB1</label>
    </interactant>
    <organismsDiffer>false</organismsDiffer>
    <experiments>3</experiments>
</comment>
<comment type="interaction">
    <interactant intactId="EBI-296087">
        <id>P31749</id>
    </interactant>
    <interactant intactId="EBI-79691">
        <id>Q15047</id>
        <label>SETDB1</label>
    </interactant>
    <organismsDiffer>false</organismsDiffer>
    <experiments>9</experiments>
</comment>
<comment type="interaction">
    <interactant intactId="EBI-296087">
        <id>P31749</id>
    </interactant>
    <interactant intactId="EBI-1802965">
        <id>Q96EB6</id>
        <label>SIRT1</label>
    </interactant>
    <organismsDiffer>false</organismsDiffer>
    <experiments>5</experiments>
</comment>
<comment type="interaction">
    <interactant intactId="EBI-296087">
        <id>P31749</id>
    </interactant>
    <interactant intactId="EBI-367376">
        <id>Q13043</id>
        <label>STK4</label>
    </interactant>
    <organismsDiffer>false</organismsDiffer>
    <experiments>13</experiments>
</comment>
<comment type="interaction">
    <interactant intactId="EBI-296087">
        <id>P31749</id>
    </interactant>
    <interactant intactId="EBI-15687717">
        <id>Q9UNE7-1</id>
        <label>STUB1</label>
    </interactant>
    <organismsDiffer>false</organismsDiffer>
    <experiments>5</experiments>
</comment>
<comment type="interaction">
    <interactant intactId="EBI-296087">
        <id>P31749</id>
    </interactant>
    <interactant intactId="EBI-749995">
        <id>P56279</id>
        <label>TCL1A</label>
    </interactant>
    <organismsDiffer>false</organismsDiffer>
    <experiments>8</experiments>
</comment>
<comment type="interaction">
    <interactant intactId="EBI-296087">
        <id>P31749</id>
    </interactant>
    <interactant intactId="EBI-750109">
        <id>Q9NYB0</id>
        <label>TERF2IP</label>
    </interactant>
    <organismsDiffer>false</organismsDiffer>
    <experiments>2</experiments>
</comment>
<comment type="interaction">
    <interactant intactId="EBI-296087">
        <id>P31749</id>
    </interactant>
    <interactant intactId="EBI-7684443">
        <id>Q5T1C6</id>
        <label>THEM4</label>
    </interactant>
    <organismsDiffer>false</organismsDiffer>
    <experiments>4</experiments>
</comment>
<comment type="interaction">
    <interactant intactId="EBI-296087">
        <id>P31749</id>
    </interactant>
    <interactant intactId="EBI-308302">
        <id>Q92547</id>
        <label>TOPBP1</label>
    </interactant>
    <organismsDiffer>false</organismsDiffer>
    <experiments>2</experiments>
</comment>
<comment type="interaction">
    <interactant intactId="EBI-296087">
        <id>P31749</id>
    </interactant>
    <interactant intactId="EBI-2681313">
        <id>P53804</id>
        <label>TTC3</label>
    </interactant>
    <organismsDiffer>false</organismsDiffer>
    <experiments>4</experiments>
</comment>
<comment type="interaction">
    <interactant intactId="EBI-296087">
        <id>P31749</id>
    </interactant>
    <interactant intactId="EBI-594644">
        <id>P10599</id>
        <label>TXN</label>
    </interactant>
    <organismsDiffer>false</organismsDiffer>
    <experiments>3</experiments>
</comment>
<comment type="interaction">
    <interactant intactId="EBI-296087">
        <id>P31749</id>
    </interactant>
    <interactant intactId="EBI-353844">
        <id>P08670</id>
        <label>VIM</label>
    </interactant>
    <organismsDiffer>false</organismsDiffer>
    <experiments>29</experiments>
</comment>
<comment type="interaction">
    <interactant intactId="EBI-296087">
        <id>P31749</id>
    </interactant>
    <interactant intactId="EBI-2815120">
        <id>Q6GPH4</id>
        <label>XAF1</label>
    </interactant>
    <organismsDiffer>false</organismsDiffer>
    <experiments>4</experiments>
</comment>
<comment type="interaction">
    <interactant intactId="EBI-296087">
        <id>P31749</id>
    </interactant>
    <interactant intactId="EBI-707773">
        <id>P17028</id>
        <label>ZNF24</label>
    </interactant>
    <organismsDiffer>false</organismsDiffer>
    <experiments>3</experiments>
</comment>
<comment type="interaction">
    <interactant intactId="EBI-296087">
        <id>P31749</id>
    </interactant>
    <interactant intactId="EBI-1636616">
        <id>P29067</id>
        <label>Arrb2</label>
    </interactant>
    <organismsDiffer>true</organismsDiffer>
    <experiments>2</experiments>
</comment>
<comment type="interaction">
    <interactant intactId="EBI-296087">
        <id>P31749</id>
    </interactant>
    <interactant intactId="EBI-6859930">
        <id>Q83730</id>
        <label>m005R</label>
    </interactant>
    <organismsDiffer>true</organismsDiffer>
    <experiments>3</experiments>
</comment>
<comment type="interaction">
    <interactant intactId="EBI-296087">
        <id>P31749</id>
    </interactant>
    <interactant intactId="EBI-7683985">
        <id>P03165</id>
        <label>X</label>
    </interactant>
    <organismsDiffer>true</organismsDiffer>
    <experiments>3</experiments>
</comment>
<comment type="interaction">
    <interactant intactId="EBI-12562306">
        <id>P31749-1</id>
    </interactant>
    <interactant intactId="EBI-12562315">
        <id>Q15118-1</id>
        <label>PDK1</label>
    </interactant>
    <organismsDiffer>false</organismsDiffer>
    <experiments>2</experiments>
</comment>
<comment type="subcellular location">
    <subcellularLocation>
        <location evidence="1">Cytoplasm</location>
    </subcellularLocation>
    <subcellularLocation>
        <location evidence="52">Nucleus</location>
    </subcellularLocation>
    <subcellularLocation>
        <location evidence="52">Cell membrane</location>
    </subcellularLocation>
    <subcellularLocation>
        <location evidence="1">Mitochondrion intermembrane space</location>
    </subcellularLocation>
    <text evidence="1 36">Nucleus after activation by integrin-linked protein kinase 1 (ILK1). Nuclear translocation is enhanced by interaction with TCL1A. Phosphorylation on Tyr-176 by TNK2 results in its localization to the cell membrane where it is targeted for further phosphorylations on Thr-308 and Ser-473 leading to its activation and the activated form translocates to the nucleus. Colocalizes with WDFY2 in intracellular vesicles (PubMed:16792529). Also localizes to mitochondrial intermembrane space in response to rapamycin treatment (By similarity).</text>
</comment>
<comment type="alternative products">
    <event type="alternative splicing"/>
    <isoform>
        <id>P31749-1</id>
        <name>1</name>
        <sequence type="displayed"/>
    </isoform>
    <isoform>
        <id>P31749-2</id>
        <name>2</name>
        <sequence type="described" ref="VSP_056180"/>
    </isoform>
</comment>
<comment type="tissue specificity">
    <text evidence="39 42 52">Expressed in prostate cancer and levels increase from the normal to the malignant state (at protein level). Expressed in all human cell types so far analyzed. The Tyr-176 phosphorylated form shows a significant increase in expression in breast cancers during the progressive stages i.e. normal to hyperplasia (ADH), ductal carcinoma in situ (DCIS), invasive ductal carcinoma (IDC) and lymph node metastatic (LNMM) stages.</text>
</comment>
<comment type="domain">
    <text evidence="3 22 24 52">Binding of the PH domain to phosphatidylinositol 3,4,5-trisphosphate (PI(3,4,5)P3) following phosphatidylinositol 3-kinase alpha (PIK3CA) activity results in its targeting to the plasma membrane (PubMed:12176338, PubMed:12964941). PI(3,4,5)P3 is also required for phosphorylation at Thr-308 and subsequent activation (By similarity). The PH domain mediates interaction with TNK2 and Tyr-176 is also essential for this interaction (PubMed:20333297).</text>
</comment>
<comment type="domain">
    <text evidence="15">The AGC-kinase C-terminal mediates interaction with THEM4.</text>
</comment>
<comment type="PTM">
    <text evidence="26 27 30 33 38 43 52 54 58 62 73 85 86 87">O-GlcNAcylation at Thr-305 and Thr-312 inhibits activating phosphorylation at Thr-308 via disrupting the interaction between AKT1 and PDPK1. O-GlcNAcylation at Ser-473 also probably interferes with phosphorylation at this site.</text>
</comment>
<comment type="PTM">
    <text evidence="1 19 26 27 29 30 33 38 43 52 54 58 59 62 73 74 77 85 86 87">Phosphorylation on Thr-308, Ser-473 and Tyr-474 is required for full activity (PubMed:12149249, PubMed:15047712, PubMed:15262962, PubMed:16266983, PubMed:18456494, PubMed:20481595, PubMed:20978158, PubMed:8978681, PubMed:9512493, PubMed:9736715). Phosphorylation of the activation loop at Thr-308 by PDPK1/PDK1 is a prerequisite for full activation (PubMed:9512493). Phosphorylation by mTORC2 in response to growth factors plays a key role in AKT1 activation: mTORC2 phosphorylates different sites depending on the context, such as Thr-450, Ser-473, Ser-477 or Thr-479, thereby facilitating subsequent phosphorylation of the activation loop by PDPK1/PDK1 (PubMed:15718470, PubMed:24670654). Phosphorylation at Ser-473 by mTORC2 promotes ubiquitination and degradation by the proteasome (By similarity). Also phosphorylated at Ser-477 and Thr-479 by CDK2, facilitating subsequent phosphorylation of the activation loop by PDPK1/PDK1 (PubMed:24670654). Activated TNK2 phosphorylates it on Tyr-176 resulting in its binding to the anionic plasma membrane phospholipid PA (PubMed:20333297). This phosphorylated form localizes to the cell membrane, where it is targeted by PDPK1 and PDPK2 for further phosphorylations on Thr-308 and Ser-473 leading to its activation (PubMed:20333297). Phosphorylated at Thr-308 and Ser-473 by IKBKE and TBK1 (PubMed:21464307). Ser-473 phosphorylation is enhanced by interaction with AGAP2 isoform 2 (PIKE-A) (PubMed:14761976). Ser-473 phosphorylation is enhanced in focal cortical dysplasias with Taylor-type balloon cells (PubMed:17013611). Ser-473 phosphorylation is enhanced by signaling through activated FLT3 (PubMed:16266983). Ser-473 is dephosphorylated by PHLPP (PubMed:28147277). Dephosphorylated at Thr-308 and Ser-473 by PP2A phosphatase (PubMed:21329884). The phosphorylated form of PPP2R5B is required for bridging AKT1 with PP2A phosphatase (PubMed:21329884). Ser-473 is dephosphorylated by CPPED1, leading to termination of signaling (PubMed:23799035). AIM2 acts as an inhibitor of AKT1 by inhibiting phosphorylation Ser-473: AIM2 acts both by inhibiting the activity of PRKDC/DNA-PK kinase and promoting dephosphorylation by PP2A phosphatase (By similarity).</text>
</comment>
<comment type="PTM">
    <text evidence="1 48 50 60 65">Ubiquitinated; undergoes both 'Lys-48'- and 'Lys-63'-linked polyubiquitination. TRAF6-induced 'Lys-63'-linked AKT1 ubiquitination is critical for phosphorylation and activation (PubMed:19713527). When ubiquitinated, it translocates to the plasma membrane, where it becomes phosphorylated (PubMed:20059950). When fully phosphorylated and translocated into the nucleus, undergoes 'Lys-48'-polyubiquitination catalyzed by TTC3, leading to its degradation by the proteasome (PubMed:20059950). Also ubiquitinated by TRIM13 leading to its proteasomal degradation (PubMed:21333377). Phosphorylated, undergoes 'Lys-48'-linked polyubiquitination preferentially at Lys-284 catalyzed by MUL1, leading to its proteasomal degradation (PubMed:22410793). Ubiquitinated via 'Lys-48'-linked polyubiquitination by ZNRF1, leading to its degradation by the proteasome (By similarity).</text>
</comment>
<comment type="PTM">
    <text evidence="63">Acetylated on Lys-14 and Lys-20 by the histone acetyltransferases EP300 and KAT2B. Acetylation results in reduced phosphorylation and inhibition of activity. Deacetylated at Lys-14 and Lys-20 by SIRT1. SIRT1-mediated deacetylation relieves the inhibition.</text>
</comment>
<comment type="PTM">
    <text evidence="1 67">Cleavage by caspase-3/CASP3 (By similarity). Cleaved at the caspase-3 consensus site Asp-462 during apoptosis, resulting in down-regulation of the AKT signaling pathway and decreased cell survival (PubMed:23152800).</text>
</comment>
<comment type="disease" evidence="40">
    <disease id="DI-02602">
        <name>Breast cancer</name>
        <acronym>BC</acronym>
        <description>A common malignancy originating from breast epithelial tissue. Breast neoplasms can be distinguished by their histologic pattern. Invasive ductal carcinoma is by far the most common type. Breast cancer is etiologically and genetically heterogeneous. Important genetic factors have been indicated by familial occurrence and bilateral involvement. Mutations at more than one locus can be involved in different families or even in the same case.</description>
        <dbReference type="MIM" id="114480"/>
    </disease>
    <text>Disease susceptibility is associated with variants affecting the gene represented in this entry.</text>
</comment>
<comment type="disease">
    <disease id="DI-01359">
        <name>Colorectal cancer</name>
        <acronym>CRC</acronym>
        <description>A complex disease characterized by malignant lesions arising from the inner wall of the large intestine (the colon) and the rectum. Genetic alterations are often associated with progression from premalignant lesion (adenoma) to invasive adenocarcinoma. Risk factors for cancer of the colon and rectum include colon polyps, long-standing ulcerative colitis, and genetic family history.</description>
        <dbReference type="MIM" id="114500"/>
    </disease>
    <text>The gene represented in this entry may be involved in disease pathogenesis.</text>
</comment>
<comment type="disease">
    <text>Genetic variations in AKT1 may play a role in susceptibility to ovarian cancer.</text>
</comment>
<comment type="disease" evidence="46 64">
    <disease id="DI-03216">
        <name>Proteus syndrome</name>
        <acronym>PROTEUSS</acronym>
        <description>A highly variable, severe disorder of asymmetric and disproportionate overgrowth of body parts, connective tissue nevi, epidermal nevi, dysregulated adipose tissue, and vascular malformations. Many features of Proteus syndrome overlap with other overgrowth syndromes.</description>
        <dbReference type="MIM" id="176920"/>
    </disease>
    <text>The disease is caused by variants affecting the gene represented in this entry.</text>
</comment>
<comment type="disease" evidence="22 68">
    <disease id="DI-03697">
        <name>Cowden syndrome 6</name>
        <acronym>CWS6</acronym>
        <description>A form of Cowden syndrome, a hamartomatous polyposis syndrome with age-related penetrance. Cowden syndrome is characterized by hamartomatous lesions affecting derivatives of ectodermal, mesodermal and endodermal layers, macrocephaly, facial trichilemmomas (benign tumors of the hair follicle infundibulum), acral keratoses, papillomatous papules, and elevated risk for development of several types of malignancy, particularly breast carcinoma in women and thyroid carcinoma in both men and women. Colon cancer and renal cell carcinoma have also been reported. Hamartomas can be found in virtually every organ, but most commonly in the skin, gastrointestinal tract, breast and thyroid.</description>
        <dbReference type="MIM" id="615109"/>
    </disease>
    <text>The disease is caused by variants affecting the gene represented in this entry.</text>
</comment>
<comment type="similarity">
    <text evidence="94">Belongs to the protein kinase superfamily. AGC Ser/Thr protein kinase family. RAC subfamily.</text>
</comment>
<comment type="caution">
    <text evidence="96 99">PUBMED:20231902 has been retracted because there was evidence of data fabrication and/or falsification in multiple figure panels.</text>
</comment>
<comment type="caution">
    <text evidence="95 98">PUBMED:19940129 has been retracted because the same data were used to represent different experimental conditions.</text>
</comment>
<comment type="caution">
    <text evidence="94">In light of strong homologies in the primary amino acid sequence, the 3 AKT kinases were long surmised to play redundant and overlapping roles. More recent studies has brought into question the redundancy within AKT kinase isoforms and instead pointed to isoform specific functions in different cellular events and diseases. AKT1 is more specifically involved in cellular survival pathways, by inhibiting apoptotic processes; whereas AKT2 is more specific for the insulin receptor signaling pathway. Moreover, while AKT1 and AKT2 are often implicated in many aspects of cellular transformation, the 2 isoforms act in a complementary opposing manner. The role of AKT3 is less clear, though it appears to be predominantly expressed in brain.</text>
</comment>
<comment type="online information" name="Atlas of Genetics and Cytogenetics in Oncology and Haematology">
    <link uri="https://atlasgeneticsoncology.org/gene/355/AKT1"/>
</comment>
<evidence type="ECO:0000250" key="1">
    <source>
        <dbReference type="UniProtKB" id="P31750"/>
    </source>
</evidence>
<evidence type="ECO:0000250" key="2">
    <source>
        <dbReference type="UniProtKB" id="P31751"/>
    </source>
</evidence>
<evidence type="ECO:0000250" key="3">
    <source>
        <dbReference type="UniProtKB" id="P47196"/>
    </source>
</evidence>
<evidence type="ECO:0000255" key="4">
    <source>
        <dbReference type="PROSITE-ProRule" id="PRU00145"/>
    </source>
</evidence>
<evidence type="ECO:0000255" key="5">
    <source>
        <dbReference type="PROSITE-ProRule" id="PRU00159"/>
    </source>
</evidence>
<evidence type="ECO:0000255" key="6">
    <source>
        <dbReference type="PROSITE-ProRule" id="PRU00618"/>
    </source>
</evidence>
<evidence type="ECO:0000255" key="7">
    <source>
        <dbReference type="PROSITE-ProRule" id="PRU10027"/>
    </source>
</evidence>
<evidence type="ECO:0000256" key="8">
    <source>
        <dbReference type="SAM" id="MobiDB-lite"/>
    </source>
</evidence>
<evidence type="ECO:0000269" key="9">
    <source>
    </source>
</evidence>
<evidence type="ECO:0000269" key="10">
    <source>
    </source>
</evidence>
<evidence type="ECO:0000269" key="11">
    <source>
    </source>
</evidence>
<evidence type="ECO:0000269" key="12">
    <source>
    </source>
</evidence>
<evidence type="ECO:0000269" key="13">
    <source>
    </source>
</evidence>
<evidence type="ECO:0000269" key="14">
    <source>
    </source>
</evidence>
<evidence type="ECO:0000269" key="15">
    <source>
    </source>
</evidence>
<evidence type="ECO:0000269" key="16">
    <source>
    </source>
</evidence>
<evidence type="ECO:0000269" key="17">
    <source>
    </source>
</evidence>
<evidence type="ECO:0000269" key="18">
    <source>
    </source>
</evidence>
<evidence type="ECO:0000269" key="19">
    <source>
    </source>
</evidence>
<evidence type="ECO:0000269" key="20">
    <source>
    </source>
</evidence>
<evidence type="ECO:0000269" key="21">
    <source>
    </source>
</evidence>
<evidence type="ECO:0000269" key="22">
    <source>
    </source>
</evidence>
<evidence type="ECO:0000269" key="23">
    <source>
    </source>
</evidence>
<evidence type="ECO:0000269" key="24">
    <source>
    </source>
</evidence>
<evidence type="ECO:0000269" key="25">
    <source>
    </source>
</evidence>
<evidence type="ECO:0000269" key="26">
    <source>
    </source>
</evidence>
<evidence type="ECO:0000269" key="27">
    <source>
    </source>
</evidence>
<evidence type="ECO:0000269" key="28">
    <source>
    </source>
</evidence>
<evidence type="ECO:0000269" key="29">
    <source>
    </source>
</evidence>
<evidence type="ECO:0000269" key="30">
    <source>
    </source>
</evidence>
<evidence type="ECO:0000269" key="31">
    <source>
    </source>
</evidence>
<evidence type="ECO:0000269" key="32">
    <source>
    </source>
</evidence>
<evidence type="ECO:0000269" key="33">
    <source>
    </source>
</evidence>
<evidence type="ECO:0000269" key="34">
    <source>
    </source>
</evidence>
<evidence type="ECO:0000269" key="35">
    <source>
    </source>
</evidence>
<evidence type="ECO:0000269" key="36">
    <source>
    </source>
</evidence>
<evidence type="ECO:0000269" key="37">
    <source>
    </source>
</evidence>
<evidence type="ECO:0000269" key="38">
    <source>
    </source>
</evidence>
<evidence type="ECO:0000269" key="39">
    <source>
    </source>
</evidence>
<evidence type="ECO:0000269" key="40">
    <source>
    </source>
</evidence>
<evidence type="ECO:0000269" key="41">
    <source>
    </source>
</evidence>
<evidence type="ECO:0000269" key="42">
    <source>
    </source>
</evidence>
<evidence type="ECO:0000269" key="43">
    <source>
    </source>
</evidence>
<evidence type="ECO:0000269" key="44">
    <source>
    </source>
</evidence>
<evidence type="ECO:0000269" key="45">
    <source>
    </source>
</evidence>
<evidence type="ECO:0000269" key="46">
    <source>
    </source>
</evidence>
<evidence type="ECO:0000269" key="47">
    <source>
    </source>
</evidence>
<evidence type="ECO:0000269" key="48">
    <source>
    </source>
</evidence>
<evidence type="ECO:0000269" key="49">
    <source>
    </source>
</evidence>
<evidence type="ECO:0000269" key="50">
    <source>
    </source>
</evidence>
<evidence type="ECO:0000269" key="51">
    <source>
    </source>
</evidence>
<evidence type="ECO:0000269" key="52">
    <source>
    </source>
</evidence>
<evidence type="ECO:0000269" key="53">
    <source>
    </source>
</evidence>
<evidence type="ECO:0000269" key="54">
    <source>
    </source>
</evidence>
<evidence type="ECO:0000269" key="55">
    <source>
    </source>
</evidence>
<evidence type="ECO:0000269" key="56">
    <source>
    </source>
</evidence>
<evidence type="ECO:0000269" key="57">
    <source>
    </source>
</evidence>
<evidence type="ECO:0000269" key="58">
    <source>
    </source>
</evidence>
<evidence type="ECO:0000269" key="59">
    <source>
    </source>
</evidence>
<evidence type="ECO:0000269" key="60">
    <source>
    </source>
</evidence>
<evidence type="ECO:0000269" key="61">
    <source>
    </source>
</evidence>
<evidence type="ECO:0000269" key="62">
    <source>
    </source>
</evidence>
<evidence type="ECO:0000269" key="63">
    <source>
    </source>
</evidence>
<evidence type="ECO:0000269" key="64">
    <source>
    </source>
</evidence>
<evidence type="ECO:0000269" key="65">
    <source>
    </source>
</evidence>
<evidence type="ECO:0000269" key="66">
    <source>
    </source>
</evidence>
<evidence type="ECO:0000269" key="67">
    <source>
    </source>
</evidence>
<evidence type="ECO:0000269" key="68">
    <source>
    </source>
</evidence>
<evidence type="ECO:0000269" key="69">
    <source>
    </source>
</evidence>
<evidence type="ECO:0000269" key="70">
    <source>
    </source>
</evidence>
<evidence type="ECO:0000269" key="71">
    <source>
    </source>
</evidence>
<evidence type="ECO:0000269" key="72">
    <source>
    </source>
</evidence>
<evidence type="ECO:0000269" key="73">
    <source>
    </source>
</evidence>
<evidence type="ECO:0000269" key="74">
    <source>
    </source>
</evidence>
<evidence type="ECO:0000269" key="75">
    <source>
    </source>
</evidence>
<evidence type="ECO:0000269" key="76">
    <source>
    </source>
</evidence>
<evidence type="ECO:0000269" key="77">
    <source>
    </source>
</evidence>
<evidence type="ECO:0000269" key="78">
    <source>
    </source>
</evidence>
<evidence type="ECO:0000269" key="79">
    <source>
    </source>
</evidence>
<evidence type="ECO:0000269" key="80">
    <source>
    </source>
</evidence>
<evidence type="ECO:0000269" key="81">
    <source>
    </source>
</evidence>
<evidence type="ECO:0000269" key="82">
    <source>
    </source>
</evidence>
<evidence type="ECO:0000269" key="83">
    <source>
    </source>
</evidence>
<evidence type="ECO:0000269" key="84">
    <source>
    </source>
</evidence>
<evidence type="ECO:0000269" key="85">
    <source>
    </source>
</evidence>
<evidence type="ECO:0000269" key="86">
    <source>
    </source>
</evidence>
<evidence type="ECO:0000269" key="87">
    <source>
    </source>
</evidence>
<evidence type="ECO:0000269" key="88">
    <source>
    </source>
</evidence>
<evidence type="ECO:0000303" key="89">
    <source>
    </source>
</evidence>
<evidence type="ECO:0000303" key="90">
    <source>
    </source>
</evidence>
<evidence type="ECO:0000303" key="91">
    <source>
    </source>
</evidence>
<evidence type="ECO:0000303" key="92">
    <source>
    </source>
</evidence>
<evidence type="ECO:0000303" key="93">
    <source>
    </source>
</evidence>
<evidence type="ECO:0000305" key="94"/>
<evidence type="ECO:0000305" key="95">
    <source>
    </source>
</evidence>
<evidence type="ECO:0000305" key="96">
    <source>
    </source>
</evidence>
<evidence type="ECO:0000305" key="97">
    <source>
    </source>
</evidence>
<evidence type="ECO:0000305" key="98">
    <source>
    </source>
</evidence>
<evidence type="ECO:0000305" key="99">
    <source>
    </source>
</evidence>
<evidence type="ECO:0007744" key="100">
    <source>
        <dbReference type="PDB" id="3CQU"/>
    </source>
</evidence>
<evidence type="ECO:0007744" key="101">
    <source>
        <dbReference type="PDB" id="3CQW"/>
    </source>
</evidence>
<evidence type="ECO:0007744" key="102">
    <source>
        <dbReference type="PDB" id="3MV5"/>
    </source>
</evidence>
<evidence type="ECO:0007744" key="103">
    <source>
        <dbReference type="PDB" id="3MVH"/>
    </source>
</evidence>
<evidence type="ECO:0007744" key="104">
    <source>
        <dbReference type="PDB" id="3O96"/>
    </source>
</evidence>
<evidence type="ECO:0007744" key="105">
    <source>
        <dbReference type="PDB" id="3OCB"/>
    </source>
</evidence>
<evidence type="ECO:0007744" key="106">
    <source>
        <dbReference type="PDB" id="3QKK"/>
    </source>
</evidence>
<evidence type="ECO:0007744" key="107">
    <source>
        <dbReference type="PDB" id="3QKL"/>
    </source>
</evidence>
<evidence type="ECO:0007744" key="108">
    <source>
    </source>
</evidence>
<evidence type="ECO:0007744" key="109">
    <source>
    </source>
</evidence>
<evidence type="ECO:0007744" key="110">
    <source>
    </source>
</evidence>
<evidence type="ECO:0007744" key="111">
    <source>
    </source>
</evidence>
<evidence type="ECO:0007829" key="112">
    <source>
        <dbReference type="PDB" id="1UNQ"/>
    </source>
</evidence>
<evidence type="ECO:0007829" key="113">
    <source>
        <dbReference type="PDB" id="3MVH"/>
    </source>
</evidence>
<evidence type="ECO:0007829" key="114">
    <source>
        <dbReference type="PDB" id="4EJN"/>
    </source>
</evidence>
<evidence type="ECO:0007829" key="115">
    <source>
        <dbReference type="PDB" id="4GV1"/>
    </source>
</evidence>
<evidence type="ECO:0007829" key="116">
    <source>
        <dbReference type="PDB" id="7APJ"/>
    </source>
</evidence>
<evidence type="ECO:0007829" key="117">
    <source>
        <dbReference type="PDB" id="7NH5"/>
    </source>
</evidence>
<name>AKT1_HUMAN</name>
<organism>
    <name type="scientific">Homo sapiens</name>
    <name type="common">Human</name>
    <dbReference type="NCBI Taxonomy" id="9606"/>
    <lineage>
        <taxon>Eukaryota</taxon>
        <taxon>Metazoa</taxon>
        <taxon>Chordata</taxon>
        <taxon>Craniata</taxon>
        <taxon>Vertebrata</taxon>
        <taxon>Euteleostomi</taxon>
        <taxon>Mammalia</taxon>
        <taxon>Eutheria</taxon>
        <taxon>Euarchontoglires</taxon>
        <taxon>Primates</taxon>
        <taxon>Haplorrhini</taxon>
        <taxon>Catarrhini</taxon>
        <taxon>Hominidae</taxon>
        <taxon>Homo</taxon>
    </lineage>
</organism>
<reference key="1">
    <citation type="journal article" date="1991" name="Proc. Natl. Acad. Sci. U.S.A.">
        <title>Molecular cloning and identification of a serine/threonine protein kinase of the second-messenger subfamily.</title>
        <authorList>
            <person name="Jones P.F."/>
            <person name="Jakubowicz T."/>
            <person name="Pitossi F.J."/>
            <person name="Maurer F."/>
            <person name="Hemmings B.A."/>
        </authorList>
    </citation>
    <scope>NUCLEOTIDE SEQUENCE [MRNA] (ISOFORM 1)</scope>
    <scope>CATALYTIC ACTIVITY</scope>
</reference>
<reference key="2">
    <citation type="journal article" date="2001" name="Diabetologia">
        <title>Isolation and characterization of the human AKT1 gene, identification of 13 single nucleotide polymorphisms (SNPs), and their lack of association with Type II diabetes.</title>
        <authorList>
            <person name="Matsubara A."/>
            <person name="Wasson J.C."/>
            <person name="Donelan S.S."/>
            <person name="Welling C.M."/>
            <person name="Glaser B."/>
            <person name="Permutt M.A."/>
        </authorList>
    </citation>
    <scope>NUCLEOTIDE SEQUENCE [GENOMIC DNA]</scope>
</reference>
<reference key="3">
    <citation type="journal article" date="2004" name="Nat. Genet.">
        <title>Complete sequencing and characterization of 21,243 full-length human cDNAs.</title>
        <authorList>
            <person name="Ota T."/>
            <person name="Suzuki Y."/>
            <person name="Nishikawa T."/>
            <person name="Otsuki T."/>
            <person name="Sugiyama T."/>
            <person name="Irie R."/>
            <person name="Wakamatsu A."/>
            <person name="Hayashi K."/>
            <person name="Sato H."/>
            <person name="Nagai K."/>
            <person name="Kimura K."/>
            <person name="Makita H."/>
            <person name="Sekine M."/>
            <person name="Obayashi M."/>
            <person name="Nishi T."/>
            <person name="Shibahara T."/>
            <person name="Tanaka T."/>
            <person name="Ishii S."/>
            <person name="Yamamoto J."/>
            <person name="Saito K."/>
            <person name="Kawai Y."/>
            <person name="Isono Y."/>
            <person name="Nakamura Y."/>
            <person name="Nagahari K."/>
            <person name="Murakami K."/>
            <person name="Yasuda T."/>
            <person name="Iwayanagi T."/>
            <person name="Wagatsuma M."/>
            <person name="Shiratori A."/>
            <person name="Sudo H."/>
            <person name="Hosoiri T."/>
            <person name="Kaku Y."/>
            <person name="Kodaira H."/>
            <person name="Kondo H."/>
            <person name="Sugawara M."/>
            <person name="Takahashi M."/>
            <person name="Kanda K."/>
            <person name="Yokoi T."/>
            <person name="Furuya T."/>
            <person name="Kikkawa E."/>
            <person name="Omura Y."/>
            <person name="Abe K."/>
            <person name="Kamihara K."/>
            <person name="Katsuta N."/>
            <person name="Sato K."/>
            <person name="Tanikawa M."/>
            <person name="Yamazaki M."/>
            <person name="Ninomiya K."/>
            <person name="Ishibashi T."/>
            <person name="Yamashita H."/>
            <person name="Murakawa K."/>
            <person name="Fujimori K."/>
            <person name="Tanai H."/>
            <person name="Kimata M."/>
            <person name="Watanabe M."/>
            <person name="Hiraoka S."/>
            <person name="Chiba Y."/>
            <person name="Ishida S."/>
            <person name="Ono Y."/>
            <person name="Takiguchi S."/>
            <person name="Watanabe S."/>
            <person name="Yosida M."/>
            <person name="Hotuta T."/>
            <person name="Kusano J."/>
            <person name="Kanehori K."/>
            <person name="Takahashi-Fujii A."/>
            <person name="Hara H."/>
            <person name="Tanase T.-O."/>
            <person name="Nomura Y."/>
            <person name="Togiya S."/>
            <person name="Komai F."/>
            <person name="Hara R."/>
            <person name="Takeuchi K."/>
            <person name="Arita M."/>
            <person name="Imose N."/>
            <person name="Musashino K."/>
            <person name="Yuuki H."/>
            <person name="Oshima A."/>
            <person name="Sasaki N."/>
            <person name="Aotsuka S."/>
            <person name="Yoshikawa Y."/>
            <person name="Matsunawa H."/>
            <person name="Ichihara T."/>
            <person name="Shiohata N."/>
            <person name="Sano S."/>
            <person name="Moriya S."/>
            <person name="Momiyama H."/>
            <person name="Satoh N."/>
            <person name="Takami S."/>
            <person name="Terashima Y."/>
            <person name="Suzuki O."/>
            <person name="Nakagawa S."/>
            <person name="Senoh A."/>
            <person name="Mizoguchi H."/>
            <person name="Goto Y."/>
            <person name="Shimizu F."/>
            <person name="Wakebe H."/>
            <person name="Hishigaki H."/>
            <person name="Watanabe T."/>
            <person name="Sugiyama A."/>
            <person name="Takemoto M."/>
            <person name="Kawakami B."/>
            <person name="Yamazaki M."/>
            <person name="Watanabe K."/>
            <person name="Kumagai A."/>
            <person name="Itakura S."/>
            <person name="Fukuzumi Y."/>
            <person name="Fujimori Y."/>
            <person name="Komiyama M."/>
            <person name="Tashiro H."/>
            <person name="Tanigami A."/>
            <person name="Fujiwara T."/>
            <person name="Ono T."/>
            <person name="Yamada K."/>
            <person name="Fujii Y."/>
            <person name="Ozaki K."/>
            <person name="Hirao M."/>
            <person name="Ohmori Y."/>
            <person name="Kawabata A."/>
            <person name="Hikiji T."/>
            <person name="Kobatake N."/>
            <person name="Inagaki H."/>
            <person name="Ikema Y."/>
            <person name="Okamoto S."/>
            <person name="Okitani R."/>
            <person name="Kawakami T."/>
            <person name="Noguchi S."/>
            <person name="Itoh T."/>
            <person name="Shigeta K."/>
            <person name="Senba T."/>
            <person name="Matsumura K."/>
            <person name="Nakajima Y."/>
            <person name="Mizuno T."/>
            <person name="Morinaga M."/>
            <person name="Sasaki M."/>
            <person name="Togashi T."/>
            <person name="Oyama M."/>
            <person name="Hata H."/>
            <person name="Watanabe M."/>
            <person name="Komatsu T."/>
            <person name="Mizushima-Sugano J."/>
            <person name="Satoh T."/>
            <person name="Shirai Y."/>
            <person name="Takahashi Y."/>
            <person name="Nakagawa K."/>
            <person name="Okumura K."/>
            <person name="Nagase T."/>
            <person name="Nomura N."/>
            <person name="Kikuchi H."/>
            <person name="Masuho Y."/>
            <person name="Yamashita R."/>
            <person name="Nakai K."/>
            <person name="Yada T."/>
            <person name="Nakamura Y."/>
            <person name="Ohara O."/>
            <person name="Isogai T."/>
            <person name="Sugano S."/>
        </authorList>
    </citation>
    <scope>NUCLEOTIDE SEQUENCE [LARGE SCALE MRNA] (ISOFORMS 1 AND 2)</scope>
    <source>
        <tissue>Adrenal gland</tissue>
    </source>
</reference>
<reference key="4">
    <citation type="journal article" date="2008" name="Nat. Methods">
        <title>Human protein factory for converting the transcriptome into an in vitro-expressed proteome.</title>
        <authorList>
            <person name="Goshima N."/>
            <person name="Kawamura Y."/>
            <person name="Fukumoto A."/>
            <person name="Miura A."/>
            <person name="Honma R."/>
            <person name="Satoh R."/>
            <person name="Wakamatsu A."/>
            <person name="Yamamoto J."/>
            <person name="Kimura K."/>
            <person name="Nishikawa T."/>
            <person name="Andoh T."/>
            <person name="Iida Y."/>
            <person name="Ishikawa K."/>
            <person name="Ito E."/>
            <person name="Kagawa N."/>
            <person name="Kaminaga C."/>
            <person name="Kanehori K."/>
            <person name="Kawakami B."/>
            <person name="Kenmochi K."/>
            <person name="Kimura R."/>
            <person name="Kobayashi M."/>
            <person name="Kuroita T."/>
            <person name="Kuwayama H."/>
            <person name="Maruyama Y."/>
            <person name="Matsuo K."/>
            <person name="Minami K."/>
            <person name="Mitsubori M."/>
            <person name="Mori M."/>
            <person name="Morishita R."/>
            <person name="Murase A."/>
            <person name="Nishikawa A."/>
            <person name="Nishikawa S."/>
            <person name="Okamoto T."/>
            <person name="Sakagami N."/>
            <person name="Sakamoto Y."/>
            <person name="Sasaki Y."/>
            <person name="Seki T."/>
            <person name="Sono S."/>
            <person name="Sugiyama A."/>
            <person name="Sumiya T."/>
            <person name="Takayama T."/>
            <person name="Takayama Y."/>
            <person name="Takeda H."/>
            <person name="Togashi T."/>
            <person name="Yahata K."/>
            <person name="Yamada H."/>
            <person name="Yanagisawa Y."/>
            <person name="Endo Y."/>
            <person name="Imamoto F."/>
            <person name="Kisu Y."/>
            <person name="Tanaka S."/>
            <person name="Isogai T."/>
            <person name="Imai J."/>
            <person name="Watanabe S."/>
            <person name="Nomura N."/>
        </authorList>
    </citation>
    <scope>NUCLEOTIDE SEQUENCE [LARGE SCALE MRNA] (ISOFORM 1)</scope>
</reference>
<reference key="5">
    <citation type="journal article" date="2003" name="Nature">
        <title>The DNA sequence and analysis of human chromosome 14.</title>
        <authorList>
            <person name="Heilig R."/>
            <person name="Eckenberg R."/>
            <person name="Petit J.-L."/>
            <person name="Fonknechten N."/>
            <person name="Da Silva C."/>
            <person name="Cattolico L."/>
            <person name="Levy M."/>
            <person name="Barbe V."/>
            <person name="De Berardinis V."/>
            <person name="Ureta-Vidal A."/>
            <person name="Pelletier E."/>
            <person name="Vico V."/>
            <person name="Anthouard V."/>
            <person name="Rowen L."/>
            <person name="Madan A."/>
            <person name="Qin S."/>
            <person name="Sun H."/>
            <person name="Du H."/>
            <person name="Pepin K."/>
            <person name="Artiguenave F."/>
            <person name="Robert C."/>
            <person name="Cruaud C."/>
            <person name="Bruels T."/>
            <person name="Jaillon O."/>
            <person name="Friedlander L."/>
            <person name="Samson G."/>
            <person name="Brottier P."/>
            <person name="Cure S."/>
            <person name="Segurens B."/>
            <person name="Aniere F."/>
            <person name="Samain S."/>
            <person name="Crespeau H."/>
            <person name="Abbasi N."/>
            <person name="Aiach N."/>
            <person name="Boscus D."/>
            <person name="Dickhoff R."/>
            <person name="Dors M."/>
            <person name="Dubois I."/>
            <person name="Friedman C."/>
            <person name="Gouyvenoux M."/>
            <person name="James R."/>
            <person name="Madan A."/>
            <person name="Mairey-Estrada B."/>
            <person name="Mangenot S."/>
            <person name="Martins N."/>
            <person name="Menard M."/>
            <person name="Oztas S."/>
            <person name="Ratcliffe A."/>
            <person name="Shaffer T."/>
            <person name="Trask B."/>
            <person name="Vacherie B."/>
            <person name="Bellemere C."/>
            <person name="Belser C."/>
            <person name="Besnard-Gonnet M."/>
            <person name="Bartol-Mavel D."/>
            <person name="Boutard M."/>
            <person name="Briez-Silla S."/>
            <person name="Combette S."/>
            <person name="Dufosse-Laurent V."/>
            <person name="Ferron C."/>
            <person name="Lechaplais C."/>
            <person name="Louesse C."/>
            <person name="Muselet D."/>
            <person name="Magdelenat G."/>
            <person name="Pateau E."/>
            <person name="Petit E."/>
            <person name="Sirvain-Trukniewicz P."/>
            <person name="Trybou A."/>
            <person name="Vega-Czarny N."/>
            <person name="Bataille E."/>
            <person name="Bluet E."/>
            <person name="Bordelais I."/>
            <person name="Dubois M."/>
            <person name="Dumont C."/>
            <person name="Guerin T."/>
            <person name="Haffray S."/>
            <person name="Hammadi R."/>
            <person name="Muanga J."/>
            <person name="Pellouin V."/>
            <person name="Robert D."/>
            <person name="Wunderle E."/>
            <person name="Gauguet G."/>
            <person name="Roy A."/>
            <person name="Sainte-Marthe L."/>
            <person name="Verdier J."/>
            <person name="Verdier-Discala C."/>
            <person name="Hillier L.W."/>
            <person name="Fulton L."/>
            <person name="McPherson J."/>
            <person name="Matsuda F."/>
            <person name="Wilson R."/>
            <person name="Scarpelli C."/>
            <person name="Gyapay G."/>
            <person name="Wincker P."/>
            <person name="Saurin W."/>
            <person name="Quetier F."/>
            <person name="Waterston R."/>
            <person name="Hood L."/>
            <person name="Weissenbach J."/>
        </authorList>
    </citation>
    <scope>NUCLEOTIDE SEQUENCE [LARGE SCALE GENOMIC DNA]</scope>
</reference>
<reference key="6">
    <citation type="journal article" date="2004" name="Genome Res.">
        <title>The status, quality, and expansion of the NIH full-length cDNA project: the Mammalian Gene Collection (MGC).</title>
        <authorList>
            <consortium name="The MGC Project Team"/>
        </authorList>
    </citation>
    <scope>NUCLEOTIDE SEQUENCE [LARGE SCALE MRNA] (ISOFORM 1)</scope>
    <source>
        <tissue>Muscle</tissue>
        <tissue>Ovary</tissue>
    </source>
</reference>
<reference key="7">
    <citation type="journal article" date="1991" name="Eur. J. Biochem.">
        <title>Molecular cloning and characterisation of a novel putative protein-serine kinase related to the cAMP-dependent and protein kinase C families.</title>
        <authorList>
            <person name="Coffer P.J."/>
            <person name="Woodgett J.R."/>
        </authorList>
    </citation>
    <scope>NUCLEOTIDE SEQUENCE [MRNA] OF 63-480 (ISOFORM 1)</scope>
    <scope>FUNCTION</scope>
    <scope>CATALYTIC ACTIVITY</scope>
    <scope>TISSUE SPECIFICITY</scope>
    <source>
        <tissue>Foreskin</tissue>
    </source>
</reference>
<reference key="8">
    <citation type="journal article" date="1992" name="Eur. J. Biochem.">
        <authorList>
            <person name="Coffer P.J."/>
            <person name="Woodgett J.R."/>
        </authorList>
    </citation>
    <scope>ERRATUM OF PUBMED:1718748</scope>
    <scope>SEQUENCE REVISION</scope>
</reference>
<reference key="9">
    <citation type="journal article" date="1998" name="J. Biol. Chem.">
        <title>CREB is a regulatory target for the protein kinase Akt/PKB.</title>
        <authorList>
            <person name="Du K."/>
            <person name="Montminy M."/>
        </authorList>
    </citation>
    <scope>FUNCTION IN PHOSPHORYLATION OF CREB1</scope>
</reference>
<reference key="10">
    <citation type="journal article" date="1998" name="Proc. Natl. Acad. Sci. U.S.A.">
        <title>Phosphoinositide-3-OH kinase-dependent regulation of glycogen synthase kinase 3 and protein kinase B/AKT by the integrin-linked kinase.</title>
        <authorList>
            <person name="Delcommenne M."/>
            <person name="Tan C."/>
            <person name="Gray V."/>
            <person name="Rue L."/>
            <person name="Woodgett J.R."/>
            <person name="Dedhar S."/>
        </authorList>
    </citation>
    <scope>ACTIVITY REGULATION</scope>
    <scope>PHOSPHORYLATION AT SER-473</scope>
</reference>
<reference key="11">
    <citation type="journal article" date="1996" name="EMBO J.">
        <title>Mechanism of activation of protein kinase B by insulin and IGF-1.</title>
        <authorList>
            <person name="Alessi D.R."/>
            <person name="Andjelkovic M."/>
            <person name="Caudwell F.B."/>
            <person name="Cron P."/>
            <person name="Morrice N."/>
            <person name="Cohen P."/>
            <person name="Hemmings B.A."/>
        </authorList>
    </citation>
    <scope>MUTAGENESIS OF THR-308 AND SER-473</scope>
    <scope>PHOSPHORYLATION AT THR-308 AND SER-473</scope>
</reference>
<reference key="12">
    <citation type="journal article" date="1998" name="Biochem. J.">
        <title>Activation of protein kinase B beta and gamma isoforms by insulin in vivo and by 3-phosphoinositide-dependent protein kinase-1 in vitro: comparison with protein kinase B alpha.</title>
        <authorList>
            <person name="Walker K.S."/>
            <person name="Deak M."/>
            <person name="Paterson A."/>
            <person name="Hudson K."/>
            <person name="Cohen P."/>
            <person name="Alessi D.R."/>
        </authorList>
    </citation>
    <scope>FUNCTION</scope>
    <scope>ACTIVITY REGULATION</scope>
    <scope>PHOSPHORYLATION AT THR-308 BY PDPK1</scope>
</reference>
<reference key="13">
    <citation type="journal article" date="1999" name="J. Biol. Chem.">
        <title>Phosphorylation of the transcription factor forkhead family member FKHR by protein kinase B.</title>
        <authorList>
            <person name="Rena G."/>
            <person name="Guo S."/>
            <person name="Cichy S.C."/>
            <person name="Unterman T.G."/>
            <person name="Cohen P."/>
        </authorList>
    </citation>
    <scope>FUNCTION IN PHOSPHORYLATION OF FOXO1</scope>
</reference>
<reference key="14">
    <citation type="journal article" date="1999" name="Science">
        <title>Phosphorylation and regulation of Raf by Akt (protein kinase B).</title>
        <authorList>
            <person name="Zimmermann S."/>
            <person name="Moelling K."/>
        </authorList>
    </citation>
    <scope>FUNCTION IN PHOSPHORYLATION OF RAF1</scope>
    <scope>INTERACTION WITH RAF1</scope>
</reference>
<reference key="15">
    <citation type="journal article" date="2000" name="J. Biol. Chem.">
        <title>Inhibition of Akt and its anti-apoptotic activities by tumor necrosis factor-induced protein kinase C-related kinase 2 (PRK2) cleavage.</title>
        <authorList>
            <person name="Koh H."/>
            <person name="Lee K.H."/>
            <person name="Kim D."/>
            <person name="Kim S."/>
            <person name="Kim J.W."/>
            <person name="Chung J."/>
        </authorList>
    </citation>
    <scope>FUNCTION IN PHOSPHORYLATION OF BAD</scope>
    <scope>INTERACTION WITH BAD AND PKN2</scope>
</reference>
<reference key="16">
    <citation type="journal article" date="2000" name="Mol. Cell">
        <title>The protooncogene TCL1 is an Akt kinase coactivator.</title>
        <authorList>
            <person name="Laine J."/>
            <person name="Kuenstle G."/>
            <person name="Obata T."/>
            <person name="Sha M."/>
            <person name="Noguchi M."/>
        </authorList>
    </citation>
    <scope>INTERACTION WITH MTCP1; TCL1A AND TCL1B</scope>
</reference>
<reference key="17">
    <citation type="journal article" date="2000" name="Proc. Natl. Acad. Sci. U.S.A.">
        <title>Tcl1 enhances Akt kinase activity and mediates its nuclear translocation.</title>
        <authorList>
            <person name="Pekarsky Y."/>
            <person name="Koval A."/>
            <person name="Hallas C."/>
            <person name="Bichi R."/>
            <person name="Tresini M."/>
            <person name="Malstrom S."/>
            <person name="Russo G."/>
            <person name="Tsichlis P."/>
            <person name="Croce C.M."/>
        </authorList>
    </citation>
    <scope>INTERACTION WITH TCL1A</scope>
</reference>
<reference key="18">
    <citation type="journal article" date="2001" name="Mol. Cell. Biol.">
        <title>Akt phosphorylates and negatively regulates apoptosis signal-regulating kinase 1.</title>
        <authorList>
            <person name="Kim A.H."/>
            <person name="Khursigara G."/>
            <person name="Sun X."/>
            <person name="Franke T.F."/>
            <person name="Chao M.V."/>
        </authorList>
    </citation>
    <scope>FUNCTION IN PHOSPHORYLATION OF MAP3K5</scope>
    <scope>INTERACTION WITH MAP3K5</scope>
</reference>
<reference key="19">
    <citation type="journal article" date="2001" name="Science">
        <title>Carboxyl-terminal modulator protein (CTMP), a negative regulator of PKB/Akt and v-Akt at the plasma membrane.</title>
        <authorList>
            <person name="Maira S.-M."/>
            <person name="Galetic I."/>
            <person name="Brazil D.P."/>
            <person name="Kaech S."/>
            <person name="Ingley E."/>
            <person name="Thelen M."/>
            <person name="Hemmings B.A."/>
        </authorList>
    </citation>
    <scope>INTERACTION WITH THEM4</scope>
    <scope>SUBCELLULAR LOCATION</scope>
</reference>
<reference key="20">
    <citation type="journal article" date="2002" name="J. Biol. Chem.">
        <title>A method to identify serine kinase substrates. Akt phosphorylates a novel adipocyte protein with a Rab GTPase-activating protein (GAP) domain.</title>
        <authorList>
            <person name="Kane S."/>
            <person name="Sano H."/>
            <person name="Liu S.C.H."/>
            <person name="Asara J.M."/>
            <person name="Lane W.S."/>
            <person name="Garner C.C."/>
            <person name="Lienhard G.E."/>
        </authorList>
    </citation>
    <scope>FUNCTION IN PHOSPHORYLATION OF TBC1D4</scope>
</reference>
<reference key="21">
    <citation type="journal article" date="2002" name="J. Biol. Chem.">
        <title>Akt-dependent phosphorylation of p27Kip1 promotes binding to 14-3-3 and cytoplasmic localization.</title>
        <authorList>
            <person name="Fujita N."/>
            <person name="Sato S."/>
            <person name="Katayama K."/>
            <person name="Tsuruo T."/>
        </authorList>
    </citation>
    <scope>INTERACTION WITH CDKN1B</scope>
    <scope>FUNCTION</scope>
</reference>
<reference key="22">
    <citation type="journal article" date="2002" name="J. Biol. Chem.">
        <title>Direct identification of tyrosine 474 as a regulatory phosphorylation site for the Akt protein kinase.</title>
        <authorList>
            <person name="Conus N.M."/>
            <person name="Hannan K.M."/>
            <person name="Cristiano B.E."/>
            <person name="Hemmings B.A."/>
            <person name="Pearson R.B."/>
        </authorList>
    </citation>
    <scope>PHOSPHORYLATION AT TYR-474</scope>
    <scope>MUTAGENESIS OF TYR-474</scope>
</reference>
<reference key="23">
    <citation type="journal article" date="2002" name="Mol. Cell">
        <title>Identification of the tuberous sclerosis complex-2 tumor suppressor gene product tuberin as a target of the phosphoinositide 3-kinase/akt pathway.</title>
        <authorList>
            <person name="Manning B.D."/>
            <person name="Tee A.R."/>
            <person name="Logsdon M.N."/>
            <person name="Blenis J."/>
            <person name="Cantley L.C."/>
        </authorList>
    </citation>
    <scope>FUNCTION IN PHOSPHORYLATION OF TSC2</scope>
</reference>
<reference key="24">
    <citation type="journal article" date="2002" name="Mol. Cell. Biol.">
        <title>Identification of Akt association and oligomerization domains of the Akt kinase coactivator TCL1.</title>
        <authorList>
            <person name="Kuenstle G."/>
            <person name="Laine J."/>
            <person name="Pierron G."/>
            <person name="Kagami S."/>
            <person name="Nakajima H."/>
            <person name="Hoh F."/>
            <person name="Roumestand C."/>
            <person name="Stern M.H."/>
            <person name="Noguchi M."/>
        </authorList>
    </citation>
    <scope>INTERACTION WITH TCL1A</scope>
</reference>
<reference key="25">
    <citation type="journal article" date="2002" name="Nat. Cell Biol.">
        <title>TSC2 is phosphorylated and inhibited by Akt and suppresses mTOR signalling.</title>
        <authorList>
            <person name="Inoki K."/>
            <person name="Li Y."/>
            <person name="Zhu T."/>
            <person name="Wu J."/>
            <person name="Guan K.L."/>
        </authorList>
    </citation>
    <scope>FUNCTION</scope>
    <scope>CATALYTIC ACTIVITY</scope>
    <scope>MUTAGENESIS OF LYS-179</scope>
</reference>
<reference key="26">
    <citation type="journal article" date="2002" name="Nat. Med.">
        <title>PKB/Akt mediates cell-cycle progression by phosphorylation of p27(Kip1) at threonine 157 and modulation of its cellular localization.</title>
        <authorList>
            <person name="Shin I."/>
            <person name="Yakes F.M."/>
            <person name="Rojo F."/>
            <person name="Shin N.-Y."/>
            <person name="Bakin A.V."/>
            <person name="Baselga J."/>
            <person name="Arteaga C.L."/>
        </authorList>
    </citation>
    <scope>INTERACTION WITH CDKN1B</scope>
    <scope>FUNCTION</scope>
    <scope>MUTAGENESIS OF THR-308 AND SER-473</scope>
</reference>
<reference key="27">
    <citation type="journal article" date="2003" name="Exp. Cell Res.">
        <title>Identification of Tyr900 in the kinase domain of c-Kit as a Src-dependent phosphorylation site mediating interaction with c-Crk.</title>
        <authorList>
            <person name="Lennartsson J."/>
            <person name="Wernstedt C."/>
            <person name="Engstrom U."/>
            <person name="Hellman U."/>
            <person name="Ronnstrand L."/>
        </authorList>
    </citation>
    <scope>FUNCTION IN PARTICIPATION IN KIT SIGNALING</scope>
</reference>
<reference key="28">
    <citation type="journal article" date="2004" name="J. Biol. Chem.">
        <title>PIKE (phosphatidylinositol 3-kinase enhancer)-A GTPase stimulates Akt activity and mediates cellular invasion.</title>
        <authorList>
            <person name="Ahn J.-Y."/>
            <person name="Rong R."/>
            <person name="Kroll T.G."/>
            <person name="Van Meir E.G."/>
            <person name="Snyder S.H."/>
            <person name="Ye K."/>
        </authorList>
    </citation>
    <scope>INTERACTION WITH AGAP2</scope>
    <scope>PHOSPHORYLATION AT SER-473</scope>
</reference>
<reference key="29">
    <citation type="journal article" date="2004" name="J. Biol. Chem.">
        <title>LGI1, a putative tumor metastasis suppressor gene, controls in vitro invasiveness and expression of matrix metalloproteinases in glioma cells through the ERK1/2 pathway.</title>
        <authorList>
            <person name="Kunapuli P."/>
            <person name="Kasyapa C.S."/>
            <person name="Hawthorn L."/>
            <person name="Cowell J.K."/>
        </authorList>
    </citation>
    <scope>PHOSPHORYLATION AT SER-473</scope>
</reference>
<reference key="30">
    <citation type="journal article" date="2007" name="J. Biol. Chem.">
        <authorList>
            <person name="Kunapuli P."/>
            <person name="Kasyapa C.S."/>
            <person name="Hawthorn L."/>
            <person name="Cowell J.K."/>
        </authorList>
    </citation>
    <scope>ERRATUM OF PUBMED:15047712</scope>
</reference>
<reference key="31">
    <citation type="journal article" date="2004" name="J. Biol. Chem.">
        <title>Identification of a PKB/Akt hydrophobic motif Ser-473 kinase as DNA-dependent protein kinase.</title>
        <authorList>
            <person name="Feng J."/>
            <person name="Park J."/>
            <person name="Cron P."/>
            <person name="Hess D."/>
            <person name="Hemmings B.A."/>
        </authorList>
    </citation>
    <scope>PHOSPHORYLATION AT SER-473</scope>
</reference>
<reference key="32">
    <citation type="journal article" date="2004" name="Mol. Cell. Biol.">
        <title>Regulation of apoptosis by the Ft1 protein, a new modulator of protein kinase B/Akt.</title>
        <authorList>
            <person name="Remy I."/>
            <person name="Michnick S.W."/>
        </authorList>
    </citation>
    <scope>INTERACTION WITH AKTIP</scope>
</reference>
<reference key="33">
    <citation type="journal article" date="2004" name="Proc. Natl. Acad. Sci. U.S.A.">
        <title>PIKE-A is amplified in human cancers and prevents apoptosis by up-regulating Akt.</title>
        <authorList>
            <person name="Ahn J.-Y."/>
            <person name="Hu Y."/>
            <person name="Kroll T.G."/>
            <person name="Allard P."/>
            <person name="Ye K."/>
        </authorList>
    </citation>
    <scope>INTERACTION WITH AGAP2</scope>
</reference>
<reference key="34">
    <citation type="journal article" date="2005" name="Cancer Res.">
        <title>Constitutive activation of Akt by Flt3 internal tandem duplications is necessary for increased survival, proliferation, and myeloid transformation.</title>
        <authorList>
            <person name="Brandts C.H."/>
            <person name="Sargin B."/>
            <person name="Rode M."/>
            <person name="Biermann C."/>
            <person name="Lindtner B."/>
            <person name="Schwable J."/>
            <person name="Buerger H."/>
            <person name="Muller-Tidow C."/>
            <person name="Choudhary C."/>
            <person name="McMahon M."/>
            <person name="Berdel W.E."/>
            <person name="Serve H."/>
        </authorList>
    </citation>
    <scope>PHOSPHORYLATION AT SER-473 IN RESPONSE TO FLT3 SIGNALING</scope>
</reference>
<reference key="35">
    <citation type="journal article" date="2005" name="Dev. Cell">
        <title>Akt/PKB regulates actin organization and cell motility via Girdin/APE.</title>
        <authorList>
            <person name="Enomoto A."/>
            <person name="Murakami H."/>
            <person name="Asai N."/>
            <person name="Morone N."/>
            <person name="Watanabe T."/>
            <person name="Kawai K."/>
            <person name="Murakumo Y."/>
            <person name="Usukura J."/>
            <person name="Kaibuchi K."/>
            <person name="Takahashi M."/>
        </authorList>
    </citation>
    <scope>FUNCTION</scope>
    <scope>CATALYTIC ACTIVITY</scope>
    <scope>INTERACTION WITH CCDC88A</scope>
</reference>
<reference key="36">
    <citation type="journal article" date="2005" name="EMBO J.">
        <title>The tRNA methylase METTL1 is phosphorylated and inactivated by PKB and RSK in vitro and in cells.</title>
        <authorList>
            <person name="Cartlidge R.A."/>
            <person name="Knebel A."/>
            <person name="Peggie M."/>
            <person name="Alexandrov A."/>
            <person name="Phizicky E.M."/>
            <person name="Cohen P."/>
        </authorList>
    </citation>
    <scope>FUNCTION</scope>
    <scope>CATALYTIC ACTIVITY</scope>
</reference>
<reference key="37">
    <citation type="journal article" date="2005" name="Science">
        <title>Phosphorylation and regulation of Akt/PKB by the rictor-mTOR complex.</title>
        <authorList>
            <person name="Sarbassov D.D."/>
            <person name="Guertin D.A."/>
            <person name="Ali S.M."/>
            <person name="Sabatini D.M."/>
        </authorList>
    </citation>
    <scope>PHOSPHORYLATION AT THR-308</scope>
    <scope>PHOSPHORYLATION AT SER-473 BY MTOR</scope>
</reference>
<reference key="38">
    <citation type="journal article" date="2006" name="Acta Neuropathol.">
        <title>Activation of Akt independent of PTEN and CTMP tumor-suppressor gene mutations in epilepsy-associated Taylor-type focal cortical dysplasias.</title>
        <authorList>
            <person name="Schick V."/>
            <person name="Majores M."/>
            <person name="Engels G."/>
            <person name="Spitoni S."/>
            <person name="Koch A."/>
            <person name="Elger C.E."/>
            <person name="Simon M."/>
            <person name="Knobbe C."/>
            <person name="Bluemcke I."/>
            <person name="Becker A.J."/>
        </authorList>
    </citation>
    <scope>PHOSPHORYLATION AT SER-473</scope>
</reference>
<reference key="39">
    <citation type="journal article" date="2006" name="Biochem. J.">
        <title>A WD-FYVE protein binds to the kinases Akt and PKCzeta/lambda.</title>
        <authorList>
            <person name="Fritzius T."/>
            <person name="Burkard G."/>
            <person name="Haas E."/>
            <person name="Heinrich J."/>
            <person name="Schweneker M."/>
            <person name="Bosse M."/>
            <person name="Zimmermann S."/>
            <person name="Frey A.D."/>
            <person name="Caelers A."/>
            <person name="Bachmann A.S."/>
            <person name="Moelling K."/>
        </authorList>
    </citation>
    <scope>INTERACTION WITH WDFY2</scope>
    <scope>SUBCELLULAR LOCATION</scope>
</reference>
<reference key="40">
    <citation type="journal article" date="2006" name="Biochem. J.">
        <title>Akt phosphorylates and suppresses the transactivation of retinoic acid receptor alpha.</title>
        <authorList>
            <person name="Srinivas H."/>
            <person name="Xia D."/>
            <person name="Moore N.L."/>
            <person name="Uray I.P."/>
            <person name="Kim H."/>
            <person name="Ma L."/>
            <person name="Weigel N.L."/>
            <person name="Brown P.H."/>
            <person name="Kurie J.M."/>
        </authorList>
    </citation>
    <scope>FUNCTION</scope>
    <scope>INTERACTION WITH RARA</scope>
</reference>
<reference key="41">
    <citation type="journal article" date="2006" name="Cell">
        <title>Global, in vivo, and site-specific phosphorylation dynamics in signaling networks.</title>
        <authorList>
            <person name="Olsen J.V."/>
            <person name="Blagoev B."/>
            <person name="Gnad F."/>
            <person name="Macek B."/>
            <person name="Kumar C."/>
            <person name="Mortensen P."/>
            <person name="Mann M."/>
        </authorList>
    </citation>
    <scope>PHOSPHORYLATION [LARGE SCALE ANALYSIS] AT SER-129</scope>
    <scope>IDENTIFICATION BY MASS SPECTROMETRY [LARGE SCALE ANALYSIS]</scope>
    <source>
        <tissue>Cervix carcinoma</tissue>
    </source>
</reference>
<reference key="42">
    <citation type="journal article" date="2006" name="J. Biol. Chem.">
        <title>Kinetic mechanism of AKT/PKB enzyme family.</title>
        <authorList>
            <person name="Zhang X."/>
            <person name="Zhang S."/>
            <person name="Yamane H."/>
            <person name="Wahl R."/>
            <person name="Ali A."/>
            <person name="Lofgren J.A."/>
            <person name="Kendall R.L."/>
        </authorList>
    </citation>
    <scope>BIOPHYSICOCHEMICAL PROPERTIES</scope>
</reference>
<reference key="43">
    <citation type="journal article" date="2006" name="Mol. Cell. Biol.">
        <title>Only Akt1 is required for proliferation, while Akt2 promotes cell cycle exit through p21 binding.</title>
        <authorList>
            <person name="Heron-Milhavet L."/>
            <person name="Franckhauser C."/>
            <person name="Rana V."/>
            <person name="Berthenet C."/>
            <person name="Fisher D."/>
            <person name="Hemmings B.A."/>
            <person name="Fernandez A."/>
            <person name="Lamb N.J."/>
        </authorList>
    </citation>
    <scope>FUNCTION IN PHOSPHORYLATION OF CDKN1A</scope>
</reference>
<reference key="44">
    <citation type="journal article" date="2007" name="EMBO J.">
        <title>The pro-apoptotic kinase Mst1 and its caspase cleavage products are direct inhibitors of Akt1.</title>
        <authorList>
            <person name="Cinar B."/>
            <person name="Fang P.K."/>
            <person name="Lutchman M."/>
            <person name="Di Vizio D."/>
            <person name="Adam R.M."/>
            <person name="Pavlova N."/>
            <person name="Rubin M.A."/>
            <person name="Yelick P.C."/>
            <person name="Freeman M.R."/>
        </authorList>
    </citation>
    <scope>INTERACTION WITH STK4/MST1</scope>
    <scope>SUBCELLULAR LOCATION</scope>
    <scope>TISSUE SPECIFICITY</scope>
</reference>
<reference key="45">
    <citation type="journal article" date="2007" name="J. Biol. Chem.">
        <title>Akt phosphorylates MstI and prevents its proteolytic activation, blocking FOXO3 phosphorylation and nuclear translocation.</title>
        <authorList>
            <person name="Jang S.W."/>
            <person name="Yang S.J."/>
            <person name="Srinivasan S."/>
            <person name="Ye K."/>
        </authorList>
    </citation>
    <scope>FUNCTION</scope>
    <scope>INTERACTION WITH STK4/MST1</scope>
</reference>
<reference key="46">
    <citation type="journal article" date="2008" name="Anticancer Res.">
        <title>Characterization of Akt overexpression in MiaPaCa-2 cells: prohibitin is an Akt substrate both in vitro and in cells.</title>
        <authorList>
            <person name="Han E.K."/>
            <person name="Mcgonigal T."/>
            <person name="Butler C."/>
            <person name="Giranda V.L."/>
            <person name="Luo Y."/>
        </authorList>
    </citation>
    <scope>FUNCTION IN PHOSPHORYLATION OF PROHIBITIN</scope>
</reference>
<reference key="47">
    <citation type="journal article" date="2008" name="Proc. Natl. Acad. Sci. U.S.A.">
        <title>A quantitative atlas of mitotic phosphorylation.</title>
        <authorList>
            <person name="Dephoure N."/>
            <person name="Zhou C."/>
            <person name="Villen J."/>
            <person name="Beausoleil S.A."/>
            <person name="Bakalarski C.E."/>
            <person name="Elledge S.J."/>
            <person name="Gygi S.P."/>
        </authorList>
    </citation>
    <scope>PHOSPHORYLATION [LARGE SCALE ANALYSIS] AT SER-124; SER-126 AND SER-129</scope>
    <scope>IDENTIFICATION BY MASS SPECTROMETRY [LARGE SCALE ANALYSIS]</scope>
    <source>
        <tissue>Cervix carcinoma</tissue>
    </source>
</reference>
<reference key="48">
    <citation type="journal article" date="2009" name="Dev. Cell">
        <title>The E3 ligase TTC3 facilitates ubiquitination and degradation of phosphorylated Akt.</title>
        <authorList>
            <person name="Suizu F."/>
            <person name="Hiramuki Y."/>
            <person name="Okumura F."/>
            <person name="Matsuda M."/>
            <person name="Okumura A.J."/>
            <person name="Hirata N."/>
            <person name="Narita M."/>
            <person name="Kohno T."/>
            <person name="Yokota J."/>
            <person name="Bohgaki M."/>
            <person name="Obuse C."/>
            <person name="Hatakeyama S."/>
            <person name="Obata T."/>
            <person name="Noguchi M."/>
        </authorList>
    </citation>
    <scope>UBIQUITINATION BY TTC3</scope>
</reference>
<reference key="49">
    <citation type="journal article" date="2009" name="J. Biol. Chem.">
        <title>Interaction of Akt-phosphorylated SRPK2 with 14-3-3 mediates cell cycle and cell death in neurons.</title>
        <authorList>
            <person name="Jang S.W."/>
            <person name="Liu X."/>
            <person name="Fu H."/>
            <person name="Rees H."/>
            <person name="Yepes M."/>
            <person name="Levey A."/>
            <person name="Ye K."/>
        </authorList>
    </citation>
    <scope>FUNCTION IN PHOSPHORYLATION OF SRPK2</scope>
    <scope>INTERACTION WITH SRPK2</scope>
</reference>
<reference key="50">
    <citation type="journal article" date="2009" name="J. Cell Sci.">
        <title>The Rho-family GEF Asef2 activates Rac to modulate adhesion and actin dynamics and thereby regulate cell migration.</title>
        <authorList>
            <person name="Bristow J.M."/>
            <person name="Sellers M.H."/>
            <person name="Majumdar D."/>
            <person name="Anderson B."/>
            <person name="Hu L."/>
            <person name="Webb D.J."/>
        </authorList>
    </citation>
    <scope>FUNCTION</scope>
</reference>
<reference key="51">
    <citation type="journal article" date="2009" name="Science">
        <title>The E3 ligase TRAF6 regulates Akt ubiquitination and activation.</title>
        <authorList>
            <person name="Yang W.-L."/>
            <person name="Wang J."/>
            <person name="Chan C.-H."/>
            <person name="Lee S.-W."/>
            <person name="Campos A.D."/>
            <person name="Lamothe B."/>
            <person name="Hur L."/>
            <person name="Grabiner B.C."/>
            <person name="Lin X."/>
            <person name="Darnay B.G."/>
            <person name="Lin H.-K."/>
        </authorList>
    </citation>
    <scope>UBIQUITINATION</scope>
    <scope>INTERACTION WITH TRAF6</scope>
    <scope>MUTAGENESIS OF LYS-8 AND LYS-14</scope>
    <scope>CHARACTERIZATION OF VARIANT BREAST CANCER LYS-17</scope>
</reference>
<reference key="52">
    <citation type="journal article" date="2010" name="Cancer Res.">
        <title>Proapoptotic kinase MST2 coordinates signaling crosstalk between RASSF1A, Raf-1, and Akt.</title>
        <authorList>
            <person name="Romano D."/>
            <person name="Matallanas D."/>
            <person name="Weitsman G."/>
            <person name="Preisinger C."/>
            <person name="Ng T."/>
            <person name="Kolch W."/>
        </authorList>
    </citation>
    <scope>FUNCTION</scope>
    <scope>INTERACTION WITH STK3/MST2</scope>
</reference>
<reference key="53">
    <citation type="journal article" date="2010" name="J. Biol. Chem.">
        <title>Phosphoinositide 3-kinase/Akt inhibits MST1-mediated pro-apoptotic signaling through phosphorylation of threonine 120.</title>
        <authorList>
            <person name="Yuan Z."/>
            <person name="Kim D."/>
            <person name="Shu S."/>
            <person name="Wu J."/>
            <person name="Guo J."/>
            <person name="Xiao L."/>
            <person name="Kaneko S."/>
            <person name="Coppola D."/>
            <person name="Cheng J.Q."/>
        </authorList>
    </citation>
    <scope>RETRACTED PAPER</scope>
</reference>
<reference key="54">
    <citation type="journal article" date="2016" name="J. Biol. Chem.">
        <authorList>
            <person name="Yuan Z."/>
            <person name="Kim D."/>
            <person name="Shu S."/>
            <person name="Wu J."/>
            <person name="Guo J."/>
            <person name="Xiao L."/>
            <person name="Kaneko S."/>
            <person name="Coppola D."/>
            <person name="Cheng J.Q."/>
        </authorList>
    </citation>
    <scope>RETRACTION NOTICE OF PUBMED:19940129</scope>
</reference>
<reference key="55">
    <citation type="journal article" date="2010" name="J. Biol. Chem.">
        <title>Phosphorylation of CLK2 at serine 34 and threonine 127 by AKT controls cell survival after ionizing radiation.</title>
        <authorList>
            <person name="Nam S.Y."/>
            <person name="Seo H.H."/>
            <person name="Park H.S."/>
            <person name="An S."/>
            <person name="Kim J.Y."/>
            <person name="Yang K.H."/>
            <person name="Kim C.S."/>
            <person name="Jeong M."/>
            <person name="Jin Y.W."/>
        </authorList>
    </citation>
    <scope>FUNCTION</scope>
    <scope>INTERACTION WITH CLK2</scope>
</reference>
<reference key="56">
    <citation type="journal article" date="2010" name="Mol. Cell">
        <title>The actin-bundling protein palladin is an Akt1-specific substrate that regulates breast cancer cell migration.</title>
        <authorList>
            <person name="Chin Y.R."/>
            <person name="Toker A."/>
        </authorList>
    </citation>
    <scope>FUNCTION IN PHOSPHORYLATION OF PALLD</scope>
</reference>
<reference key="57">
    <citation type="journal article" date="2010" name="PLoS ONE">
        <title>Regulation of proapoptotic mammalian ste20-like kinase MST2 by the IGF1-Akt pathway.</title>
        <authorList>
            <person name="Kim D."/>
            <person name="Shu S."/>
            <person name="Coppola M.D."/>
            <person name="Kaneko S."/>
            <person name="Yuan Z.Q."/>
            <person name="Cheng J.Q."/>
        </authorList>
    </citation>
    <scope>RETRACTED PAPER</scope>
</reference>
<reference key="58">
    <citation type="journal article" date="2023" name="PLoS ONE">
        <title>Retraction: Regulation of Proapoptotic Mammalian ste20-Like Kinase MST2 by the IGF1-Akt Pathway.</title>
        <authorList>
            <consortium name="PLOS ONE Editors"/>
        </authorList>
    </citation>
    <scope>CAUTION</scope>
    <scope>RETRACTION NOTICE OF PUBMED:20231902</scope>
</reference>
<reference key="59">
    <citation type="journal article" date="2010" name="PLoS ONE">
        <title>Ack1 mediated AKT/PKB tyrosine 176 phosphorylation regulates its activation.</title>
        <authorList>
            <person name="Mahajan K."/>
            <person name="Coppola D."/>
            <person name="Challa S."/>
            <person name="Fang B."/>
            <person name="Chen Y.A."/>
            <person name="Zhu W."/>
            <person name="Lopez A.S."/>
            <person name="Koomen J."/>
            <person name="Engelman R.W."/>
            <person name="Rivera C."/>
            <person name="Muraoka-Cook R.S."/>
            <person name="Cheng J.Q."/>
            <person name="Schoenbrunn E."/>
            <person name="Sebti S.M."/>
            <person name="Earp H.S."/>
            <person name="Mahajan N.P."/>
        </authorList>
    </citation>
    <scope>FUNCTION</scope>
    <scope>SUBCELLULAR LOCATION</scope>
    <scope>PHOSPHORYLATION AT TYR-176; THR-308 AND SER-473</scope>
    <scope>MUTAGENESIS OF TYR-176</scope>
    <scope>INTERACTION WITH TNK2</scope>
    <scope>TISSUE SPECIFICITY</scope>
</reference>
<reference key="60">
    <citation type="journal article" date="2011" name="BMC Syst. Biol.">
        <title>Initial characterization of the human central proteome.</title>
        <authorList>
            <person name="Burkard T.R."/>
            <person name="Planyavsky M."/>
            <person name="Kaupe I."/>
            <person name="Breitwieser F.P."/>
            <person name="Buerckstuemmer T."/>
            <person name="Bennett K.L."/>
            <person name="Superti-Furga G."/>
            <person name="Colinge J."/>
        </authorList>
    </citation>
    <scope>IDENTIFICATION BY MASS SPECTROMETRY [LARGE SCALE ANALYSIS]</scope>
</reference>
<reference key="61">
    <citation type="journal article" date="2011" name="Eur. J. Cell Biol.">
        <title>Ret finger protein 2 enhances ionizing radiation-induced apoptosis via degradation of AKT and MDM2.</title>
        <authorList>
            <person name="Joo H.M."/>
            <person name="Kim J.Y."/>
            <person name="Jeong J.B."/>
            <person name="Seong K.M."/>
            <person name="Nam S.Y."/>
            <person name="Yang K.H."/>
            <person name="Kim C.S."/>
            <person name="Kim H.S."/>
            <person name="Jeong M."/>
            <person name="An S."/>
            <person name="Jin Y.W."/>
        </authorList>
    </citation>
    <scope>INTERACTION WITH TRIM13</scope>
    <scope>UBIQUITINATION</scope>
</reference>
<reference key="62">
    <citation type="journal article" date="2011" name="Mol. Cell">
        <title>Clk2 and B56-beta mediate insulin-regulated assembly of the PP2A phosphatase holoenzyme complex on Akt.</title>
        <authorList>
            <person name="Rodgers J.T."/>
            <person name="Vogel R.O."/>
            <person name="Puigserver P."/>
        </authorList>
    </citation>
    <scope>INTERACTION WITH PPP2R5B</scope>
    <scope>DEPHOSPHORYLATION</scope>
</reference>
<reference key="63">
    <citation type="journal article" date="2012" name="PLoS ONE">
        <title>Microarray-assisted pathway analysis identifies MT1X &amp; NFkappaB as mediators of TCRP1-associated resistance to cisplatin in oral squamous cell carcinoma.</title>
        <authorList>
            <person name="Peng B."/>
            <person name="Gu Y."/>
            <person name="Xiong Y."/>
            <person name="Zheng G."/>
            <person name="He Z."/>
        </authorList>
    </citation>
    <scope>INTERACTION WITH FAM168A</scope>
</reference>
<reference key="64">
    <citation type="journal article" date="2012" name="PLoS ONE">
        <title>OGDHL is a modifier of AKT-dependent signaling and NF-kappaB function.</title>
        <authorList>
            <person name="Sen T."/>
            <person name="Sen N."/>
            <person name="Noordhuis M.G."/>
            <person name="Ravi R."/>
            <person name="Wu T.C."/>
            <person name="Ha P.K."/>
            <person name="Sidransky D."/>
            <person name="Hoque M.O."/>
        </authorList>
    </citation>
    <scope>PROTEOLYTIC CLEAVAGE</scope>
</reference>
<reference key="65">
    <citation type="journal article" date="2013" name="J. Proteome Res.">
        <title>Toward a comprehensive characterization of a human cancer cell phosphoproteome.</title>
        <authorList>
            <person name="Zhou H."/>
            <person name="Di Palma S."/>
            <person name="Preisinger C."/>
            <person name="Peng M."/>
            <person name="Polat A.N."/>
            <person name="Heck A.J."/>
            <person name="Mohammed S."/>
        </authorList>
    </citation>
    <scope>PHOSPHORYLATION [LARGE SCALE ANALYSIS] AT SER-129</scope>
    <scope>IDENTIFICATION BY MASS SPECTROMETRY [LARGE SCALE ANALYSIS]</scope>
    <source>
        <tissue>Cervix carcinoma</tissue>
        <tissue>Erythroleukemia</tissue>
    </source>
</reference>
<reference key="66">
    <citation type="journal article" date="2013" name="Oncotarget">
        <title>FAM83B-mediated activation of PI3K/AKT and MAPK signaling cooperates to promote epithelial cell transformation and resistance to targeted therapies.</title>
        <authorList>
            <person name="Cipriano R."/>
            <person name="Miskimen K.L."/>
            <person name="Bryson B.L."/>
            <person name="Foy C.R."/>
            <person name="Bartel C.A."/>
            <person name="Jackson M.W."/>
        </authorList>
    </citation>
    <scope>INTERACTION WITH FAM83B</scope>
</reference>
<reference key="67">
    <citation type="journal article" date="2004" name="Cell. Mol. Life Sci.">
        <title>Signal transduction via the stem cell factor receptor/c-Kit.</title>
        <authorList>
            <person name="Ronnstrand L."/>
        </authorList>
    </citation>
    <scope>REVIEW ON ROLE IN KIT SIGNALING</scope>
</reference>
<reference key="68">
    <citation type="journal article" date="2002" name="Cell. Signal.">
        <title>The protein kinase B/Akt signalling pathway in human malignancy.</title>
        <authorList>
            <person name="Nicholson K.M."/>
            <person name="Anderson N.G."/>
        </authorList>
    </citation>
    <scope>REVIEW ON FUNCTION</scope>
</reference>
<reference key="69">
    <citation type="journal article" date="2010" name="Mol. Cancer Ther.">
        <title>A novel human dynactin-associated protein, dynAP, promotes activation of Akt, and ergosterol-related compounds induce dynAP-dependent apoptosis of human cancer cells.</title>
        <authorList>
            <person name="Kunoh T."/>
            <person name="Noda T."/>
            <person name="Koseki K."/>
            <person name="Sekigawa M."/>
            <person name="Takagi M."/>
            <person name="Shin-ya K."/>
            <person name="Goshima N."/>
            <person name="Iemura S."/>
            <person name="Natsume T."/>
            <person name="Wada S."/>
            <person name="Mukai Y."/>
            <person name="Ohta S."/>
            <person name="Sasaki R."/>
            <person name="Mizukami T."/>
        </authorList>
    </citation>
    <scope>PHOSPHORYLATION AT SER-473</scope>
</reference>
<reference key="70">
    <citation type="journal article" date="2011" name="Cell. Signal.">
        <title>Akt signalling in health and disease.</title>
        <authorList>
            <person name="Hers I."/>
            <person name="Vincent E.E."/>
            <person name="Tavare J.M."/>
        </authorList>
    </citation>
    <scope>REVIEW ON FUNCTION</scope>
</reference>
<reference key="71">
    <citation type="journal article" date="2011" name="Histol. Histopathol.">
        <title>Akt1 and Akt2: differentiating the aktion.</title>
        <authorList>
            <person name="Heron-Milhavet L."/>
            <person name="Khouya N."/>
            <person name="Fernandez A."/>
            <person name="Lamb N.J."/>
        </authorList>
    </citation>
    <scope>REVIEW ON FUNCTION</scope>
</reference>
<reference key="72">
    <citation type="journal article" date="2011" name="Proc. Natl. Acad. Sci. U.S.A.">
        <title>IkappaB kinase epsilon and TANK-binding kinase 1 activate AKT by direct phosphorylation.</title>
        <authorList>
            <person name="Xie X."/>
            <person name="Zhang D."/>
            <person name="Zhao B."/>
            <person name="Lu M.K."/>
            <person name="You M."/>
            <person name="Condorelli G."/>
            <person name="Wang C.Y."/>
            <person name="Guan K.L."/>
        </authorList>
    </citation>
    <scope>PHOSPHORYLATION AT THR-308 AND SER-473</scope>
</reference>
<reference key="73">
    <citation type="journal article" date="2011" name="Sci. Signal.">
        <title>The deacetylase SIRT1 promotes membrane localization and activation of Akt and PDK1 during tumorigenesis and cardiac hypertrophy.</title>
        <authorList>
            <person name="Sundaresan N.R."/>
            <person name="Pillai V.B."/>
            <person name="Wolfgeher D."/>
            <person name="Samant S."/>
            <person name="Vasudevan P."/>
            <person name="Parekh V."/>
            <person name="Raghuraman H."/>
            <person name="Cunningham J.M."/>
            <person name="Gupta M."/>
            <person name="Gupta M.P."/>
        </authorList>
    </citation>
    <scope>INTERACTION WITH SIRT1</scope>
    <scope>ACETYLATION AT LYS-14 AND LYS-20</scope>
    <scope>DEACETYLATION AT LYS-14 AND LYS-20</scope>
    <scope>MUTAGENESIS OF LYS-14; GLU-17 AND LYS-20</scope>
</reference>
<reference key="74">
    <citation type="journal article" date="2012" name="Cell Res.">
        <title>Akt is negatively regulated by the MULAN E3 ligase.</title>
        <authorList>
            <person name="Bae S."/>
            <person name="Kim S.Y."/>
            <person name="Jung J.H."/>
            <person name="Yoon Y."/>
            <person name="Cha H.J."/>
            <person name="Lee H."/>
            <person name="Kim K."/>
            <person name="Kim J."/>
            <person name="An I.S."/>
            <person name="Kim J."/>
            <person name="Um H.D."/>
            <person name="Park I.C."/>
            <person name="Lee S.J."/>
            <person name="Nam S.Y."/>
            <person name="Jin Y.W."/>
            <person name="Lee J.H."/>
            <person name="An S."/>
        </authorList>
    </citation>
    <scope>UBIQUITINATION AT LYS-284</scope>
</reference>
<reference key="75">
    <citation type="journal article" date="2012" name="PLoS ONE">
        <title>Extensive crosstalk between O-GlcNAcylation and phosphorylation regulates Akt signaling.</title>
        <authorList>
            <person name="Wang S."/>
            <person name="Huang X."/>
            <person name="Sun D."/>
            <person name="Xin X."/>
            <person name="Pan Q."/>
            <person name="Peng S."/>
            <person name="Liang Z."/>
            <person name="Luo C."/>
            <person name="Yang Y."/>
            <person name="Jiang H."/>
            <person name="Huang M."/>
            <person name="Chai W."/>
            <person name="Ding J."/>
            <person name="Geng M."/>
        </authorList>
    </citation>
    <scope>GLYCOSYLATION AT SER-126; SER-129; THR-305 AND THR-312</scope>
    <scope>SUBCELLULAR LOCATION</scope>
    <scope>INTERACTION WITH PDPK1</scope>
    <scope>MUTAGENESIS OF THR-305 AND THR-312</scope>
</reference>
<reference key="76">
    <citation type="journal article" date="2013" name="PLoS ONE">
        <title>CSTP1, a novel protein phosphatase, blocks cell cycle, promotes cell apoptosis, and suppresses tumor growth of bladder cancer by directly dephosphorylating Akt at Ser473 site.</title>
        <authorList>
            <person name="Zhuo D.X."/>
            <person name="Zhang X.W."/>
            <person name="Jin B."/>
            <person name="Zhang Z."/>
            <person name="Xie B.S."/>
            <person name="Wu C.L."/>
            <person name="Gong K."/>
            <person name="Mao Z.B."/>
        </authorList>
    </citation>
    <scope>PHOSPHORYLATION AT SER-473</scope>
    <scope>DEPHOSPHORYLATION BY CPPED1</scope>
</reference>
<reference key="77">
    <citation type="journal article" date="2013" name="Proc. Natl. Acad. Sci. U.S.A.">
        <title>MOZ increases p53 acetylation and premature senescence through its complex formation with PML.</title>
        <authorList>
            <person name="Rokudai S."/>
            <person name="Laptenko O."/>
            <person name="Arnal S.M."/>
            <person name="Taya Y."/>
            <person name="Kitabayashi I."/>
            <person name="Prives C."/>
        </authorList>
    </citation>
    <scope>FUNCTION</scope>
</reference>
<reference key="78">
    <citation type="journal article" date="2013" name="Sci. Signal.">
        <title>BSTA promotes mTORC2-mediated phosphorylation of Akt1 to suppress expression of FoxC2 and stimulate adipocyte differentiation.</title>
        <authorList>
            <person name="Yao Y."/>
            <person name="Suraokar M."/>
            <person name="Darnay B.G."/>
            <person name="Hollier B.G."/>
            <person name="Shaiken T.E."/>
            <person name="Asano T."/>
            <person name="Chen C.H."/>
            <person name="Chang B.H."/>
            <person name="Lu Y."/>
            <person name="Mills G.B."/>
            <person name="Sarbassov D."/>
            <person name="Mani S.A."/>
            <person name="Abbruzzese J.L."/>
            <person name="Reddy S.A."/>
        </authorList>
    </citation>
    <scope>INTERACTION WITH SYAP1</scope>
</reference>
<reference key="79">
    <citation type="journal article" date="2014" name="J. Proteomics">
        <title>An enzyme assisted RP-RPLC approach for in-depth analysis of human liver phosphoproteome.</title>
        <authorList>
            <person name="Bian Y."/>
            <person name="Song C."/>
            <person name="Cheng K."/>
            <person name="Dong M."/>
            <person name="Wang F."/>
            <person name="Huang J."/>
            <person name="Sun D."/>
            <person name="Wang L."/>
            <person name="Ye M."/>
            <person name="Zou H."/>
        </authorList>
    </citation>
    <scope>PHOSPHORYLATION [LARGE SCALE ANALYSIS] AT THR-448 AND THR-450</scope>
    <scope>IDENTIFICATION BY MASS SPECTROMETRY [LARGE SCALE ANALYSIS]</scope>
    <source>
        <tissue>Liver</tissue>
    </source>
</reference>
<reference key="80">
    <citation type="journal article" date="2014" name="Nature">
        <title>Cell-cycle-regulated activation of Akt kinase by phosphorylation at its carboxyl terminus.</title>
        <authorList>
            <person name="Liu P."/>
            <person name="Begley M."/>
            <person name="Michowski W."/>
            <person name="Inuzuka H."/>
            <person name="Ginzberg M."/>
            <person name="Gao D."/>
            <person name="Tsou P."/>
            <person name="Gan W."/>
            <person name="Papa A."/>
            <person name="Kim B.M."/>
            <person name="Wan L."/>
            <person name="Singh A."/>
            <person name="Zhai B."/>
            <person name="Yuan M."/>
            <person name="Wang Z."/>
            <person name="Gygi S.P."/>
            <person name="Lee T.H."/>
            <person name="Lu K.P."/>
            <person name="Toker A."/>
            <person name="Pandolfi P.P."/>
            <person name="Asara J.M."/>
            <person name="Kirschner M.W."/>
            <person name="Sicinski P."/>
            <person name="Cantley L."/>
            <person name="Wei W."/>
        </authorList>
    </citation>
    <scope>PHOSPHORYLATION AT SER-477 AND THR-479</scope>
    <scope>MUTAGENESIS OF 76-ARG--LEU-78 AND 273-ARG--LEU-275</scope>
</reference>
<reference key="81">
    <citation type="journal article" date="2015" name="Cell Rep.">
        <title>Akt kinase-mediated checkpoint of cGAS DNA sensing pathway.</title>
        <authorList>
            <person name="Seo G.J."/>
            <person name="Yang A."/>
            <person name="Tan B."/>
            <person name="Kim S."/>
            <person name="Liang Q."/>
            <person name="Choi Y."/>
            <person name="Yuan W."/>
            <person name="Feng P."/>
            <person name="Park H.S."/>
            <person name="Jung J.U."/>
        </authorList>
    </citation>
    <scope>FUNCTION</scope>
    <scope>CATALYTIC ACTIVITY</scope>
</reference>
<reference key="82">
    <citation type="journal article" date="2014" name="Neoplasia">
        <title>KIF14 promotes AKT phosphorylation and contributes to chemoresistance in triple-negative breast cancer.</title>
        <authorList>
            <person name="Singel S.M."/>
            <person name="Cornelius C."/>
            <person name="Zaganjor E."/>
            <person name="Batten K."/>
            <person name="Sarode V.R."/>
            <person name="Buckley D.L."/>
            <person name="Peng Y."/>
            <person name="John G.B."/>
            <person name="Li H.C."/>
            <person name="Sadeghi N."/>
            <person name="Wright W.E."/>
            <person name="Lum L."/>
            <person name="Corson T.W."/>
            <person name="Shay J.W."/>
        </authorList>
    </citation>
    <scope>INTERACTION WITH KIF14</scope>
</reference>
<reference key="83">
    <citation type="journal article" date="2017" name="Cell Rep.">
        <title>Regulation of serine-threonine kinase Akt activation by NAD+-dependent deacetylase SIRT7.</title>
        <authorList>
            <person name="Yu J."/>
            <person name="Qin B."/>
            <person name="Wu F."/>
            <person name="Qin S."/>
            <person name="Nowsheen S."/>
            <person name="Shan S."/>
            <person name="Zayas J."/>
            <person name="Pei H."/>
            <person name="Lou Z."/>
            <person name="Wang L."/>
        </authorList>
    </citation>
    <scope>PHOSPHORYLATION AT SER-473</scope>
    <scope>DEPHOSPHORYLATION</scope>
    <scope>INTERACTION WITH PHLPP1 AND FKBP5</scope>
</reference>
<reference key="84">
    <citation type="journal article" date="2018" name="Proc. Natl. Acad. Sci. U.S.A.">
        <title>Degradation of FBXO31 by APC/C is regulated by AKT- and ATM-mediated phosphorylation.</title>
        <authorList>
            <person name="Choppara S."/>
            <person name="Malonia S.K."/>
            <person name="Sankaran G."/>
            <person name="Green M.R."/>
            <person name="Santra M.K."/>
        </authorList>
    </citation>
    <scope>FUNCTION</scope>
    <scope>CATALYTIC ACTIVITY</scope>
</reference>
<reference key="85">
    <citation type="journal article" date="2019" name="EMBO J.">
        <title>Akt-mediated phosphorylation of MICU1 regulates mitochondrial Ca2+ levels and tumor growth.</title>
        <authorList>
            <person name="Marchi S."/>
            <person name="Corricelli M."/>
            <person name="Branchini A."/>
            <person name="Vitto V.A.M."/>
            <person name="Missiroli S."/>
            <person name="Morciano G."/>
            <person name="Perrone M."/>
            <person name="Ferrarese M."/>
            <person name="Giorgi C."/>
            <person name="Pinotti M."/>
            <person name="Galluzzi L."/>
            <person name="Kroemer G."/>
            <person name="Pinton P."/>
        </authorList>
    </citation>
    <scope>FUNCTION</scope>
</reference>
<reference key="86">
    <citation type="journal article" date="2019" name="Dev. Cell">
        <title>Akt Regulates a Rab11-Effector Switch Required for Ciliogenesis.</title>
        <authorList>
            <person name="Walia V."/>
            <person name="Cuenca A."/>
            <person name="Vetter M."/>
            <person name="Insinna C."/>
            <person name="Perera S."/>
            <person name="Lu Q."/>
            <person name="Ritt D.A."/>
            <person name="Semler E."/>
            <person name="Specht S."/>
            <person name="Stauffer J."/>
            <person name="Morrison D.K."/>
            <person name="Lorentzen E."/>
            <person name="Westlake C.J."/>
        </authorList>
    </citation>
    <scope>FUNCTION</scope>
</reference>
<reference key="87">
    <citation type="journal article" date="2019" name="Proc. Natl. Acad. Sci. U.S.A.">
        <title>Phosphorylation of DEPDC5, a component of the GATOR1 complex, releases inhibition of mTORC1 and promotes tumor growth.</title>
        <authorList>
            <person name="Padi S.K.R."/>
            <person name="Singh N."/>
            <person name="Bearss J.J."/>
            <person name="Olive V."/>
            <person name="Song J.H."/>
            <person name="Cardo-Vila M."/>
            <person name="Kraft A.S."/>
            <person name="Okumura K."/>
        </authorList>
    </citation>
    <scope>FUNCTION</scope>
    <scope>CATALYTIC ACTIVITY</scope>
</reference>
<reference key="88">
    <citation type="journal article" date="2020" name="Nature">
        <title>The gluconeogenic enzyme PCK1 phosphorylates INSIG1/2 for lipogenesis.</title>
        <authorList>
            <person name="Xu D."/>
            <person name="Wang Z."/>
            <person name="Xia Y."/>
            <person name="Shao F."/>
            <person name="Xia W."/>
            <person name="Wei Y."/>
            <person name="Li X."/>
            <person name="Qian X."/>
            <person name="Lee J.H."/>
            <person name="Du L."/>
            <person name="Zheng Y."/>
            <person name="Lv G."/>
            <person name="Leu J.S."/>
            <person name="Wang H."/>
            <person name="Xing D."/>
            <person name="Liang T."/>
            <person name="Hung M.C."/>
            <person name="Lu Z."/>
        </authorList>
    </citation>
    <scope>FUNCTION</scope>
    <scope>CATALYTIC ACTIVITY</scope>
</reference>
<reference key="89">
    <citation type="journal article" date="2020" name="Elife">
        <title>Gating and selectivity mechanisms for the lysosomal K+ channel TMEM175.</title>
        <authorList>
            <person name="Oh S."/>
            <person name="Paknejad N."/>
            <person name="Hite R.K."/>
        </authorList>
    </citation>
    <scope>INTERACTION WITH TMEM175</scope>
    <scope>FUNCTION</scope>
</reference>
<reference key="90">
    <citation type="journal article" date="2021" name="Nat. Commun.">
        <title>RNF167 activates mTORC1 and promotes tumorigenesis by targeting CASTOR1 for ubiquitination and degradation.</title>
        <authorList>
            <person name="Li T."/>
            <person name="Wang X."/>
            <person name="Ju E."/>
            <person name="da Silva S.R."/>
            <person name="Chen L."/>
            <person name="Zhang X."/>
            <person name="Wei S."/>
            <person name="Gao S.J."/>
        </authorList>
    </citation>
    <scope>FUNCTION</scope>
    <scope>CATALYTIC ACTIVITY</scope>
    <scope>MUTAGENESIS OF LYS-179</scope>
</reference>
<reference key="91">
    <citation type="journal article" date="2002" name="Curr. Biol.">
        <title>High-resolution structure of the pleckstrin homology domain of protein kinase b/akt bound to phosphatidylinositol (3,4,5)-trisphosphate.</title>
        <authorList>
            <person name="Thomas C.C."/>
            <person name="Deak M."/>
            <person name="Alessi D.R."/>
            <person name="van Aalten D.M."/>
        </authorList>
    </citation>
    <scope>X-RAY CRYSTALLOGRAPHY (1.4 ANGSTROMS) OF 1-123</scope>
    <scope>FUNCTION</scope>
    <scope>INTERACTION WITH PTDINS(3,4,5)P3 AND PTDINS(3,4)P2</scope>
    <scope>MUTAGENESIS OF LYS-14; ARG-25 AND ARG-86</scope>
    <scope>CHARACTERIZATION OF VARIANT CWS6 CYS-25</scope>
</reference>
<reference key="92">
    <citation type="journal article" date="2003" name="Biochem. J.">
        <title>Binding of phosphatidylinositol 3,4,5-trisphosphate to the pleckstrin homology domain of protein kinase B induces a conformational change.</title>
        <authorList>
            <person name="Milburn C.C."/>
            <person name="Deak M."/>
            <person name="Kelly S.M."/>
            <person name="Price N.C."/>
            <person name="Alessi D.R."/>
            <person name="Van Aalten D.M."/>
        </authorList>
    </citation>
    <scope>X-RAY CRYSTALLOGRAPHY (0.98 ANGSTROMS) OF 1-121</scope>
    <scope>FUNCTION</scope>
    <scope>INTERACTION WITH PTDINS(1,3,4,5)P4</scope>
</reference>
<reference evidence="100 101" key="93">
    <citation type="journal article" date="2008" name="Bioorg. Med. Chem. Lett.">
        <title>Synthesis and structure based optimization of novel Akt inhibitors.</title>
        <authorList>
            <person name="Lippa B."/>
            <person name="Pan G."/>
            <person name="Corbett M."/>
            <person name="Li C."/>
            <person name="Kauffman G.S."/>
            <person name="Pandit J."/>
            <person name="Robinson S."/>
            <person name="Wei L."/>
            <person name="Kozina E."/>
            <person name="Marr E.S."/>
            <person name="Borzillo G."/>
            <person name="Knauth E."/>
            <person name="Barbacci-Tobin E.G."/>
            <person name="Vincent P."/>
            <person name="Troutman M."/>
            <person name="Baker D."/>
            <person name="Rajamohan F."/>
            <person name="Kakar S."/>
            <person name="Clark T."/>
            <person name="Morris J."/>
        </authorList>
    </citation>
    <scope>X-RAY CRYSTALLOGRAPHY (2.2 ANGSTROMS) OF 144-480</scope>
    <scope>PHOSPHORYLATION AT THR-308</scope>
    <scope>ACTIVITY REGULATION</scope>
</reference>
<reference evidence="105" key="94">
    <citation type="journal article" date="2010" name="Bioorg. Med. Chem. Lett.">
        <title>Discovery of pyrrolopyrimidine inhibitors of Akt.</title>
        <authorList>
            <person name="Blake J.F."/>
            <person name="Kallan N.C."/>
            <person name="Xiao D."/>
            <person name="Xu R."/>
            <person name="Bencsik J.R."/>
            <person name="Skelton N.J."/>
            <person name="Spencer K.L."/>
            <person name="Mitchell I.S."/>
            <person name="Woessner R.D."/>
            <person name="Gloor S.L."/>
            <person name="Risom T."/>
            <person name="Gross S.D."/>
            <person name="Martinson M."/>
            <person name="Morales T.H."/>
            <person name="Vigers G.P."/>
            <person name="Brandhuber B.J."/>
        </authorList>
    </citation>
    <scope>X-RAY CRYSTALLOGRAPHY (2.6 ANGSTROMS) OF 144-480</scope>
    <scope>ACTIVITY REGULATION</scope>
</reference>
<reference evidence="102 103" key="95">
    <citation type="journal article" date="2010" name="J. Med. Chem.">
        <title>Design of selective, ATP-competitive inhibitors of Akt.</title>
        <authorList>
            <person name="Freeman-Cook K.D."/>
            <person name="Autry C."/>
            <person name="Borzillo G."/>
            <person name="Gordon D."/>
            <person name="Barbacci-Tobin E."/>
            <person name="Bernardo V."/>
            <person name="Briere D."/>
            <person name="Clark T."/>
            <person name="Corbett M."/>
            <person name="Jakubczak J."/>
            <person name="Kakar S."/>
            <person name="Knauth E."/>
            <person name="Lippa B."/>
            <person name="Luzzio M.J."/>
            <person name="Mansour M."/>
            <person name="Martinelli G."/>
            <person name="Marx M."/>
            <person name="Nelson K."/>
            <person name="Pandit J."/>
            <person name="Rajamohan F."/>
            <person name="Robinson S."/>
            <person name="Subramanyam C."/>
            <person name="Wei L."/>
            <person name="Wythes M."/>
            <person name="Morris J."/>
        </authorList>
    </citation>
    <scope>X-RAY CRYSTALLOGRAPHY (2.01 ANGSTROMS) OF 144-480</scope>
    <scope>PHOSPHORYLATION AT THR-308</scope>
    <scope>ACTIVITY REGULATION</scope>
</reference>
<reference evidence="104" key="96">
    <citation type="journal article" date="2010" name="PLoS ONE">
        <title>Crystal structure of human AKT1 with an allosteric inhibitor reveals a new mode of kinase inhibition.</title>
        <authorList>
            <person name="Wu W.I."/>
            <person name="Voegtli W.C."/>
            <person name="Sturgis H.L."/>
            <person name="Dizon F.P."/>
            <person name="Vigers G.P."/>
            <person name="Brandhuber B.J."/>
        </authorList>
    </citation>
    <scope>X-RAY CRYSTALLOGRAPHY (2.7 ANGSTROMS) OF 2-443</scope>
    <scope>DISULFIDE BOND</scope>
</reference>
<reference evidence="106 107" key="97">
    <citation type="journal article" date="2011" name="Bioorg. Med. Chem. Lett.">
        <title>Discovery and SAR of spirochromane Akt inhibitors.</title>
        <authorList>
            <person name="Kallan N.C."/>
            <person name="Spencer K.L."/>
            <person name="Blake J.F."/>
            <person name="Xu R."/>
            <person name="Heizer J."/>
            <person name="Bencsik J.R."/>
            <person name="Mitchell I.S."/>
            <person name="Gloor S.L."/>
            <person name="Martinson M."/>
            <person name="Risom T."/>
            <person name="Gross S.D."/>
            <person name="Morales T.H."/>
            <person name="Wu W.I."/>
            <person name="Vigers G.P."/>
            <person name="Brandhuber B.J."/>
            <person name="Skelton N.J."/>
        </authorList>
    </citation>
    <scope>X-RAY CRYSTALLOGRAPHY (1.9 ANGSTROMS) OF 144-480</scope>
    <scope>ACTIVITY REGULATION</scope>
</reference>
<reference key="98">
    <citation type="journal article" date="2007" name="Nature">
        <title>A transforming mutation in the pleckstrin homology domain of AKT1 in cancer.</title>
        <authorList>
            <person name="Carpten J.D."/>
            <person name="Faber A.L."/>
            <person name="Horn C."/>
            <person name="Donoho G.P."/>
            <person name="Briggs S.L."/>
            <person name="Robbins C.M."/>
            <person name="Hostetter G."/>
            <person name="Boguslawski S."/>
            <person name="Moses T.Y."/>
            <person name="Savage S."/>
            <person name="Uhlik M."/>
            <person name="Lin A."/>
            <person name="Du J."/>
            <person name="Qian Y.-W."/>
            <person name="Zeckner D.J."/>
            <person name="Tucker-Kellogg G."/>
            <person name="Touchman J."/>
            <person name="Patel K."/>
            <person name="Mousses S."/>
            <person name="Bittner M."/>
            <person name="Schevitz R."/>
            <person name="Lai M.-H.T."/>
            <person name="Blanchard K.L."/>
            <person name="Thomas J.E."/>
        </authorList>
    </citation>
    <scope>VARIANT BREAST CANCER LYS-17</scope>
    <scope>CHARACTERIZATION OF VARIANT BREAST CANCER LYS-17</scope>
</reference>
<reference key="99">
    <citation type="journal article" date="2008" name="Biochemistry">
        <title>Molecular mechanism of an oncogenic mutation that alters membrane targeting: Glu17Lys modifies the PIP lipid specificity of the AKT1 PH domain.</title>
        <authorList>
            <person name="Landgraf K.E."/>
            <person name="Pilling C."/>
            <person name="Falke J.J."/>
        </authorList>
    </citation>
    <scope>CHARACTERIZATION OF VARIANT PROTEUSS LYS-17</scope>
</reference>
<reference key="100">
    <citation type="journal article" date="2011" name="N. Engl. J. Med.">
        <title>A mosaic activating mutation in AKT1 associated with the Proteus syndrome.</title>
        <authorList>
            <person name="Lindhurst M.J."/>
            <person name="Sapp J.C."/>
            <person name="Teer J.K."/>
            <person name="Johnston J.J."/>
            <person name="Finn E.M."/>
            <person name="Peters K."/>
            <person name="Turner J."/>
            <person name="Cannons J.L."/>
            <person name="Bick D."/>
            <person name="Blakemore L."/>
            <person name="Blumhorst C."/>
            <person name="Brockmann K."/>
            <person name="Calder P."/>
            <person name="Cherman N."/>
            <person name="Deardorff M.A."/>
            <person name="Everman D.B."/>
            <person name="Golas G."/>
            <person name="Greenstein R.M."/>
            <person name="Kato B.M."/>
            <person name="Keppler-Noreuil K.M."/>
            <person name="Kuznetsov S.A."/>
            <person name="Miyamoto R.T."/>
            <person name="Newman K."/>
            <person name="Ng D."/>
            <person name="O'Brien K."/>
            <person name="Rothenberg S."/>
            <person name="Schwartzentruber D.J."/>
            <person name="Singhal V."/>
            <person name="Tirabosco R."/>
            <person name="Upton J."/>
            <person name="Wientroub S."/>
            <person name="Zackai E.H."/>
            <person name="Hoag K."/>
            <person name="Whitewood-Neal T."/>
            <person name="Robey P.G."/>
            <person name="Schwartzberg P.L."/>
            <person name="Darling T.N."/>
            <person name="Tosi L.L."/>
            <person name="Mullikin J.C."/>
            <person name="Biesecker L.G."/>
        </authorList>
    </citation>
    <scope>VARIANT PROTEUSS LYS-17</scope>
</reference>
<reference key="101">
    <citation type="journal article" date="2013" name="Am. J. Hum. Genet.">
        <title>Germline PIK3CA and AKT1 mutations in Cowden and Cowden-like syndromes.</title>
        <authorList>
            <person name="Orloff M.S."/>
            <person name="He X."/>
            <person name="Peterson C."/>
            <person name="Chen F."/>
            <person name="Chen J.L."/>
            <person name="Mester J.L."/>
            <person name="Eng C."/>
        </authorList>
    </citation>
    <scope>VARIANTS CWS6 CYS-25 AND PRO-435</scope>
</reference>
<dbReference type="EC" id="2.7.11.1" evidence="21 31 78 83 84"/>
<dbReference type="EMBL" id="M63167">
    <property type="protein sequence ID" value="AAA36539.1"/>
    <property type="molecule type" value="mRNA"/>
</dbReference>
<dbReference type="EMBL" id="AF283830">
    <property type="protein sequence ID" value="AAL55732.1"/>
    <property type="molecule type" value="Genomic_DNA"/>
</dbReference>
<dbReference type="EMBL" id="AF283819">
    <property type="protein sequence ID" value="AAL55732.1"/>
    <property type="status" value="JOINED"/>
    <property type="molecule type" value="Genomic_DNA"/>
</dbReference>
<dbReference type="EMBL" id="AF283820">
    <property type="protein sequence ID" value="AAL55732.1"/>
    <property type="status" value="JOINED"/>
    <property type="molecule type" value="Genomic_DNA"/>
</dbReference>
<dbReference type="EMBL" id="AF283821">
    <property type="protein sequence ID" value="AAL55732.1"/>
    <property type="status" value="JOINED"/>
    <property type="molecule type" value="Genomic_DNA"/>
</dbReference>
<dbReference type="EMBL" id="AF283822">
    <property type="protein sequence ID" value="AAL55732.1"/>
    <property type="status" value="JOINED"/>
    <property type="molecule type" value="Genomic_DNA"/>
</dbReference>
<dbReference type="EMBL" id="AF283823">
    <property type="protein sequence ID" value="AAL55732.1"/>
    <property type="status" value="JOINED"/>
    <property type="molecule type" value="Genomic_DNA"/>
</dbReference>
<dbReference type="EMBL" id="AF283824">
    <property type="protein sequence ID" value="AAL55732.1"/>
    <property type="status" value="JOINED"/>
    <property type="molecule type" value="Genomic_DNA"/>
</dbReference>
<dbReference type="EMBL" id="AF283825">
    <property type="protein sequence ID" value="AAL55732.1"/>
    <property type="status" value="JOINED"/>
    <property type="molecule type" value="Genomic_DNA"/>
</dbReference>
<dbReference type="EMBL" id="AF283826">
    <property type="protein sequence ID" value="AAL55732.1"/>
    <property type="status" value="JOINED"/>
    <property type="molecule type" value="Genomic_DNA"/>
</dbReference>
<dbReference type="EMBL" id="AF283827">
    <property type="protein sequence ID" value="AAL55732.1"/>
    <property type="status" value="JOINED"/>
    <property type="molecule type" value="Genomic_DNA"/>
</dbReference>
<dbReference type="EMBL" id="AF283828">
    <property type="protein sequence ID" value="AAL55732.1"/>
    <property type="status" value="JOINED"/>
    <property type="molecule type" value="Genomic_DNA"/>
</dbReference>
<dbReference type="EMBL" id="AF283829">
    <property type="protein sequence ID" value="AAL55732.1"/>
    <property type="status" value="JOINED"/>
    <property type="molecule type" value="Genomic_DNA"/>
</dbReference>
<dbReference type="EMBL" id="AK299310">
    <property type="protein sequence ID" value="BAH12997.1"/>
    <property type="molecule type" value="mRNA"/>
</dbReference>
<dbReference type="EMBL" id="AK314256">
    <property type="protein sequence ID" value="BAG36922.1"/>
    <property type="molecule type" value="mRNA"/>
</dbReference>
<dbReference type="EMBL" id="AB451242">
    <property type="protein sequence ID" value="BAG70056.1"/>
    <property type="molecule type" value="mRNA"/>
</dbReference>
<dbReference type="EMBL" id="AB451367">
    <property type="protein sequence ID" value="BAG70181.1"/>
    <property type="molecule type" value="mRNA"/>
</dbReference>
<dbReference type="EMBL" id="AL583722">
    <property type="status" value="NOT_ANNOTATED_CDS"/>
    <property type="molecule type" value="Genomic_DNA"/>
</dbReference>
<dbReference type="EMBL" id="AL590327">
    <property type="status" value="NOT_ANNOTATED_CDS"/>
    <property type="molecule type" value="Genomic_DNA"/>
</dbReference>
<dbReference type="EMBL" id="BC000479">
    <property type="protein sequence ID" value="AAH00479.1"/>
    <property type="molecule type" value="mRNA"/>
</dbReference>
<dbReference type="EMBL" id="BC084538">
    <property type="protein sequence ID" value="AAH84538.1"/>
    <property type="molecule type" value="mRNA"/>
</dbReference>
<dbReference type="EMBL" id="X61037">
    <property type="protein sequence ID" value="CAA43372.1"/>
    <property type="molecule type" value="mRNA"/>
</dbReference>
<dbReference type="CCDS" id="CCDS9994.1">
    <molecule id="P31749-1"/>
</dbReference>
<dbReference type="PIR" id="A39360">
    <property type="entry name" value="A39360"/>
</dbReference>
<dbReference type="RefSeq" id="NP_001014431.1">
    <molecule id="P31749-1"/>
    <property type="nucleotide sequence ID" value="NM_001014431.2"/>
</dbReference>
<dbReference type="RefSeq" id="NP_001014432.1">
    <molecule id="P31749-1"/>
    <property type="nucleotide sequence ID" value="NM_001014432.2"/>
</dbReference>
<dbReference type="RefSeq" id="NP_001369359.1">
    <molecule id="P31749-1"/>
    <property type="nucleotide sequence ID" value="NM_001382430.1"/>
</dbReference>
<dbReference type="RefSeq" id="NP_001369360.1">
    <molecule id="P31749-1"/>
    <property type="nucleotide sequence ID" value="NM_001382431.1"/>
</dbReference>
<dbReference type="RefSeq" id="NP_001369361.1">
    <molecule id="P31749-1"/>
    <property type="nucleotide sequence ID" value="NM_001382432.1"/>
</dbReference>
<dbReference type="RefSeq" id="NP_001369362.1">
    <molecule id="P31749-1"/>
    <property type="nucleotide sequence ID" value="NM_001382433.1"/>
</dbReference>
<dbReference type="RefSeq" id="NP_005154.2">
    <molecule id="P31749-1"/>
    <property type="nucleotide sequence ID" value="NM_005163.2"/>
</dbReference>
<dbReference type="RefSeq" id="XP_005267458.1">
    <property type="nucleotide sequence ID" value="XM_005267401.1"/>
</dbReference>
<dbReference type="RefSeq" id="XP_047287025.1">
    <molecule id="P31749-1"/>
    <property type="nucleotide sequence ID" value="XM_047431069.1"/>
</dbReference>
<dbReference type="RefSeq" id="XP_047287026.1">
    <molecule id="P31749-1"/>
    <property type="nucleotide sequence ID" value="XM_047431070.1"/>
</dbReference>
<dbReference type="RefSeq" id="XP_047287027.1">
    <molecule id="P31749-1"/>
    <property type="nucleotide sequence ID" value="XM_047431071.1"/>
</dbReference>
<dbReference type="RefSeq" id="XP_047287028.1">
    <molecule id="P31749-1"/>
    <property type="nucleotide sequence ID" value="XM_047431072.1"/>
</dbReference>
<dbReference type="RefSeq" id="XP_047287029.1">
    <molecule id="P31749-1"/>
    <property type="nucleotide sequence ID" value="XM_047431073.1"/>
</dbReference>
<dbReference type="RefSeq" id="XP_047287030.1">
    <molecule id="P31749-1"/>
    <property type="nucleotide sequence ID" value="XM_047431074.1"/>
</dbReference>
<dbReference type="RefSeq" id="XP_047287031.1">
    <molecule id="P31749-1"/>
    <property type="nucleotide sequence ID" value="XM_047431075.1"/>
</dbReference>
<dbReference type="RefSeq" id="XP_054231528.1">
    <molecule id="P31749-1"/>
    <property type="nucleotide sequence ID" value="XM_054375553.1"/>
</dbReference>
<dbReference type="RefSeq" id="XP_054231529.1">
    <molecule id="P31749-1"/>
    <property type="nucleotide sequence ID" value="XM_054375554.1"/>
</dbReference>
<dbReference type="RefSeq" id="XP_054231530.1">
    <molecule id="P31749-1"/>
    <property type="nucleotide sequence ID" value="XM_054375555.1"/>
</dbReference>
<dbReference type="RefSeq" id="XP_054231531.1">
    <molecule id="P31749-1"/>
    <property type="nucleotide sequence ID" value="XM_054375556.1"/>
</dbReference>
<dbReference type="RefSeq" id="XP_054231532.1">
    <molecule id="P31749-1"/>
    <property type="nucleotide sequence ID" value="XM_054375557.1"/>
</dbReference>
<dbReference type="RefSeq" id="XP_054231533.1">
    <molecule id="P31749-1"/>
    <property type="nucleotide sequence ID" value="XM_054375558.1"/>
</dbReference>
<dbReference type="PDB" id="1H10">
    <property type="method" value="X-ray"/>
    <property type="resolution" value="1.40 A"/>
    <property type="chains" value="A=1-123"/>
</dbReference>
<dbReference type="PDB" id="1UNP">
    <property type="method" value="X-ray"/>
    <property type="resolution" value="1.65 A"/>
    <property type="chains" value="A=1-121"/>
</dbReference>
<dbReference type="PDB" id="1UNQ">
    <property type="method" value="X-ray"/>
    <property type="resolution" value="0.98 A"/>
    <property type="chains" value="A=1-123"/>
</dbReference>
<dbReference type="PDB" id="1UNR">
    <property type="method" value="X-ray"/>
    <property type="resolution" value="1.25 A"/>
    <property type="chains" value="A=1-123"/>
</dbReference>
<dbReference type="PDB" id="2UVM">
    <property type="method" value="X-ray"/>
    <property type="resolution" value="1.94 A"/>
    <property type="chains" value="A=1-123"/>
</dbReference>
<dbReference type="PDB" id="2UZR">
    <property type="method" value="X-ray"/>
    <property type="resolution" value="1.94 A"/>
    <property type="chains" value="A=1-123"/>
</dbReference>
<dbReference type="PDB" id="2UZS">
    <property type="method" value="X-ray"/>
    <property type="resolution" value="2.46 A"/>
    <property type="chains" value="A=1-123"/>
</dbReference>
<dbReference type="PDB" id="3CQU">
    <property type="method" value="X-ray"/>
    <property type="resolution" value="2.20 A"/>
    <property type="chains" value="A=144-480"/>
</dbReference>
<dbReference type="PDB" id="3CQW">
    <property type="method" value="X-ray"/>
    <property type="resolution" value="2.00 A"/>
    <property type="chains" value="A=144-480"/>
</dbReference>
<dbReference type="PDB" id="3MV5">
    <property type="method" value="X-ray"/>
    <property type="resolution" value="2.47 A"/>
    <property type="chains" value="A=144-480"/>
</dbReference>
<dbReference type="PDB" id="3MVH">
    <property type="method" value="X-ray"/>
    <property type="resolution" value="2.01 A"/>
    <property type="chains" value="A=144-480"/>
</dbReference>
<dbReference type="PDB" id="3O96">
    <property type="method" value="X-ray"/>
    <property type="resolution" value="2.70 A"/>
    <property type="chains" value="A=2-443"/>
</dbReference>
<dbReference type="PDB" id="3OCB">
    <property type="method" value="X-ray"/>
    <property type="resolution" value="2.70 A"/>
    <property type="chains" value="A/B=144-480"/>
</dbReference>
<dbReference type="PDB" id="3OW4">
    <property type="method" value="X-ray"/>
    <property type="resolution" value="2.60 A"/>
    <property type="chains" value="A/B=144-480"/>
</dbReference>
<dbReference type="PDB" id="3QKK">
    <property type="method" value="X-ray"/>
    <property type="resolution" value="2.30 A"/>
    <property type="chains" value="A=144-480"/>
</dbReference>
<dbReference type="PDB" id="3QKL">
    <property type="method" value="X-ray"/>
    <property type="resolution" value="1.90 A"/>
    <property type="chains" value="A=144-480"/>
</dbReference>
<dbReference type="PDB" id="3QKM">
    <property type="method" value="X-ray"/>
    <property type="resolution" value="2.20 A"/>
    <property type="chains" value="A=144-480"/>
</dbReference>
<dbReference type="PDB" id="4EJN">
    <property type="method" value="X-ray"/>
    <property type="resolution" value="2.19 A"/>
    <property type="chains" value="A=2-446"/>
</dbReference>
<dbReference type="PDB" id="4EKK">
    <property type="method" value="X-ray"/>
    <property type="resolution" value="2.80 A"/>
    <property type="chains" value="A/B=144-480"/>
</dbReference>
<dbReference type="PDB" id="4EKL">
    <property type="method" value="X-ray"/>
    <property type="resolution" value="2.00 A"/>
    <property type="chains" value="A=144-480"/>
</dbReference>
<dbReference type="PDB" id="4GV1">
    <property type="method" value="X-ray"/>
    <property type="resolution" value="1.49 A"/>
    <property type="chains" value="A=144-480"/>
</dbReference>
<dbReference type="PDB" id="5KCV">
    <property type="method" value="X-ray"/>
    <property type="resolution" value="2.70 A"/>
    <property type="chains" value="A=2-446"/>
</dbReference>
<dbReference type="PDB" id="6BUU">
    <property type="method" value="X-ray"/>
    <property type="resolution" value="2.40 A"/>
    <property type="chains" value="A/B=144-480"/>
</dbReference>
<dbReference type="PDB" id="6CCY">
    <property type="method" value="X-ray"/>
    <property type="resolution" value="2.18 A"/>
    <property type="chains" value="A=144-466"/>
</dbReference>
<dbReference type="PDB" id="6HHF">
    <property type="method" value="X-ray"/>
    <property type="resolution" value="2.90 A"/>
    <property type="chains" value="A=2-446"/>
</dbReference>
<dbReference type="PDB" id="6HHG">
    <property type="method" value="X-ray"/>
    <property type="resolution" value="2.30 A"/>
    <property type="chains" value="A=2-446"/>
</dbReference>
<dbReference type="PDB" id="6HHH">
    <property type="method" value="X-ray"/>
    <property type="resolution" value="2.70 A"/>
    <property type="chains" value="A=2-446"/>
</dbReference>
<dbReference type="PDB" id="6HHI">
    <property type="method" value="X-ray"/>
    <property type="resolution" value="2.70 A"/>
    <property type="chains" value="A=2-446"/>
</dbReference>
<dbReference type="PDB" id="6HHJ">
    <property type="method" value="X-ray"/>
    <property type="resolution" value="2.30 A"/>
    <property type="chains" value="A=2-446"/>
</dbReference>
<dbReference type="PDB" id="6NPZ">
    <property type="method" value="X-ray"/>
    <property type="resolution" value="2.12 A"/>
    <property type="chains" value="A/B=123-480, A/B=144-480"/>
</dbReference>
<dbReference type="PDB" id="6S9W">
    <property type="method" value="X-ray"/>
    <property type="resolution" value="2.30 A"/>
    <property type="chains" value="A=2-446"/>
</dbReference>
<dbReference type="PDB" id="6S9X">
    <property type="method" value="X-ray"/>
    <property type="resolution" value="2.60 A"/>
    <property type="chains" value="A=2-446"/>
</dbReference>
<dbReference type="PDB" id="7APJ">
    <property type="method" value="X-ray"/>
    <property type="resolution" value="2.05 A"/>
    <property type="chains" value="A=1-119, A=136-445"/>
</dbReference>
<dbReference type="PDB" id="7MYX">
    <property type="method" value="X-ray"/>
    <property type="resolution" value="1.39 A"/>
    <property type="chains" value="A=1-121"/>
</dbReference>
<dbReference type="PDB" id="7NH4">
    <property type="method" value="X-ray"/>
    <property type="resolution" value="2.30 A"/>
    <property type="chains" value="A=2-446"/>
</dbReference>
<dbReference type="PDB" id="7NH5">
    <property type="method" value="X-ray"/>
    <property type="resolution" value="1.90 A"/>
    <property type="chains" value="A=2-446"/>
</dbReference>
<dbReference type="PDB" id="8JOW">
    <property type="method" value="X-ray"/>
    <property type="resolution" value="1.40 A"/>
    <property type="chains" value="B/D=466-477"/>
</dbReference>
<dbReference type="PDB" id="8UVY">
    <property type="method" value="X-ray"/>
    <property type="resolution" value="2.11 A"/>
    <property type="chains" value="A=2-446"/>
</dbReference>
<dbReference type="PDB" id="8UW2">
    <property type="method" value="X-ray"/>
    <property type="resolution" value="2.20 A"/>
    <property type="chains" value="A=2-446"/>
</dbReference>
<dbReference type="PDB" id="8UW7">
    <property type="method" value="X-ray"/>
    <property type="resolution" value="1.97 A"/>
    <property type="chains" value="A=2-446"/>
</dbReference>
<dbReference type="PDB" id="8UW9">
    <property type="method" value="X-ray"/>
    <property type="resolution" value="1.90 A"/>
    <property type="chains" value="A=2-446"/>
</dbReference>
<dbReference type="PDB" id="8ZPU">
    <property type="method" value="X-ray"/>
    <property type="resolution" value="2.80 A"/>
    <property type="chains" value="C/D=466-477"/>
</dbReference>
<dbReference type="PDBsum" id="1H10"/>
<dbReference type="PDBsum" id="1UNP"/>
<dbReference type="PDBsum" id="1UNQ"/>
<dbReference type="PDBsum" id="1UNR"/>
<dbReference type="PDBsum" id="2UVM"/>
<dbReference type="PDBsum" id="2UZR"/>
<dbReference type="PDBsum" id="2UZS"/>
<dbReference type="PDBsum" id="3CQU"/>
<dbReference type="PDBsum" id="3CQW"/>
<dbReference type="PDBsum" id="3MV5"/>
<dbReference type="PDBsum" id="3MVH"/>
<dbReference type="PDBsum" id="3O96"/>
<dbReference type="PDBsum" id="3OCB"/>
<dbReference type="PDBsum" id="3OW4"/>
<dbReference type="PDBsum" id="3QKK"/>
<dbReference type="PDBsum" id="3QKL"/>
<dbReference type="PDBsum" id="3QKM"/>
<dbReference type="PDBsum" id="4EJN"/>
<dbReference type="PDBsum" id="4EKK"/>
<dbReference type="PDBsum" id="4EKL"/>
<dbReference type="PDBsum" id="4GV1"/>
<dbReference type="PDBsum" id="5KCV"/>
<dbReference type="PDBsum" id="6BUU"/>
<dbReference type="PDBsum" id="6CCY"/>
<dbReference type="PDBsum" id="6HHF"/>
<dbReference type="PDBsum" id="6HHG"/>
<dbReference type="PDBsum" id="6HHH"/>
<dbReference type="PDBsum" id="6HHI"/>
<dbReference type="PDBsum" id="6HHJ"/>
<dbReference type="PDBsum" id="6NPZ"/>
<dbReference type="PDBsum" id="6S9W"/>
<dbReference type="PDBsum" id="6S9X"/>
<dbReference type="PDBsum" id="7APJ"/>
<dbReference type="PDBsum" id="7MYX"/>
<dbReference type="PDBsum" id="7NH4"/>
<dbReference type="PDBsum" id="7NH5"/>
<dbReference type="PDBsum" id="8JOW"/>
<dbReference type="PDBsum" id="8UVY"/>
<dbReference type="PDBsum" id="8UW2"/>
<dbReference type="PDBsum" id="8UW7"/>
<dbReference type="PDBsum" id="8UW9"/>
<dbReference type="PDBsum" id="8ZPU"/>
<dbReference type="SMR" id="P31749"/>
<dbReference type="BioGRID" id="106710">
    <property type="interactions" value="585"/>
</dbReference>
<dbReference type="CORUM" id="P31749"/>
<dbReference type="DIP" id="DIP-24269N"/>
<dbReference type="ELM" id="P31749"/>
<dbReference type="FunCoup" id="P31749">
    <property type="interactions" value="3098"/>
</dbReference>
<dbReference type="IntAct" id="P31749">
    <property type="interactions" value="225"/>
</dbReference>
<dbReference type="MINT" id="P31749"/>
<dbReference type="STRING" id="9606.ENSP00000451828"/>
<dbReference type="BindingDB" id="P31749"/>
<dbReference type="ChEMBL" id="CHEMBL4282"/>
<dbReference type="DrugBank" id="DB08073">
    <property type="generic name" value="(2S)-1-(1H-INDOL-3-YL)-3-{[5-(3-METHYL-1H-INDAZOL-5-YL)PYRIDIN-3-YL]OXY}PROPAN-2-AMINE"/>
</dbReference>
<dbReference type="DrugBank" id="DB07585">
    <property type="generic name" value="5-(5-chloro-7H-pyrrolo[2,3-d]pyrimidin-4-yl)-4,5,6,7-tetrahydro-1H-imidazo[4,5-c]pyridine"/>
</dbReference>
<dbReference type="DrugBank" id="DB08568">
    <property type="generic name" value="A-674563"/>
</dbReference>
<dbReference type="DrugBank" id="DB11648">
    <property type="generic name" value="Afuresertib"/>
</dbReference>
<dbReference type="DrugBank" id="DB05971">
    <property type="generic name" value="Archexin"/>
</dbReference>
<dbReference type="DrugBank" id="DB01169">
    <property type="generic name" value="Arsenic trioxide"/>
</dbReference>
<dbReference type="DrugBank" id="DB00171">
    <property type="generic name" value="ATP"/>
</dbReference>
<dbReference type="DrugBank" id="DB03777">
    <property type="generic name" value="Bisindolylmaleimide I"/>
</dbReference>
<dbReference type="DrugBank" id="DB15399">
    <property type="generic name" value="BMS-754807"/>
</dbReference>
<dbReference type="DrugBank" id="DB05424">
    <property type="generic name" value="Canertinib"/>
</dbReference>
<dbReference type="DrugBank" id="DB12218">
    <property type="generic name" value="Capivasertib"/>
</dbReference>
<dbReference type="DrugBank" id="DB12429">
    <property type="generic name" value="CI-1040"/>
</dbReference>
<dbReference type="DrugBank" id="DB12795">
    <property type="generic name" value="CMX-2043"/>
</dbReference>
<dbReference type="DrugBank" id="DB06486">
    <property type="generic name" value="Enzastaurin"/>
</dbReference>
<dbReference type="DrugBank" id="DB01645">
    <property type="generic name" value="Genistein"/>
</dbReference>
<dbReference type="DrugBank" id="DB01863">
    <property type="generic name" value="Inositol 1,3,4,5-Tetrakisphosphate"/>
</dbReference>
<dbReference type="DrugBank" id="DB11743">
    <property type="generic name" value="Ipatasertib"/>
</dbReference>
<dbReference type="DrugBank" id="DB15431">
    <property type="generic name" value="M-2698"/>
</dbReference>
<dbReference type="DrugBank" id="DB14982">
    <property type="generic name" value="Miransertib"/>
</dbReference>
<dbReference type="DrugBank" id="DB07584">
    <property type="generic name" value="N-[2-(5-methyl-4H-1,2,4-triazol-3-yl)phenyl]-7H-pyrrolo[2,3-d]pyrimidin-4-amine"/>
</dbReference>
<dbReference type="DrugBank" id="DB06641">
    <property type="generic name" value="Perifosine"/>
</dbReference>
<dbReference type="DrugBank" id="DB02709">
    <property type="generic name" value="Resveratrol"/>
</dbReference>
<dbReference type="DrugBank" id="DB04462">
    <property type="generic name" value="Tetrabromo-2-Benzotriazole"/>
</dbReference>
<dbReference type="DrugCentral" id="P31749"/>
<dbReference type="GuidetoPHARMACOLOGY" id="1479"/>
<dbReference type="TCDB" id="8.A.104.1.10">
    <property type="family name" value="the 5'-amp-activated protein kinase (ampk) family"/>
</dbReference>
<dbReference type="GlyCosmos" id="P31749">
    <property type="glycosylation" value="6 sites, 1 glycan"/>
</dbReference>
<dbReference type="GlyGen" id="P31749">
    <property type="glycosylation" value="6 sites, 1 O-linked glycan (6 sites)"/>
</dbReference>
<dbReference type="iPTMnet" id="P31749"/>
<dbReference type="MetOSite" id="P31749"/>
<dbReference type="PhosphoSitePlus" id="P31749"/>
<dbReference type="BioMuta" id="AKT1"/>
<dbReference type="DMDM" id="60391226"/>
<dbReference type="CPTAC" id="CPTAC-3162"/>
<dbReference type="CPTAC" id="CPTAC-3163"/>
<dbReference type="CPTAC" id="CPTAC-3164"/>
<dbReference type="CPTAC" id="CPTAC-3165"/>
<dbReference type="CPTAC" id="CPTAC-3166"/>
<dbReference type="CPTAC" id="CPTAC-3167"/>
<dbReference type="CPTAC" id="CPTAC-5758"/>
<dbReference type="CPTAC" id="CPTAC-5759"/>
<dbReference type="CPTAC" id="CPTAC-5805"/>
<dbReference type="CPTAC" id="CPTAC-5806"/>
<dbReference type="CPTAC" id="CPTAC-5807"/>
<dbReference type="CPTAC" id="CPTAC-5808"/>
<dbReference type="CPTAC" id="CPTAC-783"/>
<dbReference type="CPTAC" id="CPTAC-784"/>
<dbReference type="CPTAC" id="non-CPTAC-5328"/>
<dbReference type="CPTAC" id="non-CPTAC-5329"/>
<dbReference type="CPTAC" id="non-CPTAC-5332"/>
<dbReference type="CPTAC" id="non-CPTAC-5527"/>
<dbReference type="CPTAC" id="non-CPTAC-5528"/>
<dbReference type="CPTAC" id="non-CPTAC-5719"/>
<dbReference type="CPTAC" id="non-CPTAC-5720"/>
<dbReference type="jPOST" id="P31749"/>
<dbReference type="MassIVE" id="P31749"/>
<dbReference type="PaxDb" id="9606-ENSP00000451828"/>
<dbReference type="PeptideAtlas" id="P31749"/>
<dbReference type="ProteomicsDB" id="54800">
    <molecule id="P31749-1"/>
</dbReference>
<dbReference type="ProteomicsDB" id="6712"/>
<dbReference type="Pumba" id="P31749"/>
<dbReference type="ABCD" id="P31749">
    <property type="antibodies" value="12 sequenced antibodies"/>
</dbReference>
<dbReference type="Antibodypedia" id="135">
    <property type="antibodies" value="5275 antibodies from 57 providers"/>
</dbReference>
<dbReference type="CPTC" id="P31749">
    <property type="antibodies" value="6 antibodies"/>
</dbReference>
<dbReference type="DNASU" id="207"/>
<dbReference type="Ensembl" id="ENST00000349310.7">
    <molecule id="P31749-1"/>
    <property type="protein sequence ID" value="ENSP00000270202.4"/>
    <property type="gene ID" value="ENSG00000142208.19"/>
</dbReference>
<dbReference type="Ensembl" id="ENST00000402615.6">
    <molecule id="P31749-1"/>
    <property type="protein sequence ID" value="ENSP00000385326.2"/>
    <property type="gene ID" value="ENSG00000142208.19"/>
</dbReference>
<dbReference type="Ensembl" id="ENST00000407796.7">
    <molecule id="P31749-1"/>
    <property type="protein sequence ID" value="ENSP00000384293.2"/>
    <property type="gene ID" value="ENSG00000142208.19"/>
</dbReference>
<dbReference type="Ensembl" id="ENST00000554581.5">
    <molecule id="P31749-1"/>
    <property type="protein sequence ID" value="ENSP00000451828.1"/>
    <property type="gene ID" value="ENSG00000142208.19"/>
</dbReference>
<dbReference type="Ensembl" id="ENST00000554848.5">
    <molecule id="P31749-1"/>
    <property type="protein sequence ID" value="ENSP00000451166.1"/>
    <property type="gene ID" value="ENSG00000142208.19"/>
</dbReference>
<dbReference type="Ensembl" id="ENST00000555528.5">
    <molecule id="P31749-1"/>
    <property type="protein sequence ID" value="ENSP00000450688.1"/>
    <property type="gene ID" value="ENSG00000142208.19"/>
</dbReference>
<dbReference type="Ensembl" id="ENST00000649815.2">
    <molecule id="P31749-1"/>
    <property type="protein sequence ID" value="ENSP00000497822.1"/>
    <property type="gene ID" value="ENSG00000142208.19"/>
</dbReference>
<dbReference type="Ensembl" id="ENST00000683722.1">
    <molecule id="P31749-1"/>
    <property type="protein sequence ID" value="ENSP00000507879.1"/>
    <property type="gene ID" value="ENSG00000142208.19"/>
</dbReference>
<dbReference type="GeneID" id="207"/>
<dbReference type="KEGG" id="hsa:207"/>
<dbReference type="MANE-Select" id="ENST00000649815.2">
    <property type="protein sequence ID" value="ENSP00000497822.1"/>
    <property type="RefSeq nucleotide sequence ID" value="NM_001382430.1"/>
    <property type="RefSeq protein sequence ID" value="NP_001369359.1"/>
</dbReference>
<dbReference type="UCSC" id="uc001ypk.4">
    <molecule id="P31749-1"/>
    <property type="organism name" value="human"/>
</dbReference>
<dbReference type="AGR" id="HGNC:391"/>
<dbReference type="CTD" id="207"/>
<dbReference type="DisGeNET" id="207"/>
<dbReference type="GeneCards" id="AKT1"/>
<dbReference type="GeneReviews" id="AKT1"/>
<dbReference type="HGNC" id="HGNC:391">
    <property type="gene designation" value="AKT1"/>
</dbReference>
<dbReference type="HPA" id="ENSG00000142208">
    <property type="expression patterns" value="Low tissue specificity"/>
</dbReference>
<dbReference type="MalaCards" id="AKT1"/>
<dbReference type="MIM" id="114480">
    <property type="type" value="phenotype"/>
</dbReference>
<dbReference type="MIM" id="114500">
    <property type="type" value="phenotype"/>
</dbReference>
<dbReference type="MIM" id="164730">
    <property type="type" value="gene"/>
</dbReference>
<dbReference type="MIM" id="176920">
    <property type="type" value="phenotype"/>
</dbReference>
<dbReference type="MIM" id="615109">
    <property type="type" value="phenotype"/>
</dbReference>
<dbReference type="neXtProt" id="NX_P31749"/>
<dbReference type="OpenTargets" id="ENSG00000142208"/>
<dbReference type="Orphanet" id="201">
    <property type="disease" value="Cowden syndrome"/>
</dbReference>
<dbReference type="Orphanet" id="2495">
    <property type="disease" value="Meningioma"/>
</dbReference>
<dbReference type="Orphanet" id="744">
    <property type="disease" value="Proteus syndrome"/>
</dbReference>
<dbReference type="PharmGKB" id="PA24684"/>
<dbReference type="VEuPathDB" id="HostDB:ENSG00000142208"/>
<dbReference type="eggNOG" id="KOG0690">
    <property type="taxonomic scope" value="Eukaryota"/>
</dbReference>
<dbReference type="GeneTree" id="ENSGT00940000158752"/>
<dbReference type="HOGENOM" id="CLU_000288_11_0_1"/>
<dbReference type="InParanoid" id="P31749"/>
<dbReference type="OMA" id="MDMEIYL"/>
<dbReference type="OrthoDB" id="63267at2759"/>
<dbReference type="PAN-GO" id="P31749">
    <property type="GO annotations" value="3 GO annotations based on evolutionary models"/>
</dbReference>
<dbReference type="PhylomeDB" id="P31749"/>
<dbReference type="TreeFam" id="TF102004"/>
<dbReference type="BRENDA" id="2.7.11.1">
    <property type="organism ID" value="2681"/>
</dbReference>
<dbReference type="PathwayCommons" id="P31749"/>
<dbReference type="Reactome" id="R-HSA-111447">
    <property type="pathway name" value="Activation of BAD and translocation to mitochondria"/>
</dbReference>
<dbReference type="Reactome" id="R-HSA-1257604">
    <property type="pathway name" value="PIP3 activates AKT signaling"/>
</dbReference>
<dbReference type="Reactome" id="R-HSA-1358803">
    <property type="pathway name" value="Downregulation of ERBB2:ERBB3 signaling"/>
</dbReference>
<dbReference type="Reactome" id="R-HSA-1445148">
    <property type="pathway name" value="Translocation of SLC2A4 (GLUT4) to the plasma membrane"/>
</dbReference>
<dbReference type="Reactome" id="R-HSA-1474151">
    <property type="pathway name" value="Tetrahydrobiopterin (BH4) synthesis, recycling, salvage and regulation"/>
</dbReference>
<dbReference type="Reactome" id="R-HSA-165159">
    <property type="pathway name" value="MTOR signalling"/>
</dbReference>
<dbReference type="Reactome" id="R-HSA-198323">
    <property type="pathway name" value="AKT phosphorylates targets in the cytosol"/>
</dbReference>
<dbReference type="Reactome" id="R-HSA-198693">
    <property type="pathway name" value="AKT phosphorylates targets in the nucleus"/>
</dbReference>
<dbReference type="Reactome" id="R-HSA-199418">
    <property type="pathway name" value="Negative regulation of the PI3K/AKT network"/>
</dbReference>
<dbReference type="Reactome" id="R-HSA-203615">
    <property type="pathway name" value="eNOS activation"/>
</dbReference>
<dbReference type="Reactome" id="R-HSA-211163">
    <property type="pathway name" value="AKT-mediated inactivation of FOXO1A"/>
</dbReference>
<dbReference type="Reactome" id="R-HSA-354192">
    <property type="pathway name" value="Integrin signaling"/>
</dbReference>
<dbReference type="Reactome" id="R-HSA-3769402">
    <property type="pathway name" value="Deactivation of the beta-catenin transactivating complex"/>
</dbReference>
<dbReference type="Reactome" id="R-HSA-389357">
    <property type="pathway name" value="CD28 dependent PI3K/Akt signaling"/>
</dbReference>
<dbReference type="Reactome" id="R-HSA-389513">
    <property type="pathway name" value="Co-inhibition by CTLA4"/>
</dbReference>
<dbReference type="Reactome" id="R-HSA-392451">
    <property type="pathway name" value="G beta:gamma signalling through PI3Kgamma"/>
</dbReference>
<dbReference type="Reactome" id="R-HSA-450385">
    <property type="pathway name" value="Butyrate Response Factor 1 (BRF1) binds and destabilizes mRNA"/>
</dbReference>
<dbReference type="Reactome" id="R-HSA-450604">
    <property type="pathway name" value="KSRP (KHSRP) binds and destabilizes mRNA"/>
</dbReference>
<dbReference type="Reactome" id="R-HSA-5218920">
    <property type="pathway name" value="VEGFR2 mediated vascular permeability"/>
</dbReference>
<dbReference type="Reactome" id="R-HSA-5628897">
    <property type="pathway name" value="TP53 Regulates Metabolic Genes"/>
</dbReference>
<dbReference type="Reactome" id="R-HSA-5674400">
    <property type="pathway name" value="Constitutive Signaling by AKT1 E17K in Cancer"/>
</dbReference>
<dbReference type="Reactome" id="R-HSA-6785807">
    <property type="pathway name" value="Interleukin-4 and Interleukin-13 signaling"/>
</dbReference>
<dbReference type="Reactome" id="R-HSA-6804757">
    <property type="pathway name" value="Regulation of TP53 Degradation"/>
</dbReference>
<dbReference type="Reactome" id="R-HSA-6804758">
    <property type="pathway name" value="Regulation of TP53 Activity through Acetylation"/>
</dbReference>
<dbReference type="Reactome" id="R-HSA-6804759">
    <property type="pathway name" value="Regulation of TP53 Activity through Association with Co-factors"/>
</dbReference>
<dbReference type="Reactome" id="R-HSA-6811558">
    <property type="pathway name" value="PI5P, PP2A and IER3 Regulate PI3K/AKT Signaling"/>
</dbReference>
<dbReference type="Reactome" id="R-HSA-69202">
    <property type="pathway name" value="Cyclin E associated events during G1/S transition"/>
</dbReference>
<dbReference type="Reactome" id="R-HSA-69656">
    <property type="pathway name" value="Cyclin A:Cdk2-associated events at S phase entry"/>
</dbReference>
<dbReference type="Reactome" id="R-HSA-8849469">
    <property type="pathway name" value="PTK6 Regulates RTKs and Their Effectors AKT1 and DOK1"/>
</dbReference>
<dbReference type="Reactome" id="R-HSA-8876198">
    <property type="pathway name" value="RAB GEFs exchange GTP for GDP on RABs"/>
</dbReference>
<dbReference type="Reactome" id="R-HSA-8941332">
    <property type="pathway name" value="RUNX2 regulates genes involved in cell migration"/>
</dbReference>
<dbReference type="Reactome" id="R-HSA-8948751">
    <property type="pathway name" value="Regulation of PTEN stability and activity"/>
</dbReference>
<dbReference type="Reactome" id="R-HSA-9009391">
    <property type="pathway name" value="Extra-nuclear estrogen signaling"/>
</dbReference>
<dbReference type="Reactome" id="R-HSA-9604323">
    <property type="pathway name" value="Negative regulation of NOTCH4 signaling"/>
</dbReference>
<dbReference type="Reactome" id="R-HSA-9607240">
    <property type="pathway name" value="FLT3 Signaling"/>
</dbReference>
<dbReference type="Reactome" id="R-HSA-9614399">
    <property type="pathway name" value="Regulation of localization of FOXO transcription factors"/>
</dbReference>
<dbReference type="Reactome" id="R-HSA-9634638">
    <property type="pathway name" value="Estrogen-dependent nuclear events downstream of ESR-membrane signaling"/>
</dbReference>
<dbReference type="Reactome" id="R-HSA-9755511">
    <property type="pathway name" value="KEAP1-NFE2L2 pathway"/>
</dbReference>
<dbReference type="Reactome" id="R-HSA-9755779">
    <property type="pathway name" value="SARS-CoV-2 targets host intracellular signalling and regulatory pathways"/>
</dbReference>
<dbReference type="Reactome" id="R-HSA-9841251">
    <property type="pathway name" value="Mitochondrial unfolded protein response (UPRmt)"/>
</dbReference>
<dbReference type="Reactome" id="R-HSA-9856530">
    <property type="pathway name" value="High laminar flow shear stress activates signaling by PIEZO1 and PECAM1:CDH5:KDR in endothelial cells"/>
</dbReference>
<dbReference type="Reactome" id="R-HSA-9856532">
    <property type="pathway name" value="Mechanical load activates signaling by PIEZO1 and integrins in osteocytes"/>
</dbReference>
<dbReference type="SABIO-RK" id="P31749"/>
<dbReference type="SignaLink" id="P31749"/>
<dbReference type="SIGNOR" id="P31749"/>
<dbReference type="BioGRID-ORCS" id="207">
    <property type="hits" value="54 hits in 1212 CRISPR screens"/>
</dbReference>
<dbReference type="ChiTaRS" id="AKT1">
    <property type="organism name" value="human"/>
</dbReference>
<dbReference type="EvolutionaryTrace" id="P31749"/>
<dbReference type="GeneWiki" id="AKT1"/>
<dbReference type="GenomeRNAi" id="207"/>
<dbReference type="Pharos" id="P31749">
    <property type="development level" value="Tchem"/>
</dbReference>
<dbReference type="PRO" id="PR:P31749"/>
<dbReference type="Proteomes" id="UP000005640">
    <property type="component" value="Chromosome 14"/>
</dbReference>
<dbReference type="RNAct" id="P31749">
    <property type="molecule type" value="protein"/>
</dbReference>
<dbReference type="Bgee" id="ENSG00000142208">
    <property type="expression patterns" value="Expressed in stromal cell of endometrium and 189 other cell types or tissues"/>
</dbReference>
<dbReference type="ExpressionAtlas" id="P31749">
    <property type="expression patterns" value="baseline and differential"/>
</dbReference>
<dbReference type="GO" id="GO:0005938">
    <property type="term" value="C:cell cortex"/>
    <property type="evidence" value="ECO:0000303"/>
    <property type="project" value="BHF-UCL"/>
</dbReference>
<dbReference type="GO" id="GO:0005911">
    <property type="term" value="C:cell-cell junction"/>
    <property type="evidence" value="ECO:0007669"/>
    <property type="project" value="Ensembl"/>
</dbReference>
<dbReference type="GO" id="GO:0036064">
    <property type="term" value="C:ciliary basal body"/>
    <property type="evidence" value="ECO:0000314"/>
    <property type="project" value="HPA"/>
</dbReference>
<dbReference type="GO" id="GO:0005929">
    <property type="term" value="C:cilium"/>
    <property type="evidence" value="ECO:0000314"/>
    <property type="project" value="HPA"/>
</dbReference>
<dbReference type="GO" id="GO:0005737">
    <property type="term" value="C:cytoplasm"/>
    <property type="evidence" value="ECO:0000314"/>
    <property type="project" value="UniProtKB"/>
</dbReference>
<dbReference type="GO" id="GO:0005829">
    <property type="term" value="C:cytosol"/>
    <property type="evidence" value="ECO:0000314"/>
    <property type="project" value="UniProtKB"/>
</dbReference>
<dbReference type="GO" id="GO:0098978">
    <property type="term" value="C:glutamatergic synapse"/>
    <property type="evidence" value="ECO:0007669"/>
    <property type="project" value="Ensembl"/>
</dbReference>
<dbReference type="GO" id="GO:0030027">
    <property type="term" value="C:lamellipodium"/>
    <property type="evidence" value="ECO:0000303"/>
    <property type="project" value="BHF-UCL"/>
</dbReference>
<dbReference type="GO" id="GO:0016020">
    <property type="term" value="C:membrane"/>
    <property type="evidence" value="ECO:0000314"/>
    <property type="project" value="UniProt"/>
</dbReference>
<dbReference type="GO" id="GO:0015630">
    <property type="term" value="C:microtubule cytoskeleton"/>
    <property type="evidence" value="ECO:0000314"/>
    <property type="project" value="HPA"/>
</dbReference>
<dbReference type="GO" id="GO:0005758">
    <property type="term" value="C:mitochondrial intermembrane space"/>
    <property type="evidence" value="ECO:0000250"/>
    <property type="project" value="UniProtKB"/>
</dbReference>
<dbReference type="GO" id="GO:0005739">
    <property type="term" value="C:mitochondrion"/>
    <property type="evidence" value="ECO:0000314"/>
    <property type="project" value="HPA"/>
</dbReference>
<dbReference type="GO" id="GO:0005654">
    <property type="term" value="C:nucleoplasm"/>
    <property type="evidence" value="ECO:0000314"/>
    <property type="project" value="HPA"/>
</dbReference>
<dbReference type="GO" id="GO:0005634">
    <property type="term" value="C:nucleus"/>
    <property type="evidence" value="ECO:0000314"/>
    <property type="project" value="UniProtKB"/>
</dbReference>
<dbReference type="GO" id="GO:0005886">
    <property type="term" value="C:plasma membrane"/>
    <property type="evidence" value="ECO:0000314"/>
    <property type="project" value="UniProtKB"/>
</dbReference>
<dbReference type="GO" id="GO:0098794">
    <property type="term" value="C:postsynapse"/>
    <property type="evidence" value="ECO:0007669"/>
    <property type="project" value="GOC"/>
</dbReference>
<dbReference type="GO" id="GO:0032991">
    <property type="term" value="C:protein-containing complex"/>
    <property type="evidence" value="ECO:0000314"/>
    <property type="project" value="UniProtKB"/>
</dbReference>
<dbReference type="GO" id="GO:0005819">
    <property type="term" value="C:spindle"/>
    <property type="evidence" value="ECO:0007669"/>
    <property type="project" value="Ensembl"/>
</dbReference>
<dbReference type="GO" id="GO:0031982">
    <property type="term" value="C:vesicle"/>
    <property type="evidence" value="ECO:0000314"/>
    <property type="project" value="UniProtKB"/>
</dbReference>
<dbReference type="GO" id="GO:0071889">
    <property type="term" value="F:14-3-3 protein binding"/>
    <property type="evidence" value="ECO:0000353"/>
    <property type="project" value="UniProtKB"/>
</dbReference>
<dbReference type="GO" id="GO:0005524">
    <property type="term" value="F:ATP binding"/>
    <property type="evidence" value="ECO:0000314"/>
    <property type="project" value="UniProtKB"/>
</dbReference>
<dbReference type="GO" id="GO:0005516">
    <property type="term" value="F:calmodulin binding"/>
    <property type="evidence" value="ECO:0000314"/>
    <property type="project" value="UniProtKB"/>
</dbReference>
<dbReference type="GO" id="GO:0019899">
    <property type="term" value="F:enzyme binding"/>
    <property type="evidence" value="ECO:0000250"/>
    <property type="project" value="BHF-UCL"/>
</dbReference>
<dbReference type="GO" id="GO:0042802">
    <property type="term" value="F:identical protein binding"/>
    <property type="evidence" value="ECO:0000353"/>
    <property type="project" value="IntAct"/>
</dbReference>
<dbReference type="GO" id="GO:0016301">
    <property type="term" value="F:kinase activity"/>
    <property type="evidence" value="ECO:0000314"/>
    <property type="project" value="MGI"/>
</dbReference>
<dbReference type="GO" id="GO:0019900">
    <property type="term" value="F:kinase binding"/>
    <property type="evidence" value="ECO:0000353"/>
    <property type="project" value="ParkinsonsUK-UCL"/>
</dbReference>
<dbReference type="GO" id="GO:0030235">
    <property type="term" value="F:nitric-oxide synthase regulator activity"/>
    <property type="evidence" value="ECO:0000315"/>
    <property type="project" value="BHF-UCL"/>
</dbReference>
<dbReference type="GO" id="GO:0005547">
    <property type="term" value="F:phosphatidylinositol-3,4,5-trisphosphate binding"/>
    <property type="evidence" value="ECO:0000314"/>
    <property type="project" value="UniProtKB"/>
</dbReference>
<dbReference type="GO" id="GO:0043325">
    <property type="term" value="F:phosphatidylinositol-3,4-bisphosphate binding"/>
    <property type="evidence" value="ECO:0000314"/>
    <property type="project" value="UniProtKB"/>
</dbReference>
<dbReference type="GO" id="GO:0099104">
    <property type="term" value="F:potassium channel activator activity"/>
    <property type="evidence" value="ECO:0000314"/>
    <property type="project" value="UniProtKB"/>
</dbReference>
<dbReference type="GO" id="GO:0042803">
    <property type="term" value="F:protein homodimerization activity"/>
    <property type="evidence" value="ECO:0000314"/>
    <property type="project" value="UniProtKB"/>
</dbReference>
<dbReference type="GO" id="GO:0004672">
    <property type="term" value="F:protein kinase activity"/>
    <property type="evidence" value="ECO:0000314"/>
    <property type="project" value="UniProtKB"/>
</dbReference>
<dbReference type="GO" id="GO:0019901">
    <property type="term" value="F:protein kinase binding"/>
    <property type="evidence" value="ECO:0007669"/>
    <property type="project" value="Ensembl"/>
</dbReference>
<dbReference type="GO" id="GO:0106310">
    <property type="term" value="F:protein serine kinase activity"/>
    <property type="evidence" value="ECO:0000304"/>
    <property type="project" value="Reactome"/>
</dbReference>
<dbReference type="GO" id="GO:0004674">
    <property type="term" value="F:protein serine/threonine kinase activity"/>
    <property type="evidence" value="ECO:0000314"/>
    <property type="project" value="UniProtKB"/>
</dbReference>
<dbReference type="GO" id="GO:0030291">
    <property type="term" value="F:protein serine/threonine kinase inhibitor activity"/>
    <property type="evidence" value="ECO:0000250"/>
    <property type="project" value="BHF-UCL"/>
</dbReference>
<dbReference type="GO" id="GO:0004712">
    <property type="term" value="F:protein serine/threonine/tyrosine kinase activity"/>
    <property type="evidence" value="ECO:0000314"/>
    <property type="project" value="BHF-UCL"/>
</dbReference>
<dbReference type="GO" id="GO:1904841">
    <property type="term" value="F:TORC2 complex binding"/>
    <property type="evidence" value="ECO:0000314"/>
    <property type="project" value="ParkinsonsUK-UCL"/>
</dbReference>
<dbReference type="GO" id="GO:0006924">
    <property type="term" value="P:activation-induced cell death of T cells"/>
    <property type="evidence" value="ECO:0000315"/>
    <property type="project" value="MGI"/>
</dbReference>
<dbReference type="GO" id="GO:0043276">
    <property type="term" value="P:anoikis"/>
    <property type="evidence" value="ECO:0000303"/>
    <property type="project" value="ParkinsonsUK-UCL"/>
</dbReference>
<dbReference type="GO" id="GO:0008637">
    <property type="term" value="P:apoptotic mitochondrial changes"/>
    <property type="evidence" value="ECO:0007669"/>
    <property type="project" value="Ensembl"/>
</dbReference>
<dbReference type="GO" id="GO:0048266">
    <property type="term" value="P:behavioral response to pain"/>
    <property type="evidence" value="ECO:0007669"/>
    <property type="project" value="Ensembl"/>
</dbReference>
<dbReference type="GO" id="GO:0030154">
    <property type="term" value="P:cell differentiation"/>
    <property type="evidence" value="ECO:0000304"/>
    <property type="project" value="UniProtKB"/>
</dbReference>
<dbReference type="GO" id="GO:0002042">
    <property type="term" value="P:cell migration involved in sprouting angiogenesis"/>
    <property type="evidence" value="ECO:0000315"/>
    <property type="project" value="BHF-UCL"/>
</dbReference>
<dbReference type="GO" id="GO:0008283">
    <property type="term" value="P:cell population proliferation"/>
    <property type="evidence" value="ECO:0000304"/>
    <property type="project" value="UniProtKB"/>
</dbReference>
<dbReference type="GO" id="GO:0036294">
    <property type="term" value="P:cellular response to decreased oxygen levels"/>
    <property type="evidence" value="ECO:0007669"/>
    <property type="project" value="Ensembl"/>
</dbReference>
<dbReference type="GO" id="GO:0071364">
    <property type="term" value="P:cellular response to epidermal growth factor stimulus"/>
    <property type="evidence" value="ECO:0000314"/>
    <property type="project" value="UniProtKB"/>
</dbReference>
<dbReference type="GO" id="GO:0097011">
    <property type="term" value="P:cellular response to granulocyte macrophage colony-stimulating factor stimulus"/>
    <property type="evidence" value="ECO:0007669"/>
    <property type="project" value="Ensembl"/>
</dbReference>
<dbReference type="GO" id="GO:0032869">
    <property type="term" value="P:cellular response to insulin stimulus"/>
    <property type="evidence" value="ECO:0000314"/>
    <property type="project" value="UniProtKB"/>
</dbReference>
<dbReference type="GO" id="GO:1990090">
    <property type="term" value="P:cellular response to nerve growth factor stimulus"/>
    <property type="evidence" value="ECO:0000315"/>
    <property type="project" value="UniProtKB"/>
</dbReference>
<dbReference type="GO" id="GO:0140052">
    <property type="term" value="P:cellular response to oxidised low-density lipoprotein particle stimulus"/>
    <property type="evidence" value="ECO:0000315"/>
    <property type="project" value="BHF-UCL"/>
</dbReference>
<dbReference type="GO" id="GO:1901653">
    <property type="term" value="P:cellular response to peptide"/>
    <property type="evidence" value="ECO:0007669"/>
    <property type="project" value="Ensembl"/>
</dbReference>
<dbReference type="GO" id="GO:0071380">
    <property type="term" value="P:cellular response to prostaglandin E stimulus"/>
    <property type="evidence" value="ECO:0007669"/>
    <property type="project" value="Ensembl"/>
</dbReference>
<dbReference type="GO" id="GO:0072752">
    <property type="term" value="P:cellular response to rapamycin"/>
    <property type="evidence" value="ECO:0000250"/>
    <property type="project" value="UniProt"/>
</dbReference>
<dbReference type="GO" id="GO:0033554">
    <property type="term" value="P:cellular response to stress"/>
    <property type="evidence" value="ECO:0000304"/>
    <property type="project" value="Reactome"/>
</dbReference>
<dbReference type="GO" id="GO:0071356">
    <property type="term" value="P:cellular response to tumor necrosis factor"/>
    <property type="evidence" value="ECO:0007669"/>
    <property type="project" value="Ensembl"/>
</dbReference>
<dbReference type="GO" id="GO:0035924">
    <property type="term" value="P:cellular response to vascular endothelial growth factor stimulus"/>
    <property type="evidence" value="ECO:0007669"/>
    <property type="project" value="Ensembl"/>
</dbReference>
<dbReference type="GO" id="GO:0002430">
    <property type="term" value="P:complement receptor mediated signaling pathway"/>
    <property type="evidence" value="ECO:0000314"/>
    <property type="project" value="BHF-UCL"/>
</dbReference>
<dbReference type="GO" id="GO:0019221">
    <property type="term" value="P:cytokine-mediated signaling pathway"/>
    <property type="evidence" value="ECO:0000304"/>
    <property type="project" value="Reactome"/>
</dbReference>
<dbReference type="GO" id="GO:0007173">
    <property type="term" value="P:epidermal growth factor receptor signaling pathway"/>
    <property type="evidence" value="ECO:0000314"/>
    <property type="project" value="UniProtKB"/>
</dbReference>
<dbReference type="GO" id="GO:0072655">
    <property type="term" value="P:establishment of protein localization to mitochondrion"/>
    <property type="evidence" value="ECO:0000315"/>
    <property type="project" value="ParkinsonsUK-UCL"/>
</dbReference>
<dbReference type="GO" id="GO:0060079">
    <property type="term" value="P:excitatory postsynaptic potential"/>
    <property type="evidence" value="ECO:0000303"/>
    <property type="project" value="ParkinsonsUK-UCL"/>
</dbReference>
<dbReference type="GO" id="GO:0097194">
    <property type="term" value="P:execution phase of apoptosis"/>
    <property type="evidence" value="ECO:0007669"/>
    <property type="project" value="Ensembl"/>
</dbReference>
<dbReference type="GO" id="GO:0010761">
    <property type="term" value="P:fibroblast migration"/>
    <property type="evidence" value="ECO:0000303"/>
    <property type="project" value="BHF-UCL"/>
</dbReference>
<dbReference type="GO" id="GO:0007186">
    <property type="term" value="P:G protein-coupled receptor signaling pathway"/>
    <property type="evidence" value="ECO:0000304"/>
    <property type="project" value="ProtInc"/>
</dbReference>
<dbReference type="GO" id="GO:0010467">
    <property type="term" value="P:gene expression"/>
    <property type="evidence" value="ECO:0007669"/>
    <property type="project" value="Ensembl"/>
</dbReference>
<dbReference type="GO" id="GO:0042593">
    <property type="term" value="P:glucose homeostasis"/>
    <property type="evidence" value="ECO:0007669"/>
    <property type="project" value="Ensembl"/>
</dbReference>
<dbReference type="GO" id="GO:0006006">
    <property type="term" value="P:glucose metabolic process"/>
    <property type="evidence" value="ECO:0007669"/>
    <property type="project" value="UniProtKB-KW"/>
</dbReference>
<dbReference type="GO" id="GO:0005978">
    <property type="term" value="P:glycogen biosynthetic process"/>
    <property type="evidence" value="ECO:0007669"/>
    <property type="project" value="UniProtKB-KW"/>
</dbReference>
<dbReference type="GO" id="GO:0006954">
    <property type="term" value="P:inflammatory response"/>
    <property type="evidence" value="ECO:0007669"/>
    <property type="project" value="Ensembl"/>
</dbReference>
<dbReference type="GO" id="GO:0008286">
    <property type="term" value="P:insulin receptor signaling pathway"/>
    <property type="evidence" value="ECO:0000315"/>
    <property type="project" value="UniProtKB"/>
</dbReference>
<dbReference type="GO" id="GO:0048009">
    <property type="term" value="P:insulin-like growth factor receptor signaling pathway"/>
    <property type="evidence" value="ECO:0000315"/>
    <property type="project" value="UniProtKB"/>
</dbReference>
<dbReference type="GO" id="GO:0035655">
    <property type="term" value="P:interleukin-18-mediated signaling pathway"/>
    <property type="evidence" value="ECO:0000314"/>
    <property type="project" value="BHF-UCL"/>
</dbReference>
<dbReference type="GO" id="GO:0035556">
    <property type="term" value="P:intracellular signal transduction"/>
    <property type="evidence" value="ECO:0000314"/>
    <property type="project" value="MGI"/>
</dbReference>
<dbReference type="GO" id="GO:0060716">
    <property type="term" value="P:labyrinthine layer blood vessel development"/>
    <property type="evidence" value="ECO:0007669"/>
    <property type="project" value="Ensembl"/>
</dbReference>
<dbReference type="GO" id="GO:0031663">
    <property type="term" value="P:lipopolysaccharide-mediated signaling pathway"/>
    <property type="evidence" value="ECO:0007669"/>
    <property type="project" value="Ensembl"/>
</dbReference>
<dbReference type="GO" id="GO:0072656">
    <property type="term" value="P:maintenance of protein location in mitochondrion"/>
    <property type="evidence" value="ECO:0000315"/>
    <property type="project" value="ParkinsonsUK-UCL"/>
</dbReference>
<dbReference type="GO" id="GO:0022605">
    <property type="term" value="P:mammalian oogenesis stage"/>
    <property type="evidence" value="ECO:0007669"/>
    <property type="project" value="Ensembl"/>
</dbReference>
<dbReference type="GO" id="GO:0060644">
    <property type="term" value="P:mammary gland epithelial cell differentiation"/>
    <property type="evidence" value="ECO:0000304"/>
    <property type="project" value="UniProtKB"/>
</dbReference>
<dbReference type="GO" id="GO:0001893">
    <property type="term" value="P:maternal placenta development"/>
    <property type="evidence" value="ECO:0007669"/>
    <property type="project" value="Ensembl"/>
</dbReference>
<dbReference type="GO" id="GO:0043066">
    <property type="term" value="P:negative regulation of apoptotic process"/>
    <property type="evidence" value="ECO:0000314"/>
    <property type="project" value="UniProtKB"/>
</dbReference>
<dbReference type="GO" id="GO:0010507">
    <property type="term" value="P:negative regulation of autophagy"/>
    <property type="evidence" value="ECO:0000315"/>
    <property type="project" value="BHF-UCL"/>
</dbReference>
<dbReference type="GO" id="GO:0160049">
    <property type="term" value="P:negative regulation of cGAS/STING signaling pathway"/>
    <property type="evidence" value="ECO:0000314"/>
    <property type="project" value="UniProt"/>
</dbReference>
<dbReference type="GO" id="GO:1902018">
    <property type="term" value="P:negative regulation of cilium assembly"/>
    <property type="evidence" value="ECO:0000314"/>
    <property type="project" value="UniProtKB"/>
</dbReference>
<dbReference type="GO" id="GO:2001240">
    <property type="term" value="P:negative regulation of extrinsic apoptotic signaling pathway in absence of ligand"/>
    <property type="evidence" value="ECO:0000304"/>
    <property type="project" value="BHF-UCL"/>
</dbReference>
<dbReference type="GO" id="GO:0031999">
    <property type="term" value="P:negative regulation of fatty acid beta-oxidation"/>
    <property type="evidence" value="ECO:0000315"/>
    <property type="project" value="BHF-UCL"/>
</dbReference>
<dbReference type="GO" id="GO:1903384">
    <property type="term" value="P:negative regulation of hydrogen peroxide-induced neuron intrinsic apoptotic signaling pathway"/>
    <property type="evidence" value="ECO:0000315"/>
    <property type="project" value="ParkinsonsUK-UCL"/>
</dbReference>
<dbReference type="GO" id="GO:1903038">
    <property type="term" value="P:negative regulation of leukocyte cell-cell adhesion"/>
    <property type="evidence" value="ECO:0000315"/>
    <property type="project" value="BHF-UCL"/>
</dbReference>
<dbReference type="GO" id="GO:0010748">
    <property type="term" value="P:negative regulation of long-chain fatty acid import across plasma membrane"/>
    <property type="evidence" value="ECO:0000315"/>
    <property type="project" value="BHF-UCL"/>
</dbReference>
<dbReference type="GO" id="GO:2000402">
    <property type="term" value="P:negative regulation of lymphocyte migration"/>
    <property type="evidence" value="ECO:0000315"/>
    <property type="project" value="BHF-UCL"/>
</dbReference>
<dbReference type="GO" id="GO:0016242">
    <property type="term" value="P:negative regulation of macroautophagy"/>
    <property type="evidence" value="ECO:0000303"/>
    <property type="project" value="ParkinsonsUK-UCL"/>
</dbReference>
<dbReference type="GO" id="GO:0045746">
    <property type="term" value="P:negative regulation of Notch signaling pathway"/>
    <property type="evidence" value="ECO:0000304"/>
    <property type="project" value="Reactome"/>
</dbReference>
<dbReference type="GO" id="GO:1902176">
    <property type="term" value="P:negative regulation of oxidative stress-induced intrinsic apoptotic signaling pathway"/>
    <property type="evidence" value="ECO:0000303"/>
    <property type="project" value="BHF-UCL"/>
</dbReference>
<dbReference type="GO" id="GO:1903898">
    <property type="term" value="P:negative regulation of PERK-mediated unfolded protein response"/>
    <property type="evidence" value="ECO:0000250"/>
    <property type="project" value="UniProt"/>
</dbReference>
<dbReference type="GO" id="GO:0150033">
    <property type="term" value="P:negative regulation of protein localization to lysosome"/>
    <property type="evidence" value="ECO:0000314"/>
    <property type="project" value="UniProtKB"/>
</dbReference>
<dbReference type="GO" id="GO:1903318">
    <property type="term" value="P:negative regulation of protein maturation"/>
    <property type="evidence" value="ECO:0000250"/>
    <property type="project" value="UniProt"/>
</dbReference>
<dbReference type="GO" id="GO:0031397">
    <property type="term" value="P:negative regulation of protein ubiquitination"/>
    <property type="evidence" value="ECO:0000315"/>
    <property type="project" value="ARUK-UCL"/>
</dbReference>
<dbReference type="GO" id="GO:0045861">
    <property type="term" value="P:negative regulation of proteolysis"/>
    <property type="evidence" value="ECO:0000315"/>
    <property type="project" value="BHF-UCL"/>
</dbReference>
<dbReference type="GO" id="GO:0090201">
    <property type="term" value="P:negative regulation of release of cytochrome c from mitochondria"/>
    <property type="evidence" value="ECO:0000250"/>
    <property type="project" value="UniProtKB"/>
</dbReference>
<dbReference type="GO" id="GO:0006809">
    <property type="term" value="P:nitric oxide biosynthetic process"/>
    <property type="evidence" value="ECO:0000304"/>
    <property type="project" value="ProtInc"/>
</dbReference>
<dbReference type="GO" id="GO:0046209">
    <property type="term" value="P:nitric oxide metabolic process"/>
    <property type="evidence" value="ECO:0000304"/>
    <property type="project" value="Reactome"/>
</dbReference>
<dbReference type="GO" id="GO:0001649">
    <property type="term" value="P:osteoblast differentiation"/>
    <property type="evidence" value="ECO:0000314"/>
    <property type="project" value="UniProt"/>
</dbReference>
<dbReference type="GO" id="GO:0018105">
    <property type="term" value="P:peptidyl-serine phosphorylation"/>
    <property type="evidence" value="ECO:0000314"/>
    <property type="project" value="UniProtKB"/>
</dbReference>
<dbReference type="GO" id="GO:0018107">
    <property type="term" value="P:peptidyl-threonine phosphorylation"/>
    <property type="evidence" value="ECO:0000314"/>
    <property type="project" value="UniProtKB"/>
</dbReference>
<dbReference type="GO" id="GO:0032287">
    <property type="term" value="P:peripheral nervous system myelin maintenance"/>
    <property type="evidence" value="ECO:0007669"/>
    <property type="project" value="Ensembl"/>
</dbReference>
<dbReference type="GO" id="GO:0043491">
    <property type="term" value="P:phosphatidylinositol 3-kinase/protein kinase B signal transduction"/>
    <property type="evidence" value="ECO:0000314"/>
    <property type="project" value="BHF-UCL"/>
</dbReference>
<dbReference type="GO" id="GO:0016310">
    <property type="term" value="P:phosphorylation"/>
    <property type="evidence" value="ECO:0000314"/>
    <property type="project" value="UniProtKB"/>
</dbReference>
<dbReference type="GO" id="GO:0043536">
    <property type="term" value="P:positive regulation of blood vessel endothelial cell migration"/>
    <property type="evidence" value="ECO:0000314"/>
    <property type="project" value="DFLAT"/>
</dbReference>
<dbReference type="GO" id="GO:0030307">
    <property type="term" value="P:positive regulation of cell growth"/>
    <property type="evidence" value="ECO:0000314"/>
    <property type="project" value="UniProtKB"/>
</dbReference>
<dbReference type="GO" id="GO:0030335">
    <property type="term" value="P:positive regulation of cell migration"/>
    <property type="evidence" value="ECO:0000314"/>
    <property type="project" value="UniProt"/>
</dbReference>
<dbReference type="GO" id="GO:0046326">
    <property type="term" value="P:positive regulation of D-glucose import"/>
    <property type="evidence" value="ECO:0000315"/>
    <property type="project" value="BHF-UCL"/>
</dbReference>
<dbReference type="GO" id="GO:0032079">
    <property type="term" value="P:positive regulation of endodeoxyribonuclease activity"/>
    <property type="evidence" value="ECO:0000314"/>
    <property type="project" value="UniProtKB"/>
</dbReference>
<dbReference type="GO" id="GO:0010595">
    <property type="term" value="P:positive regulation of endothelial cell migration"/>
    <property type="evidence" value="ECO:0000315"/>
    <property type="project" value="BHF-UCL"/>
</dbReference>
<dbReference type="GO" id="GO:0001938">
    <property type="term" value="P:positive regulation of endothelial cell proliferation"/>
    <property type="evidence" value="ECO:0000315"/>
    <property type="project" value="UniProtKB"/>
</dbReference>
<dbReference type="GO" id="GO:0045600">
    <property type="term" value="P:positive regulation of fat cell differentiation"/>
    <property type="evidence" value="ECO:0000315"/>
    <property type="project" value="BHF-UCL"/>
</dbReference>
<dbReference type="GO" id="GO:0010763">
    <property type="term" value="P:positive regulation of fibroblast migration"/>
    <property type="evidence" value="ECO:0007669"/>
    <property type="project" value="Ensembl"/>
</dbReference>
<dbReference type="GO" id="GO:1900087">
    <property type="term" value="P:positive regulation of G1/S transition of mitotic cell cycle"/>
    <property type="evidence" value="ECO:0000315"/>
    <property type="project" value="BHF-UCL"/>
</dbReference>
<dbReference type="GO" id="GO:0010628">
    <property type="term" value="P:positive regulation of gene expression"/>
    <property type="evidence" value="ECO:0000315"/>
    <property type="project" value="BHF-UCL"/>
</dbReference>
<dbReference type="GO" id="GO:0010907">
    <property type="term" value="P:positive regulation of glucose metabolic process"/>
    <property type="evidence" value="ECO:0000315"/>
    <property type="project" value="BHF-UCL"/>
</dbReference>
<dbReference type="GO" id="GO:0045725">
    <property type="term" value="P:positive regulation of glycogen biosynthetic process"/>
    <property type="evidence" value="ECO:0000315"/>
    <property type="project" value="BHF-UCL"/>
</dbReference>
<dbReference type="GO" id="GO:0046889">
    <property type="term" value="P:positive regulation of lipid biosynthetic process"/>
    <property type="evidence" value="ECO:0000314"/>
    <property type="project" value="UniProtKB"/>
</dbReference>
<dbReference type="GO" id="GO:0045429">
    <property type="term" value="P:positive regulation of nitric oxide biosynthetic process"/>
    <property type="evidence" value="ECO:0000315"/>
    <property type="project" value="BHF-UCL"/>
</dbReference>
<dbReference type="GO" id="GO:0046622">
    <property type="term" value="P:positive regulation of organ growth"/>
    <property type="evidence" value="ECO:0007669"/>
    <property type="project" value="Ensembl"/>
</dbReference>
<dbReference type="GO" id="GO:0033138">
    <property type="term" value="P:positive regulation of peptidyl-serine phosphorylation"/>
    <property type="evidence" value="ECO:0000314"/>
    <property type="project" value="UniProtKB"/>
</dbReference>
<dbReference type="GO" id="GO:0032436">
    <property type="term" value="P:positive regulation of proteasomal ubiquitin-dependent protein catabolic process"/>
    <property type="evidence" value="ECO:0000314"/>
    <property type="project" value="UniProt"/>
</dbReference>
<dbReference type="GO" id="GO:2000010">
    <property type="term" value="P:positive regulation of protein localization to cell surface"/>
    <property type="evidence" value="ECO:0007669"/>
    <property type="project" value="Ensembl"/>
</dbReference>
<dbReference type="GO" id="GO:1905552">
    <property type="term" value="P:positive regulation of protein localization to endoplasmic reticulum"/>
    <property type="evidence" value="ECO:0000314"/>
    <property type="project" value="UniProt"/>
</dbReference>
<dbReference type="GO" id="GO:1900182">
    <property type="term" value="P:positive regulation of protein localization to nucleus"/>
    <property type="evidence" value="ECO:0000315"/>
    <property type="project" value="UniProtKB"/>
</dbReference>
<dbReference type="GO" id="GO:1903078">
    <property type="term" value="P:positive regulation of protein localization to plasma membrane"/>
    <property type="evidence" value="ECO:0000315"/>
    <property type="project" value="BHF-UCL"/>
</dbReference>
<dbReference type="GO" id="GO:0051247">
    <property type="term" value="P:positive regulation of protein metabolic process"/>
    <property type="evidence" value="ECO:0000250"/>
    <property type="project" value="BHF-UCL"/>
</dbReference>
<dbReference type="GO" id="GO:0048661">
    <property type="term" value="P:positive regulation of smooth muscle cell proliferation"/>
    <property type="evidence" value="ECO:0000314"/>
    <property type="project" value="BHF-UCL"/>
</dbReference>
<dbReference type="GO" id="GO:0010765">
    <property type="term" value="P:positive regulation of sodium ion transport"/>
    <property type="evidence" value="ECO:0007669"/>
    <property type="project" value="Ensembl"/>
</dbReference>
<dbReference type="GO" id="GO:1904263">
    <property type="term" value="P:positive regulation of TORC1 signaling"/>
    <property type="evidence" value="ECO:0000314"/>
    <property type="project" value="UniProtKB"/>
</dbReference>
<dbReference type="GO" id="GO:1904515">
    <property type="term" value="P:positive regulation of TORC2 signaling"/>
    <property type="evidence" value="ECO:0007669"/>
    <property type="project" value="Ensembl"/>
</dbReference>
<dbReference type="GO" id="GO:0045944">
    <property type="term" value="P:positive regulation of transcription by RNA polymerase II"/>
    <property type="evidence" value="ECO:0000314"/>
    <property type="project" value="BHF-UCL"/>
</dbReference>
<dbReference type="GO" id="GO:0043161">
    <property type="term" value="P:proteasome-mediated ubiquitin-dependent protein catabolic process"/>
    <property type="evidence" value="ECO:0007669"/>
    <property type="project" value="Ensembl"/>
</dbReference>
<dbReference type="GO" id="GO:0046777">
    <property type="term" value="P:protein autophosphorylation"/>
    <property type="evidence" value="ECO:0000304"/>
    <property type="project" value="UniProtKB"/>
</dbReference>
<dbReference type="GO" id="GO:0006606">
    <property type="term" value="P:protein import into nucleus"/>
    <property type="evidence" value="ECO:0000315"/>
    <property type="project" value="UniProtKB"/>
</dbReference>
<dbReference type="GO" id="GO:0006468">
    <property type="term" value="P:protein phosphorylation"/>
    <property type="evidence" value="ECO:0000314"/>
    <property type="project" value="UniProtKB"/>
</dbReference>
<dbReference type="GO" id="GO:0016567">
    <property type="term" value="P:protein ubiquitination"/>
    <property type="evidence" value="ECO:0007669"/>
    <property type="project" value="Ensembl"/>
</dbReference>
<dbReference type="GO" id="GO:0042981">
    <property type="term" value="P:regulation of apoptotic process"/>
    <property type="evidence" value="ECO:0000250"/>
    <property type="project" value="UniProtKB"/>
</dbReference>
<dbReference type="GO" id="GO:0030334">
    <property type="term" value="P:regulation of cell migration"/>
    <property type="evidence" value="ECO:0000315"/>
    <property type="project" value="UniProtKB"/>
</dbReference>
<dbReference type="GO" id="GO:0005979">
    <property type="term" value="P:regulation of glycogen biosynthetic process"/>
    <property type="evidence" value="ECO:0000315"/>
    <property type="project" value="BHF-UCL"/>
</dbReference>
<dbReference type="GO" id="GO:0043488">
    <property type="term" value="P:regulation of mRNA stability"/>
    <property type="evidence" value="ECO:0000304"/>
    <property type="project" value="Reactome"/>
</dbReference>
<dbReference type="GO" id="GO:0031641">
    <property type="term" value="P:regulation of myelination"/>
    <property type="evidence" value="ECO:0007669"/>
    <property type="project" value="Ensembl"/>
</dbReference>
<dbReference type="GO" id="GO:0010975">
    <property type="term" value="P:regulation of neuron projection development"/>
    <property type="evidence" value="ECO:0000250"/>
    <property type="project" value="UniProtKB"/>
</dbReference>
<dbReference type="GO" id="GO:0099175">
    <property type="term" value="P:regulation of postsynapse organization"/>
    <property type="evidence" value="ECO:0007669"/>
    <property type="project" value="Ensembl"/>
</dbReference>
<dbReference type="GO" id="GO:1901796">
    <property type="term" value="P:regulation of signal transduction by p53 class mediator"/>
    <property type="evidence" value="ECO:0000304"/>
    <property type="project" value="Reactome"/>
</dbReference>
<dbReference type="GO" id="GO:0006417">
    <property type="term" value="P:regulation of translation"/>
    <property type="evidence" value="ECO:0007669"/>
    <property type="project" value="UniProtKB-KW"/>
</dbReference>
<dbReference type="GO" id="GO:0110002">
    <property type="term" value="P:regulation of tRNA methylation"/>
    <property type="evidence" value="ECO:0000314"/>
    <property type="project" value="UniProt"/>
</dbReference>
<dbReference type="GO" id="GO:2000074">
    <property type="term" value="P:regulation of type B pancreatic cell development"/>
    <property type="evidence" value="ECO:0000304"/>
    <property type="project" value="Reactome"/>
</dbReference>
<dbReference type="GO" id="GO:0034405">
    <property type="term" value="P:response to fluid shear stress"/>
    <property type="evidence" value="ECO:0000315"/>
    <property type="project" value="BHF-UCL"/>
</dbReference>
<dbReference type="GO" id="GO:0032094">
    <property type="term" value="P:response to food"/>
    <property type="evidence" value="ECO:0007669"/>
    <property type="project" value="Ensembl"/>
</dbReference>
<dbReference type="GO" id="GO:0070848">
    <property type="term" value="P:response to growth factor"/>
    <property type="evidence" value="ECO:0000314"/>
    <property type="project" value="UniProtKB"/>
</dbReference>
<dbReference type="GO" id="GO:0060416">
    <property type="term" value="P:response to growth hormone"/>
    <property type="evidence" value="ECO:0000250"/>
    <property type="project" value="AgBase"/>
</dbReference>
<dbReference type="GO" id="GO:0009408">
    <property type="term" value="P:response to heat"/>
    <property type="evidence" value="ECO:0000304"/>
    <property type="project" value="ProtInc"/>
</dbReference>
<dbReference type="GO" id="GO:1990418">
    <property type="term" value="P:response to insulin-like growth factor stimulus"/>
    <property type="evidence" value="ECO:0000250"/>
    <property type="project" value="AgBase"/>
</dbReference>
<dbReference type="GO" id="GO:0006979">
    <property type="term" value="P:response to oxidative stress"/>
    <property type="evidence" value="ECO:0000250"/>
    <property type="project" value="ParkinsonsUK-UCL"/>
</dbReference>
<dbReference type="GO" id="GO:0070141">
    <property type="term" value="P:response to UV-A"/>
    <property type="evidence" value="ECO:0000314"/>
    <property type="project" value="BHF-UCL"/>
</dbReference>
<dbReference type="GO" id="GO:0007165">
    <property type="term" value="P:signal transduction"/>
    <property type="evidence" value="ECO:0000304"/>
    <property type="project" value="UniProtKB"/>
</dbReference>
<dbReference type="GO" id="GO:0003376">
    <property type="term" value="P:sphingosine-1-phosphate receptor signaling pathway"/>
    <property type="evidence" value="ECO:0000315"/>
    <property type="project" value="BHF-UCL"/>
</dbReference>
<dbReference type="GO" id="GO:0051146">
    <property type="term" value="P:striated muscle cell differentiation"/>
    <property type="evidence" value="ECO:0007669"/>
    <property type="project" value="Ensembl"/>
</dbReference>
<dbReference type="GO" id="GO:0031295">
    <property type="term" value="P:T cell costimulation"/>
    <property type="evidence" value="ECO:0000304"/>
    <property type="project" value="Reactome"/>
</dbReference>
<dbReference type="GO" id="GO:0031929">
    <property type="term" value="P:TOR signaling"/>
    <property type="evidence" value="ECO:0000303"/>
    <property type="project" value="ParkinsonsUK-UCL"/>
</dbReference>
<dbReference type="GO" id="GO:0097700">
    <property type="term" value="P:vascular endothelial cell response to laminar fluid shear stress"/>
    <property type="evidence" value="ECO:0000304"/>
    <property type="project" value="Reactome"/>
</dbReference>
<dbReference type="CDD" id="cd01241">
    <property type="entry name" value="PH_PKB"/>
    <property type="match status" value="1"/>
</dbReference>
<dbReference type="CDD" id="cd05594">
    <property type="entry name" value="STKc_PKB_alpha"/>
    <property type="match status" value="1"/>
</dbReference>
<dbReference type="FunFam" id="1.10.510.10:FF:000033">
    <property type="entry name" value="Non-specific serine/threonine protein kinase"/>
    <property type="match status" value="1"/>
</dbReference>
<dbReference type="FunFam" id="2.30.29.30:FF:000027">
    <property type="entry name" value="Non-specific serine/threonine protein kinase"/>
    <property type="match status" value="1"/>
</dbReference>
<dbReference type="FunFam" id="3.30.200.20:FF:000838">
    <property type="entry name" value="Non-specific serine/threonine protein kinase"/>
    <property type="match status" value="1"/>
</dbReference>
<dbReference type="Gene3D" id="3.30.200.20">
    <property type="entry name" value="Phosphorylase Kinase, domain 1"/>
    <property type="match status" value="1"/>
</dbReference>
<dbReference type="Gene3D" id="2.30.29.30">
    <property type="entry name" value="Pleckstrin-homology domain (PH domain)/Phosphotyrosine-binding domain (PTB)"/>
    <property type="match status" value="1"/>
</dbReference>
<dbReference type="Gene3D" id="1.10.510.10">
    <property type="entry name" value="Transferase(Phosphotransferase) domain 1"/>
    <property type="match status" value="1"/>
</dbReference>
<dbReference type="IDEAL" id="IID00412"/>
<dbReference type="InterPro" id="IPR000961">
    <property type="entry name" value="AGC-kinase_C"/>
</dbReference>
<dbReference type="InterPro" id="IPR034676">
    <property type="entry name" value="Akt1"/>
</dbReference>
<dbReference type="InterPro" id="IPR011009">
    <property type="entry name" value="Kinase-like_dom_sf"/>
</dbReference>
<dbReference type="InterPro" id="IPR011993">
    <property type="entry name" value="PH-like_dom_sf"/>
</dbReference>
<dbReference type="InterPro" id="IPR001849">
    <property type="entry name" value="PH_domain"/>
</dbReference>
<dbReference type="InterPro" id="IPR039026">
    <property type="entry name" value="PH_PKB"/>
</dbReference>
<dbReference type="InterPro" id="IPR017892">
    <property type="entry name" value="Pkinase_C"/>
</dbReference>
<dbReference type="InterPro" id="IPR000719">
    <property type="entry name" value="Prot_kinase_dom"/>
</dbReference>
<dbReference type="InterPro" id="IPR017441">
    <property type="entry name" value="Protein_kinase_ATP_BS"/>
</dbReference>
<dbReference type="InterPro" id="IPR008271">
    <property type="entry name" value="Ser/Thr_kinase_AS"/>
</dbReference>
<dbReference type="PANTHER" id="PTHR24351">
    <property type="entry name" value="RIBOSOMAL PROTEIN S6 KINASE"/>
    <property type="match status" value="1"/>
</dbReference>
<dbReference type="Pfam" id="PF00169">
    <property type="entry name" value="PH"/>
    <property type="match status" value="1"/>
</dbReference>
<dbReference type="Pfam" id="PF00069">
    <property type="entry name" value="Pkinase"/>
    <property type="match status" value="1"/>
</dbReference>
<dbReference type="Pfam" id="PF00433">
    <property type="entry name" value="Pkinase_C"/>
    <property type="match status" value="1"/>
</dbReference>
<dbReference type="SMART" id="SM00233">
    <property type="entry name" value="PH"/>
    <property type="match status" value="1"/>
</dbReference>
<dbReference type="SMART" id="SM00133">
    <property type="entry name" value="S_TK_X"/>
    <property type="match status" value="1"/>
</dbReference>
<dbReference type="SMART" id="SM00220">
    <property type="entry name" value="S_TKc"/>
    <property type="match status" value="1"/>
</dbReference>
<dbReference type="SUPFAM" id="SSF50729">
    <property type="entry name" value="PH domain-like"/>
    <property type="match status" value="1"/>
</dbReference>
<dbReference type="SUPFAM" id="SSF56112">
    <property type="entry name" value="Protein kinase-like (PK-like)"/>
    <property type="match status" value="1"/>
</dbReference>
<dbReference type="PROSITE" id="PS51285">
    <property type="entry name" value="AGC_KINASE_CTER"/>
    <property type="match status" value="1"/>
</dbReference>
<dbReference type="PROSITE" id="PS50003">
    <property type="entry name" value="PH_DOMAIN"/>
    <property type="match status" value="1"/>
</dbReference>
<dbReference type="PROSITE" id="PS00107">
    <property type="entry name" value="PROTEIN_KINASE_ATP"/>
    <property type="match status" value="1"/>
</dbReference>
<dbReference type="PROSITE" id="PS50011">
    <property type="entry name" value="PROTEIN_KINASE_DOM"/>
    <property type="match status" value="1"/>
</dbReference>
<dbReference type="PROSITE" id="PS00108">
    <property type="entry name" value="PROTEIN_KINASE_ST"/>
    <property type="match status" value="1"/>
</dbReference>
<keyword id="KW-0002">3D-structure</keyword>
<keyword id="KW-0007">Acetylation</keyword>
<keyword id="KW-0025">Alternative splicing</keyword>
<keyword id="KW-0053">Apoptosis</keyword>
<keyword id="KW-0067">ATP-binding</keyword>
<keyword id="KW-0119">Carbohydrate metabolism</keyword>
<keyword id="KW-1003">Cell membrane</keyword>
<keyword id="KW-0963">Cytoplasm</keyword>
<keyword id="KW-0217">Developmental protein</keyword>
<keyword id="KW-0225">Disease variant</keyword>
<keyword id="KW-1015">Disulfide bond</keyword>
<keyword id="KW-0313">Glucose metabolism</keyword>
<keyword id="KW-0320">Glycogen biosynthesis</keyword>
<keyword id="KW-0321">Glycogen metabolism</keyword>
<keyword id="KW-0325">Glycoprotein</keyword>
<keyword id="KW-1017">Isopeptide bond</keyword>
<keyword id="KW-0418">Kinase</keyword>
<keyword id="KW-0472">Membrane</keyword>
<keyword id="KW-0496">Mitochondrion</keyword>
<keyword id="KW-0524">Neurogenesis</keyword>
<keyword id="KW-0547">Nucleotide-binding</keyword>
<keyword id="KW-0539">Nucleus</keyword>
<keyword id="KW-0597">Phosphoprotein</keyword>
<keyword id="KW-1267">Proteomics identification</keyword>
<keyword id="KW-0656">Proto-oncogene</keyword>
<keyword id="KW-1185">Reference proteome</keyword>
<keyword id="KW-0723">Serine/threonine-protein kinase</keyword>
<keyword id="KW-0762">Sugar transport</keyword>
<keyword id="KW-0808">Transferase</keyword>
<keyword id="KW-0810">Translation regulation</keyword>
<keyword id="KW-0813">Transport</keyword>
<keyword id="KW-0832">Ubl conjugation</keyword>
<sequence length="480" mass="55686">MSDVAIVKEGWLHKRGEYIKTWRPRYFLLKNDGTFIGYKERPQDVDQREAPLNNFSVAQCQLMKTERPRPNTFIIRCLQWTTVIERTFHVETPEEREEWTTAIQTVADGLKKQEEEEMDFRSGSPSDNSGAEEMEVSLAKPKHRVTMNEFEYLKLLGKGTFGKVILVKEKATGRYYAMKILKKEVIVAKDEVAHTLTENRVLQNSRHPFLTALKYSFQTHDRLCFVMEYANGGELFFHLSRERVFSEDRARFYGAEIVSALDYLHSEKNVVYRDLKLENLMLDKDGHIKITDFGLCKEGIKDGATMKTFCGTPEYLAPEVLEDNDYGRAVDWWGLGVVMYEMMCGRLPFYNQDHEKLFELILMEEIRFPRTLGPEAKSLLSGLLKKDPKQRLGGGSEDAKEIMQHRFFAGIVWQHVYEKKLSPPFKPQVTSETDTRYFDEEFTAQMITITPPDQDDSMECVDSERRPHFPQFSYSASGTA</sequence>
<gene>
    <name type="primary">AKT1</name>
    <name type="synonym">PKB</name>
    <name type="synonym">RAC</name>
</gene>